<proteinExistence type="evidence at protein level"/>
<name>MET_HUMAN</name>
<reference key="1">
    <citation type="journal article" date="1987" name="Proc. Natl. Acad. Sci. U.S.A.">
        <title>Sequence of MET protooncogene cDNA has features characteristic of the tyrosine kinase family of growth-factor receptors.</title>
        <authorList>
            <person name="Park M."/>
            <person name="Dean M."/>
            <person name="Kaul K."/>
            <person name="Braun M.J."/>
            <person name="Gonda M.A."/>
            <person name="Vande Woude G."/>
        </authorList>
    </citation>
    <scope>NUCLEOTIDE SEQUENCE [MRNA] (ISOFORM 2)</scope>
</reference>
<reference key="2">
    <citation type="submission" date="1990-11" db="EMBL/GenBank/DDBJ databases">
        <authorList>
            <person name="Giordano S."/>
        </authorList>
    </citation>
    <scope>NUCLEOTIDE SEQUENCE [MRNA] (ISOFORM 1)</scope>
</reference>
<reference key="3">
    <citation type="journal article" date="2008" name="Arthritis Res. Ther.">
        <title>Novel splice variants derived from the receptor tyrosine kinase superfamily are potential therapeutics for rheumatoid arthritis.</title>
        <authorList>
            <person name="Jin P."/>
            <person name="Zhang J."/>
            <person name="Sumariwalla P.F."/>
            <person name="Ni I."/>
            <person name="Jorgensen B."/>
            <person name="Crawford D."/>
            <person name="Phillips S."/>
            <person name="Feldmann M."/>
            <person name="Shepard H.M."/>
            <person name="Paleolog E.M."/>
        </authorList>
    </citation>
    <scope>NUCLEOTIDE SEQUENCE [MRNA] (ISOFORM 3)</scope>
    <scope>ALTERNATIVE SPLICING</scope>
</reference>
<reference key="4">
    <citation type="journal article" date="2003" name="Nature">
        <title>The DNA sequence of human chromosome 7.</title>
        <authorList>
            <person name="Hillier L.W."/>
            <person name="Fulton R.S."/>
            <person name="Fulton L.A."/>
            <person name="Graves T.A."/>
            <person name="Pepin K.H."/>
            <person name="Wagner-McPherson C."/>
            <person name="Layman D."/>
            <person name="Maas J."/>
            <person name="Jaeger S."/>
            <person name="Walker R."/>
            <person name="Wylie K."/>
            <person name="Sekhon M."/>
            <person name="Becker M.C."/>
            <person name="O'Laughlin M.D."/>
            <person name="Schaller M.E."/>
            <person name="Fewell G.A."/>
            <person name="Delehaunty K.D."/>
            <person name="Miner T.L."/>
            <person name="Nash W.E."/>
            <person name="Cordes M."/>
            <person name="Du H."/>
            <person name="Sun H."/>
            <person name="Edwards J."/>
            <person name="Bradshaw-Cordum H."/>
            <person name="Ali J."/>
            <person name="Andrews S."/>
            <person name="Isak A."/>
            <person name="Vanbrunt A."/>
            <person name="Nguyen C."/>
            <person name="Du F."/>
            <person name="Lamar B."/>
            <person name="Courtney L."/>
            <person name="Kalicki J."/>
            <person name="Ozersky P."/>
            <person name="Bielicki L."/>
            <person name="Scott K."/>
            <person name="Holmes A."/>
            <person name="Harkins R."/>
            <person name="Harris A."/>
            <person name="Strong C.M."/>
            <person name="Hou S."/>
            <person name="Tomlinson C."/>
            <person name="Dauphin-Kohlberg S."/>
            <person name="Kozlowicz-Reilly A."/>
            <person name="Leonard S."/>
            <person name="Rohlfing T."/>
            <person name="Rock S.M."/>
            <person name="Tin-Wollam A.-M."/>
            <person name="Abbott A."/>
            <person name="Minx P."/>
            <person name="Maupin R."/>
            <person name="Strowmatt C."/>
            <person name="Latreille P."/>
            <person name="Miller N."/>
            <person name="Johnson D."/>
            <person name="Murray J."/>
            <person name="Woessner J.P."/>
            <person name="Wendl M.C."/>
            <person name="Yang S.-P."/>
            <person name="Schultz B.R."/>
            <person name="Wallis J.W."/>
            <person name="Spieth J."/>
            <person name="Bieri T.A."/>
            <person name="Nelson J.O."/>
            <person name="Berkowicz N."/>
            <person name="Wohldmann P.E."/>
            <person name="Cook L.L."/>
            <person name="Hickenbotham M.T."/>
            <person name="Eldred J."/>
            <person name="Williams D."/>
            <person name="Bedell J.A."/>
            <person name="Mardis E.R."/>
            <person name="Clifton S.W."/>
            <person name="Chissoe S.L."/>
            <person name="Marra M.A."/>
            <person name="Raymond C."/>
            <person name="Haugen E."/>
            <person name="Gillett W."/>
            <person name="Zhou Y."/>
            <person name="James R."/>
            <person name="Phelps K."/>
            <person name="Iadanoto S."/>
            <person name="Bubb K."/>
            <person name="Simms E."/>
            <person name="Levy R."/>
            <person name="Clendenning J."/>
            <person name="Kaul R."/>
            <person name="Kent W.J."/>
            <person name="Furey T.S."/>
            <person name="Baertsch R.A."/>
            <person name="Brent M.R."/>
            <person name="Keibler E."/>
            <person name="Flicek P."/>
            <person name="Bork P."/>
            <person name="Suyama M."/>
            <person name="Bailey J.A."/>
            <person name="Portnoy M.E."/>
            <person name="Torrents D."/>
            <person name="Chinwalla A.T."/>
            <person name="Gish W.R."/>
            <person name="Eddy S.R."/>
            <person name="McPherson J.D."/>
            <person name="Olson M.V."/>
            <person name="Eichler E.E."/>
            <person name="Green E.D."/>
            <person name="Waterston R.H."/>
            <person name="Wilson R.K."/>
        </authorList>
    </citation>
    <scope>NUCLEOTIDE SEQUENCE [LARGE SCALE GENOMIC DNA]</scope>
</reference>
<reference key="5">
    <citation type="journal article" date="2003" name="Science">
        <title>Human chromosome 7: DNA sequence and biology.</title>
        <authorList>
            <person name="Scherer S.W."/>
            <person name="Cheung J."/>
            <person name="MacDonald J.R."/>
            <person name="Osborne L.R."/>
            <person name="Nakabayashi K."/>
            <person name="Herbrick J.-A."/>
            <person name="Carson A.R."/>
            <person name="Parker-Katiraee L."/>
            <person name="Skaug J."/>
            <person name="Khaja R."/>
            <person name="Zhang J."/>
            <person name="Hudek A.K."/>
            <person name="Li M."/>
            <person name="Haddad M."/>
            <person name="Duggan G.E."/>
            <person name="Fernandez B.A."/>
            <person name="Kanematsu E."/>
            <person name="Gentles S."/>
            <person name="Christopoulos C.C."/>
            <person name="Choufani S."/>
            <person name="Kwasnicka D."/>
            <person name="Zheng X.H."/>
            <person name="Lai Z."/>
            <person name="Nusskern D.R."/>
            <person name="Zhang Q."/>
            <person name="Gu Z."/>
            <person name="Lu F."/>
            <person name="Zeesman S."/>
            <person name="Nowaczyk M.J."/>
            <person name="Teshima I."/>
            <person name="Chitayat D."/>
            <person name="Shuman C."/>
            <person name="Weksberg R."/>
            <person name="Zackai E.H."/>
            <person name="Grebe T.A."/>
            <person name="Cox S.R."/>
            <person name="Kirkpatrick S.J."/>
            <person name="Rahman N."/>
            <person name="Friedman J.M."/>
            <person name="Heng H.H.Q."/>
            <person name="Pelicci P.G."/>
            <person name="Lo-Coco F."/>
            <person name="Belloni E."/>
            <person name="Shaffer L.G."/>
            <person name="Pober B."/>
            <person name="Morton C.C."/>
            <person name="Gusella J.F."/>
            <person name="Bruns G.A.P."/>
            <person name="Korf B.R."/>
            <person name="Quade B.J."/>
            <person name="Ligon A.H."/>
            <person name="Ferguson H."/>
            <person name="Higgins A.W."/>
            <person name="Leach N.T."/>
            <person name="Herrick S.R."/>
            <person name="Lemyre E."/>
            <person name="Farra C.G."/>
            <person name="Kim H.-G."/>
            <person name="Summers A.M."/>
            <person name="Gripp K.W."/>
            <person name="Roberts W."/>
            <person name="Szatmari P."/>
            <person name="Winsor E.J.T."/>
            <person name="Grzeschik K.-H."/>
            <person name="Teebi A."/>
            <person name="Minassian B.A."/>
            <person name="Kere J."/>
            <person name="Armengol L."/>
            <person name="Pujana M.A."/>
            <person name="Estivill X."/>
            <person name="Wilson M.D."/>
            <person name="Koop B.F."/>
            <person name="Tosi S."/>
            <person name="Moore G.E."/>
            <person name="Boright A.P."/>
            <person name="Zlotorynski E."/>
            <person name="Kerem B."/>
            <person name="Kroisel P.M."/>
            <person name="Petek E."/>
            <person name="Oscier D.G."/>
            <person name="Mould S.J."/>
            <person name="Doehner H."/>
            <person name="Doehner K."/>
            <person name="Rommens J.M."/>
            <person name="Vincent J.B."/>
            <person name="Venter J.C."/>
            <person name="Li P.W."/>
            <person name="Mural R.J."/>
            <person name="Adams M.D."/>
            <person name="Tsui L.-C."/>
        </authorList>
    </citation>
    <scope>NUCLEOTIDE SEQUENCE [LARGE SCALE GENOMIC DNA]</scope>
</reference>
<reference key="6">
    <citation type="submission" date="2005-07" db="EMBL/GenBank/DDBJ databases">
        <authorList>
            <person name="Mural R.J."/>
            <person name="Istrail S."/>
            <person name="Sutton G."/>
            <person name="Florea L."/>
            <person name="Halpern A.L."/>
            <person name="Mobarry C.M."/>
            <person name="Lippert R."/>
            <person name="Walenz B."/>
            <person name="Shatkay H."/>
            <person name="Dew I."/>
            <person name="Miller J.R."/>
            <person name="Flanigan M.J."/>
            <person name="Edwards N.J."/>
            <person name="Bolanos R."/>
            <person name="Fasulo D."/>
            <person name="Halldorsson B.V."/>
            <person name="Hannenhalli S."/>
            <person name="Turner R."/>
            <person name="Yooseph S."/>
            <person name="Lu F."/>
            <person name="Nusskern D.R."/>
            <person name="Shue B.C."/>
            <person name="Zheng X.H."/>
            <person name="Zhong F."/>
            <person name="Delcher A.L."/>
            <person name="Huson D.H."/>
            <person name="Kravitz S.A."/>
            <person name="Mouchard L."/>
            <person name="Reinert K."/>
            <person name="Remington K.A."/>
            <person name="Clark A.G."/>
            <person name="Waterman M.S."/>
            <person name="Eichler E.E."/>
            <person name="Adams M.D."/>
            <person name="Hunkapiller M.W."/>
            <person name="Myers E.W."/>
            <person name="Venter J.C."/>
        </authorList>
    </citation>
    <scope>NUCLEOTIDE SEQUENCE [LARGE SCALE GENOMIC DNA]</scope>
</reference>
<reference key="7">
    <citation type="journal article" date="2004" name="Genome Res.">
        <title>The status, quality, and expansion of the NIH full-length cDNA project: the Mammalian Gene Collection (MGC).</title>
        <authorList>
            <consortium name="The MGC Project Team"/>
        </authorList>
    </citation>
    <scope>NUCLEOTIDE SEQUENCE [LARGE SCALE MRNA]</scope>
    <source>
        <tissue>Cerebellum</tissue>
    </source>
</reference>
<reference key="8">
    <citation type="journal article" date="1987" name="Oncogene">
        <title>Primary structure of the met protein tyrosine kinase domain.</title>
        <authorList>
            <person name="Chan A.M.-L."/>
            <person name="King H.W.S."/>
            <person name="Tempest P.R."/>
            <person name="Deakin E.A."/>
            <person name="Cooper C.S."/>
            <person name="Brookes P."/>
        </authorList>
    </citation>
    <scope>NUCLEOTIDE SEQUENCE [MRNA] OF 1010-1390</scope>
</reference>
<reference key="9">
    <citation type="journal article" date="1993" name="Oncogene">
        <title>A survey of protein tyrosine kinase mRNAs expressed in normal human melanocytes.</title>
        <authorList>
            <person name="Lee S.-T."/>
            <person name="Strunk K.M."/>
            <person name="Spritz R.A."/>
        </authorList>
    </citation>
    <scope>NUCLEOTIDE SEQUENCE [MRNA] OF 1206-1264</scope>
</reference>
<reference key="10">
    <citation type="journal article" date="1985" name="Nature">
        <title>The human met oncogene is related to the tyrosine kinase oncogenes.</title>
        <authorList>
            <person name="Dean M."/>
            <person name="Park M."/>
            <person name="le Beau M.M."/>
            <person name="Robins T.S."/>
            <person name="Diaz M.O."/>
            <person name="Rowley J.D."/>
            <person name="Blair D.G."/>
            <person name="Vande Woude G.F."/>
        </authorList>
    </citation>
    <scope>NUCLEOTIDE SEQUENCE [MRNA] OF 1267-1390</scope>
</reference>
<reference key="11">
    <citation type="journal article" date="1991" name="Int. J. Cancer">
        <title>The receptor encoded by the human c-MET oncogene is expressed in hepatocytes, epithelial cells and solid tumors.</title>
        <authorList>
            <person name="Prat M."/>
            <person name="Narsimhan R.P."/>
            <person name="Crepaldi T."/>
            <person name="Nicotra M.R."/>
            <person name="Natali P.G."/>
            <person name="Comoglio P.M."/>
        </authorList>
    </citation>
    <scope>TISSUE SPECIFICITY</scope>
</reference>
<reference key="12">
    <citation type="journal article" date="1991" name="J. Biol. Chem.">
        <title>The tyrosine-phosphorylated hepatocyte growth factor/scatter factor receptor associates with phosphatidylinositol 3-kinase.</title>
        <authorList>
            <person name="Graziani A."/>
            <person name="Gramaglia D."/>
            <person name="Cantley L.C."/>
            <person name="Comoglio P.M."/>
        </authorList>
    </citation>
    <scope>INTERACTION WITH PIK3R1</scope>
</reference>
<reference key="13">
    <citation type="journal article" date="1991" name="Oncogene">
        <title>Expression of the Met/HGF receptor in normal and neoplastic human tissues.</title>
        <authorList>
            <person name="Di Renzo M.F."/>
            <person name="Narsimhan R.P."/>
            <person name="Olivero M."/>
            <person name="Bretti S."/>
            <person name="Giordano S."/>
            <person name="Medico E."/>
            <person name="Gaglia P."/>
            <person name="Zara P."/>
            <person name="Comoglio P.M."/>
        </authorList>
    </citation>
    <scope>TISSUE SPECIFICITY</scope>
</reference>
<reference key="14">
    <citation type="journal article" date="1991" name="Science">
        <title>Identification of the hepatocyte growth factor receptor as the c-met proto-oncogene product.</title>
        <authorList>
            <person name="Bottaro D.P."/>
            <person name="Rubin J.S."/>
            <person name="Faletto D.L."/>
            <person name="Chan A.M.-L."/>
            <person name="Kmiecik T.E."/>
            <person name="Vande Woude G.F."/>
            <person name="Aaronson S.A."/>
        </authorList>
    </citation>
    <scope>FUNCTION</scope>
</reference>
<reference key="15">
    <citation type="journal article" date="1991" name="J. Biol. Chem.">
        <title>Identification of the major autophosphorylation site of the Met/hepatocyte growth factor receptor tyrosine kinase.</title>
        <authorList>
            <person name="Ferracini R."/>
            <person name="Longati P."/>
            <person name="Naldini L."/>
            <person name="Vigna E."/>
            <person name="Comoglio P.M."/>
        </authorList>
    </citation>
    <scope>PHOSPHORYLATION AT TYR-1235</scope>
    <scope>ATP-BINDING SITE LYS-1110</scope>
</reference>
<reference key="16">
    <citation type="journal article" date="1994" name="Cell">
        <title>A multifunctional docking site mediates signaling and transformation by the hepatocyte growth factor/scatter factor receptor family.</title>
        <authorList>
            <person name="Ponzetto C."/>
            <person name="Bardelli A."/>
            <person name="Zhen Z."/>
            <person name="Maina F."/>
            <person name="dalla Zonca P."/>
            <person name="Giordano S."/>
            <person name="Graziani A."/>
            <person name="Panayotou G."/>
            <person name="Comoglio P.M."/>
        </authorList>
    </citation>
    <scope>PHOSPHORYLATION AT TYR-1349 AND TYR-1356</scope>
    <scope>INTERACTION WITH SRC; PLCG1 AND GRB2</scope>
</reference>
<reference key="17">
    <citation type="journal article" date="1994" name="J. Clin. Invest.">
        <title>Hepatocyte growth factor/scatter factor effects on epithelia. Regulation of intercellular junctions in transformed and nontransformed cell lines, basolateral polarization of c-met receptor in transformed and natural intestinal epithelia, and induction of rapid wound repair in a transformed model epithelium.</title>
        <authorList>
            <person name="Nusrat A."/>
            <person name="Parkos C.A."/>
            <person name="Bacarra A.E."/>
            <person name="Godowski P.J."/>
            <person name="Delp-Archer C."/>
            <person name="Rosen E.M."/>
            <person name="Madara J.L."/>
        </authorList>
    </citation>
    <scope>FUNCTION IN WOUND HEALING</scope>
</reference>
<reference key="18">
    <citation type="journal article" date="1998" name="Nature">
        <title>Induction of epithelial tubules by growth factor HGF depends on the STAT pathway.</title>
        <authorList>
            <person name="Boccaccio C."/>
            <person name="Ando M."/>
            <person name="Tamagnone L."/>
            <person name="Bardelli A."/>
            <person name="Michieli P."/>
            <person name="Battistini C."/>
            <person name="Comoglio P.M."/>
        </authorList>
    </citation>
    <scope>INTERACTION WITH STAT3</scope>
</reference>
<reference key="19">
    <citation type="journal article" date="1999" name="Mol. Cell. Biol.">
        <title>Grb10, a positive, stimulatory signaling adapter in platelet-derived growth factor BB-, insulin-like growth factor I-, and insulin-mediated mitogenesis.</title>
        <authorList>
            <person name="Wang J."/>
            <person name="Dai H."/>
            <person name="Yousaf N."/>
            <person name="Moussaif M."/>
            <person name="Deng Y."/>
            <person name="Boufelliga A."/>
            <person name="Swamy O.R."/>
            <person name="Leone M.E."/>
            <person name="Riedel H."/>
        </authorList>
    </citation>
    <scope>INTERACTION WITH GRB10</scope>
</reference>
<reference key="20">
    <citation type="journal article" date="2000" name="Cell">
        <title>InIB-dependent internalization of Listeria is mediated by the Met receptor tyrosine kinase.</title>
        <authorList>
            <person name="Shen Y."/>
            <person name="Naujokas M."/>
            <person name="Park M."/>
            <person name="Ireton K."/>
        </authorList>
    </citation>
    <scope>FUNCTION (MICROBIAL INFECTION)</scope>
    <scope>INTERACTION WITH L.MONOCYTOGENES INLB (MICROBIAL INFECTION)</scope>
    <scope>PHOSPHORYLATION (MICROBIAL INFECTION)</scope>
</reference>
<reference key="21">
    <citation type="journal article" date="2002" name="J. Biol. Chem.">
        <title>Activation of Ras/Erk pathway by a novel MET-interacting protein RanBPM.</title>
        <authorList>
            <person name="Wang D."/>
            <person name="Li Z."/>
            <person name="Messing E.M."/>
            <person name="Wu G."/>
        </authorList>
    </citation>
    <scope>INTERACTION WITH RANBP9</scope>
</reference>
<reference key="22">
    <citation type="journal article" date="2002" name="J. Immunol.">
        <title>c-Cbl is involved in Met signaling in B cells and mediates hepatocyte growth factor-induced receptor ubiquitination.</title>
        <authorList>
            <person name="Taher T.E."/>
            <person name="Tjin E.P."/>
            <person name="Beuling E.A."/>
            <person name="Borst J."/>
            <person name="Spaargaren M."/>
            <person name="Pals S.T."/>
        </authorList>
    </citation>
    <scope>UBIQUITINATION</scope>
    <scope>MUTAGENESIS OF TYR-1234; TYR-1235; TYR-1313; TYR-1349; TYR-1356 AND TYR-1365</scope>
    <scope>CHARACTERIZATION OF VARIANT SER-1003</scope>
</reference>
<reference key="23">
    <citation type="journal article" date="2002" name="Nat. Cell Biol.">
        <title>The semaphorin 4D receptor controls invasive growth by coupling with Met.</title>
        <authorList>
            <person name="Giordano S."/>
            <person name="Corso S."/>
            <person name="Conrotto P."/>
            <person name="Artigiani S."/>
            <person name="Gilestro G."/>
            <person name="Barberis D."/>
            <person name="Tamagnone L."/>
            <person name="Comoglio P.M."/>
        </authorList>
    </citation>
    <scope>INTERACTION WITH PLXNB1</scope>
</reference>
<reference key="24">
    <citation type="journal article" date="2003" name="J. Biol. Chem.">
        <title>Hepatocyte growth factor receptor tyrosine kinase met is a substrate of the receptor protein-tyrosine phosphatase DEP-1.</title>
        <authorList>
            <person name="Palka H.L."/>
            <person name="Park M."/>
            <person name="Tonks N.K."/>
        </authorList>
    </citation>
    <scope>PHOSPHORYLATION AT TYR-1230; TYR-1234; TYR-1235; TYR-1349 AND TYR-1365</scope>
    <scope>DEPHOSPHORYLATION AT TYR-1349 AND TYR-1365 BY PTPRJ</scope>
</reference>
<reference key="25">
    <citation type="journal article" date="2004" name="Biochem. Biophys. Res. Commun.">
        <title>A novel MET-interacting protein shares high sequence similarity with RanBPM, but fails to stimulate MET-induced Ras/Erk signaling.</title>
        <authorList>
            <person name="Wang D."/>
            <person name="Li Z."/>
            <person name="Schoen S.R."/>
            <person name="Messing E.M."/>
            <person name="Wu G."/>
        </authorList>
    </citation>
    <scope>INTERACTION WITH RANBP9 AND RANBP10</scope>
</reference>
<reference key="26">
    <citation type="journal article" date="2004" name="Mol. Cell. Biol.">
        <title>MUC20 suppresses the hepatocyte growth factor-induced Grb2-Ras pathway by binding to a multifunctional docking site of met.</title>
        <authorList>
            <person name="Higuchi T."/>
            <person name="Orita T."/>
            <person name="Katsuya K."/>
            <person name="Yamasaki Y."/>
            <person name="Akiyama K."/>
            <person name="Li H."/>
            <person name="Yamamoto T."/>
            <person name="Saito Y."/>
            <person name="Nakamura M."/>
        </authorList>
    </citation>
    <scope>FUNCTION</scope>
    <scope>INTERACTION WITH MUC20</scope>
</reference>
<reference key="27">
    <citation type="journal article" date="2005" name="Oncogene">
        <title>The SH2-domain-containing inositol 5-phosphatase (SHIP)-2 binds to c-Met directly via tyrosine residue 1356 and involves hepatocyte growth factor (HGF)-induced lamellipodium formation, cell scattering and cell spreading.</title>
        <authorList>
            <person name="Koch A."/>
            <person name="Mancini A."/>
            <person name="El Bounkari O."/>
            <person name="Tamura T."/>
        </authorList>
    </citation>
    <scope>PHOSPHORYLATION AT TYR-1356</scope>
    <scope>INTERACTION WITH INPPL1</scope>
</reference>
<reference key="28">
    <citation type="journal article" date="2006" name="Nat. Rev. Cancer">
        <title>Invasive growth: a MET-driven genetic programme for cancer and stem cells.</title>
        <authorList>
            <person name="Boccaccio C."/>
            <person name="Comoglio P.M."/>
        </authorList>
    </citation>
    <scope>REVIEW ON FUNCTION IN ANGIOGENESIS</scope>
</reference>
<reference key="29">
    <citation type="journal article" date="2008" name="J. Biol. Chem.">
        <title>Regulation of the Met receptor-tyrosine kinase by the protein-tyrosine phosphatase 1B and T-cell phosphatase.</title>
        <authorList>
            <person name="Sangwan V."/>
            <person name="Paliouras G.N."/>
            <person name="Abella J.V."/>
            <person name="Dube N."/>
            <person name="Monast A."/>
            <person name="Tremblay M.L."/>
            <person name="Park M."/>
        </authorList>
    </citation>
    <scope>PHOSPHORYLATION</scope>
    <scope>DEPHOSPHORYLATION BY PTPN1 AND PTPN2</scope>
    <scope>INTERACTION WITH PTPN1 AND PTPN2</scope>
    <scope>MUTAGENESIS OF TYR-1234 AND TYR-1235</scope>
</reference>
<reference key="30">
    <citation type="journal article" date="2008" name="Mol. Cell">
        <title>Kinase-selective enrichment enables quantitative phosphoproteomics of the kinome across the cell cycle.</title>
        <authorList>
            <person name="Daub H."/>
            <person name="Olsen J.V."/>
            <person name="Bairlein M."/>
            <person name="Gnad F."/>
            <person name="Oppermann F.S."/>
            <person name="Korner R."/>
            <person name="Greff Z."/>
            <person name="Keri G."/>
            <person name="Stemmann O."/>
            <person name="Mann M."/>
        </authorList>
    </citation>
    <scope>PHOSPHORYLATION [LARGE SCALE ANALYSIS] AT THR-977 AND TYR-1003</scope>
    <scope>IDENTIFICATION BY MASS SPECTROMETRY [LARGE SCALE ANALYSIS]</scope>
    <source>
        <tissue>Cervix carcinoma</tissue>
    </source>
</reference>
<reference key="31">
    <citation type="journal article" date="2008" name="Proc. Natl. Acad. Sci. U.S.A.">
        <title>A quantitative atlas of mitotic phosphorylation.</title>
        <authorList>
            <person name="Dephoure N."/>
            <person name="Zhou C."/>
            <person name="Villen J."/>
            <person name="Beausoleil S.A."/>
            <person name="Bakalarski C.E."/>
            <person name="Elledge S.J."/>
            <person name="Gygi S.P."/>
        </authorList>
    </citation>
    <scope>PHOSPHORYLATION [LARGE SCALE ANALYSIS] AT SER-990; SER-997 AND SER-1000</scope>
    <scope>IDENTIFICATION BY MASS SPECTROMETRY [LARGE SCALE ANALYSIS]</scope>
    <source>
        <tissue>Cervix carcinoma</tissue>
    </source>
</reference>
<reference key="32">
    <citation type="journal article" date="2009" name="J. Proteome Res.">
        <title>Identification of N-glycosylation sites on secreted proteins of human hepatocellular carcinoma cells with a complementary proteomics approach.</title>
        <authorList>
            <person name="Cao J."/>
            <person name="Shen C."/>
            <person name="Wang H."/>
            <person name="Shen H."/>
            <person name="Chen Y."/>
            <person name="Nie A."/>
            <person name="Yan G."/>
            <person name="Lu H."/>
            <person name="Liu Y."/>
            <person name="Yang P."/>
        </authorList>
    </citation>
    <scope>GLYCOSYLATION [LARGE SCALE ANALYSIS] AT ASN-106</scope>
    <source>
        <tissue>Hepatoma</tissue>
    </source>
</reference>
<reference key="33">
    <citation type="journal article" date="2009" name="Mol. Cell. Proteomics">
        <title>Large-scale proteomics analysis of the human kinome.</title>
        <authorList>
            <person name="Oppermann F.S."/>
            <person name="Gnad F."/>
            <person name="Olsen J.V."/>
            <person name="Hornberger R."/>
            <person name="Greff Z."/>
            <person name="Keri G."/>
            <person name="Mann M."/>
            <person name="Daub H."/>
        </authorList>
    </citation>
    <scope>PHOSPHORYLATION [LARGE SCALE ANALYSIS] AT TYR-1003 AND THR-1289</scope>
    <scope>IDENTIFICATION BY MASS SPECTROMETRY [LARGE SCALE ANALYSIS]</scope>
</reference>
<reference key="34">
    <citation type="journal article" date="2010" name="Biochim. Biophys. Acta">
        <title>The HGF/MET pathway as target for the treatment of multiple myeloma and B-cell lymphomas.</title>
        <authorList>
            <person name="Mahtouk K."/>
            <person name="Tjin E.P."/>
            <person name="Spaargaren M."/>
            <person name="Pals S.T."/>
        </authorList>
    </citation>
    <scope>REVIEW ON FUNCTION</scope>
</reference>
<reference key="35">
    <citation type="journal article" date="2010" name="J. Mol. Biol.">
        <title>Ligand-mediated dimerization of the Met receptor tyrosine kinase by the bacterial invasion protein InlB.</title>
        <authorList>
            <person name="Ferraris D.M."/>
            <person name="Gherardi E."/>
            <person name="Di Y."/>
            <person name="Heinz D.W."/>
            <person name="Niemann H.H."/>
        </authorList>
    </citation>
    <scope>FUNCTION (MICROBIAL INFECTION)</scope>
    <scope>SUBUNIT (MICROBIAL INFECTION)</scope>
</reference>
<reference key="36">
    <citation type="journal article" date="2011" name="BMC Syst. Biol.">
        <title>Initial characterization of the human central proteome.</title>
        <authorList>
            <person name="Burkard T.R."/>
            <person name="Planyavsky M."/>
            <person name="Kaupe I."/>
            <person name="Breitwieser F.P."/>
            <person name="Buerckstuemmer T."/>
            <person name="Bennett K.L."/>
            <person name="Superti-Furga G."/>
            <person name="Colinge J."/>
        </authorList>
    </citation>
    <scope>IDENTIFICATION BY MASS SPECTROMETRY [LARGE SCALE ANALYSIS]</scope>
</reference>
<reference key="37">
    <citation type="journal article" date="2011" name="J. Biol. Chem.">
        <title>Distinct involvement of the Gab1 and Grb2 adaptor proteins in signal transduction by the related receptor tyrosine kinases RON and MET.</title>
        <authorList>
            <person name="Chaudhuri A."/>
            <person name="Xie M.H."/>
            <person name="Yang B."/>
            <person name="Mahapatra K."/>
            <person name="Liu J."/>
            <person name="Marsters S."/>
            <person name="Bodepudi S."/>
            <person name="Ashkenazi A."/>
        </authorList>
    </citation>
    <scope>INTERACTION WITH GAB1</scope>
</reference>
<reference key="38">
    <citation type="journal article" date="2013" name="J. Proteome Res.">
        <title>Toward a comprehensive characterization of a human cancer cell phosphoproteome.</title>
        <authorList>
            <person name="Zhou H."/>
            <person name="Di Palma S."/>
            <person name="Preisinger C."/>
            <person name="Peng M."/>
            <person name="Polat A.N."/>
            <person name="Heck A.J."/>
            <person name="Mohammed S."/>
        </authorList>
    </citation>
    <scope>PHOSPHORYLATION [LARGE SCALE ANALYSIS] AT SER-990</scope>
    <scope>IDENTIFICATION BY MASS SPECTROMETRY [LARGE SCALE ANALYSIS]</scope>
    <source>
        <tissue>Cervix carcinoma</tissue>
    </source>
</reference>
<reference key="39">
    <citation type="journal article" date="2014" name="Dev. Cell">
        <title>Tensin-4-dependent MET stabilization is essential for survival and proliferation in carcinoma cells.</title>
        <authorList>
            <person name="Muharram G."/>
            <person name="Sahgal P."/>
            <person name="Korpela T."/>
            <person name="De Franceschi N."/>
            <person name="Kaukonen R."/>
            <person name="Clark K."/>
            <person name="Tulasne D."/>
            <person name="Carpen O."/>
            <person name="Ivaska J."/>
        </authorList>
    </citation>
    <scope>INTERACTION WITH TNS3 AND TNS4</scope>
</reference>
<reference key="40">
    <citation type="journal article" date="2014" name="J. Proteomics">
        <title>An enzyme assisted RP-RPLC approach for in-depth analysis of human liver phosphoproteome.</title>
        <authorList>
            <person name="Bian Y."/>
            <person name="Song C."/>
            <person name="Cheng K."/>
            <person name="Dong M."/>
            <person name="Wang F."/>
            <person name="Huang J."/>
            <person name="Sun D."/>
            <person name="Wang L."/>
            <person name="Ye M."/>
            <person name="Zou H."/>
        </authorList>
    </citation>
    <scope>PHOSPHORYLATION [LARGE SCALE ANALYSIS] AT SER-966</scope>
    <scope>IDENTIFICATION BY MASS SPECTROMETRY [LARGE SCALE ANALYSIS]</scope>
    <source>
        <tissue>Liver</tissue>
    </source>
</reference>
<reference key="41">
    <citation type="journal article" date="2015" name="Am. J. Hum. Genet.">
        <title>Mutations preventing regulated exon skipping in MET cause osteofibrous dysplasia.</title>
        <authorList>
            <person name="Gray M.J."/>
            <person name="Kannu P."/>
            <person name="Sharma S."/>
            <person name="Neyt C."/>
            <person name="Zhang D."/>
            <person name="Paria N."/>
            <person name="Daniel P.B."/>
            <person name="Whetstone H."/>
            <person name="Sprenger H.G."/>
            <person name="Hammerschmidt P."/>
            <person name="Weng A."/>
            <person name="Dupuis L."/>
            <person name="Jobling R."/>
            <person name="Mendoza-Londono R."/>
            <person name="Dray M."/>
            <person name="Su P."/>
            <person name="Wilson M.J."/>
            <person name="Kapur R.P."/>
            <person name="McCarthy E.F."/>
            <person name="Alman B.A."/>
            <person name="Howard A."/>
            <person name="Somers G.R."/>
            <person name="Marshall C.R."/>
            <person name="Manners S."/>
            <person name="Flanagan A.M."/>
            <person name="Rathjen K.E."/>
            <person name="Karol L.A."/>
            <person name="Crawford H."/>
            <person name="Markie D.M."/>
            <person name="Rios J.J."/>
            <person name="Wise C.A."/>
            <person name="Robertson S.P."/>
        </authorList>
    </citation>
    <scope>INVOLVEMENT IN OSFD</scope>
    <scope>VARIANT OSFD 964-LEU--ASP-1010 DEL</scope>
    <scope>TISSUE SPECIFICITY</scope>
    <scope>UBIQUITINATION</scope>
</reference>
<reference key="42">
    <citation type="journal article" date="2015" name="J. Med. Genet.">
        <title>A mutation of MET, encoding hepatocyte growth factor receptor, is associated with human DFNB97 hearing loss.</title>
        <authorList>
            <person name="Mujtaba G."/>
            <person name="Schultz J.M."/>
            <person name="Imtiaz A."/>
            <person name="Morell R.J."/>
            <person name="Friedman T.B."/>
            <person name="Naz S."/>
        </authorList>
    </citation>
    <scope>INVOLVEMENT IN DFNB97</scope>
    <scope>VARIANT DFNB97 VAL-841</scope>
</reference>
<reference key="43">
    <citation type="journal article" date="2015" name="PLoS ONE">
        <title>Client proteins and small molecule inhibitors display distinct binding preferences for constitutive and stress-induced HSP90 isoforms and their conformationally restricted mutants.</title>
        <authorList>
            <person name="Prince T.L."/>
            <person name="Kijima T."/>
            <person name="Tatokoro M."/>
            <person name="Lee S."/>
            <person name="Tsutsumi S."/>
            <person name="Yim K."/>
            <person name="Rivas C."/>
            <person name="Alarcon S."/>
            <person name="Schwartz H."/>
            <person name="Khamit-Kush K."/>
            <person name="Scroggins B.T."/>
            <person name="Beebe K."/>
            <person name="Trepel J.B."/>
            <person name="Neckers L."/>
        </authorList>
    </citation>
    <scope>INTERACTION WITH HSP90AA1 AND HSP90AB1</scope>
</reference>
<reference key="44">
    <citation type="journal article" date="2016" name="J. Biol. Chem.">
        <title>Crystal structure of human leukocyte cell-derived chemotaxin 2 (LECT2) reveals a mechanistic basis of functional evolution in a mammalian protein with an M23 metalloendopeptidase fold.</title>
        <authorList>
            <person name="Zheng H."/>
            <person name="Miyakawa T."/>
            <person name="Sawano Y."/>
            <person name="Asano A."/>
            <person name="Okumura A."/>
            <person name="Yamagoe S."/>
            <person name="Tanokura M."/>
        </authorList>
    </citation>
    <scope>INTERACTION WITH LECT2</scope>
</reference>
<reference key="45">
    <citation type="journal article" date="2023" name="Proc. Natl. Acad. Sci. U.S.A.">
        <title>The SHDRA syndrome-associated geDne TMEM260 encodes a protein-specific O-mannosyltransferase.</title>
        <authorList>
            <person name="Larsen I.S.B."/>
            <person name="Povolo L."/>
            <person name="Zhou L."/>
            <person name="Tian W."/>
            <person name="Mygind K.J."/>
            <person name="Hintze J."/>
            <person name="Jiang C."/>
            <person name="Hartill V."/>
            <person name="Prescott K."/>
            <person name="Johnson C.A."/>
            <person name="Mullegama S.V."/>
            <person name="McConkie-Rosell A."/>
            <person name="McDonald M."/>
            <person name="Hansen L."/>
            <person name="Vakhrushev S.Y."/>
            <person name="Schjoldager K.T."/>
            <person name="Clausen H."/>
            <person name="Worzfeld T."/>
            <person name="Joshi H.J."/>
            <person name="Halim A."/>
        </authorList>
    </citation>
    <scope>GLYCOSYLATION AT THR-582; THR-676 AND THR-761</scope>
</reference>
<reference key="46">
    <citation type="journal article" date="2000" name="Biochemistry">
        <title>Dimer formation through domain swapping in the crystal structure of the Grb2-SH2-Ac-pYVNV complex.</title>
        <authorList>
            <person name="Schiering N."/>
            <person name="Casale E."/>
            <person name="Caccia P."/>
            <person name="Giordano P."/>
            <person name="Battistini C."/>
        </authorList>
    </citation>
    <scope>X-RAY CRYSTALLOGRAPHY (2.4 ANGSTROMS) OF 1356-1359 IN COMPLEX WITH GRB2</scope>
</reference>
<reference key="47">
    <citation type="journal article" date="2003" name="Proc. Natl. Acad. Sci. U.S.A.">
        <title>Crystal structure of the tyrosine kinase domain of the hepatocyte growth factor receptor c-Met and its complex with the microbial alkaloid K-252a.</title>
        <authorList>
            <person name="Schiering N."/>
            <person name="Knapp S."/>
            <person name="Marconi M."/>
            <person name="Flocco M.M."/>
            <person name="Cui J."/>
            <person name="Perego R."/>
            <person name="Rusconi L."/>
            <person name="Cristiani C."/>
        </authorList>
    </citation>
    <scope>X-RAY CRYSTALLOGRAPHY (1.8 ANGSTROMS) OF 1049-1360 IN COMPLEX WITH INHIBITOR</scope>
</reference>
<reference key="48">
    <citation type="journal article" date="2004" name="Biochem. Biophys. Res. Commun.">
        <title>Insights into function of PSI domains from structure of the Met receptor PSI domain.</title>
        <authorList>
            <person name="Kozlov G."/>
            <person name="Perreault A."/>
            <person name="Schrag J.D."/>
            <person name="Park M."/>
            <person name="Cygler M."/>
            <person name="Gehring K."/>
            <person name="Ekiel I."/>
        </authorList>
    </citation>
    <scope>STRUCTURE BY NMR OF 519-562</scope>
    <scope>DISULFIDE BONDS</scope>
</reference>
<reference key="49">
    <citation type="journal article" date="2004" name="EMBO J.">
        <title>Crystal structure of the HGF beta-chain in complex with the Sema domain of the Met receptor.</title>
        <authorList>
            <person name="Stamos J."/>
            <person name="Lazarus R.A."/>
            <person name="Yao X."/>
            <person name="Kirchhofer D."/>
            <person name="Wiesmann C."/>
        </authorList>
    </citation>
    <scope>X-RAY CRYSTALLOGRAPHY (3.22 ANGSTROMS) OF 25-567 IN COMPLEX WITH HGF</scope>
    <scope>DISULFIDE BONDS</scope>
</reference>
<reference key="50">
    <citation type="journal article" date="2007" name="Cell">
        <title>Structure of the human receptor tyrosine kinase Met in complex with the Listeria invasion protein InlB.</title>
        <authorList>
            <person name="Niemann H.H."/>
            <person name="Jager V."/>
            <person name="Butler P.J."/>
            <person name="van den Heuvel J."/>
            <person name="Schmidt S."/>
            <person name="Ferraris D."/>
            <person name="Gherardi E."/>
            <person name="Heinz D.W."/>
        </authorList>
    </citation>
    <scope>X-RAY CRYSTALLOGRAPHY (2.8 ANGSTROMS) OF 25-740 IN COMPLEX WITH L.MONOCYTOGENES INLB</scope>
    <scope>FUNCTION (MICROBIAL INFECTION)</scope>
    <scope>INTERACTION WITH L.MONOCYTOGENES INLB (MICROBIAL INFECTION)</scope>
    <scope>DISULFIDE BONDS</scope>
</reference>
<reference key="51">
    <citation type="journal article" date="1997" name="Nat. Genet.">
        <title>Germline and somatic mutations in the tyrosine kinase domain of the MET proto-oncogene in papillary renal carcinomas.</title>
        <authorList>
            <person name="Schmidt L."/>
            <person name="Duh F.-M."/>
            <person name="Chen F."/>
            <person name="Kishida T."/>
            <person name="Glenn G."/>
            <person name="Choyke P."/>
            <person name="Scherer S.W."/>
            <person name="Zhuang Z."/>
            <person name="Lubensky I."/>
            <person name="Dean M."/>
            <person name="Allikmets R."/>
            <person name="Chidambaram A."/>
            <person name="Bergerheim U.R."/>
            <person name="Feltis J.T."/>
            <person name="Casadevall C."/>
            <person name="Zamarron A."/>
            <person name="Bernues M."/>
            <person name="Richard S."/>
            <person name="Lips C.J.M."/>
            <person name="Walther M.M."/>
            <person name="Tsui L.-C."/>
            <person name="Geil L."/>
            <person name="Orcutt M.L."/>
            <person name="Stackhouse T."/>
            <person name="Lipan J."/>
            <person name="Slife L."/>
            <person name="Brauch H."/>
            <person name="Decker J."/>
            <person name="Niehans G."/>
            <person name="Hughson M.D."/>
            <person name="Moch H."/>
            <person name="Storkel S."/>
            <person name="Lerman M.I."/>
            <person name="Linehan W.M."/>
            <person name="Zbar B."/>
        </authorList>
    </citation>
    <scope>VARIANTS RCCP THR-1131; LEU-1188; VAL-1195; ILE-1220; HIS-1228; ASN-1228; CYS-1230; HIS-1230 AND THR-1250</scope>
    <scope>VARIANT VAL-320</scope>
</reference>
<reference key="52">
    <citation type="journal article" date="1998" name="Cancer Res.">
        <title>Two North American families with hereditary papillary renal carcinoma and identical novel mutations in the MET proto-oncogene.</title>
        <authorList>
            <person name="Schmidt L."/>
            <person name="Junker K."/>
            <person name="Weirich G."/>
            <person name="Glenn G."/>
            <person name="Choyke P."/>
            <person name="Lubensky I."/>
            <person name="Zhuang Z."/>
            <person name="Jeffers M."/>
            <person name="Vande Woude G."/>
            <person name="Neumann H."/>
            <person name="Walther M."/>
            <person name="Linehan W.M."/>
            <person name="Zbar B."/>
        </authorList>
    </citation>
    <scope>VARIANT RCCP ARG-1094</scope>
    <scope>CHARACTERIZATION OF VARIANT RCCP ARG-1094</scope>
</reference>
<reference key="53">
    <citation type="journal article" date="1999" name="Am. J. Pathol.">
        <title>Hereditary and sporadic papillary renal carcinomas with c-met mutations share a distinct morphological phenotype.</title>
        <authorList>
            <person name="Lubensky I.A."/>
            <person name="Schmidt L."/>
            <person name="Zhuang Z."/>
            <person name="Weirich G."/>
            <person name="Pack S."/>
            <person name="Zambrano N."/>
            <person name="Walther M.M."/>
            <person name="Choyke P."/>
            <person name="Linehan W.M."/>
            <person name="Zbar B."/>
        </authorList>
    </citation>
    <scope>VARIANTS RCCP ILE-1092; ARG-1094; ASP-1106; THR-1131; LEU-1188; ASP-1230; CYS-1230 AND THR-1250</scope>
</reference>
<reference key="54">
    <citation type="journal article" date="1999" name="Cancer Res.">
        <title>Somatic mutations in the kinase domain of the Met/hepatocyte growth factor receptor gene in childhood hepatocellular carcinomas.</title>
        <authorList>
            <person name="Park W.S."/>
            <person name="Dong S.M."/>
            <person name="Kim S.Y."/>
            <person name="Na E.Y."/>
            <person name="Shin M.S."/>
            <person name="Pi J.H."/>
            <person name="Kim B.J."/>
            <person name="Bae J.H."/>
            <person name="Hong Y.K."/>
            <person name="Lee K.S."/>
            <person name="Lee S.H."/>
            <person name="Yoo N.J."/>
            <person name="Jang J.J."/>
            <person name="Pack S."/>
            <person name="Zhuang Z."/>
            <person name="Schmidt L."/>
            <person name="Zbar B."/>
            <person name="Lee J.Y."/>
        </authorList>
    </citation>
    <scope>VARIANTS HCC ILE-1173; ARG-1244 AND ILE-1250</scope>
</reference>
<reference key="55">
    <citation type="journal article" date="1999" name="Int. J. Cancer">
        <title>Novel mutation in the ATP-binding site of the MET oncogene tyrosine kinase in a HPRCC family.</title>
        <authorList>
            <person name="Olivero M."/>
            <person name="Valente G."/>
            <person name="Bardelli A."/>
            <person name="Longati P."/>
            <person name="Ferrero N."/>
            <person name="Cracco C."/>
            <person name="Terrone C."/>
            <person name="Rocca-Rossetti S."/>
            <person name="Comoglio P.M."/>
            <person name="Di Renzo M.F."/>
        </authorList>
    </citation>
    <scope>VARIANT RCCP ILE-1092</scope>
    <scope>CHARACTERIZATION OF VARIANT RCCP ILE-1092</scope>
</reference>
<reference key="56">
    <citation type="journal article" date="1999" name="Oncogene">
        <title>Novel mutations of the MET proto-oncogene in papillary renal carcinomas.</title>
        <authorList>
            <person name="Schmidt L."/>
            <person name="Junker K."/>
            <person name="Nakaigawa N."/>
            <person name="Kinjerski T."/>
            <person name="Weirich G."/>
            <person name="Miller M."/>
            <person name="Lubensky I."/>
            <person name="Neumann H.P.H."/>
            <person name="Brauch H."/>
            <person name="Decker J."/>
            <person name="Vocke C."/>
            <person name="Brown J.A."/>
            <person name="Jenkins R."/>
            <person name="Richard S."/>
            <person name="Bergerheim U."/>
            <person name="Gerrard B."/>
            <person name="Dean M."/>
            <person name="Linehan W.M."/>
            <person name="Zbar B."/>
        </authorList>
    </citation>
    <scope>VARIANTS RCCP ILE-1092; LEU-1094; TYR-1094; ASP-1106 AND ASP-1230</scope>
    <scope>CHARACTERIZATION OF VARIANTS RCCP ILE-1092; LEU-1094; TYR-1094; ASP-1106 AND ASP-1230</scope>
</reference>
<reference key="57">
    <citation type="journal article" date="2000" name="Oncogene">
        <title>A novel germ line juxtamembrane Met mutation in human gastric cancer.</title>
        <authorList>
            <person name="Lee J.-H."/>
            <person name="Han S.-U."/>
            <person name="Cho H."/>
            <person name="Jennings B."/>
            <person name="Gerrard B."/>
            <person name="Dean M."/>
            <person name="Schmidt L."/>
            <person name="Zbar B."/>
            <person name="Vande Woude G.F.V."/>
        </authorList>
    </citation>
    <scope>VARIANT GASTRIC CANCER SER-991</scope>
    <scope>VARIANT ILE-992</scope>
    <scope>CHARACTERIZATION OF VARIANT GASTRIC CANCER SER-991</scope>
    <scope>CHARACTERIZATION OF VARIANT ILE-992</scope>
</reference>
<reference key="58">
    <citation type="journal article" date="2003" name="J. Med. Genet.">
        <title>A novel germline mutation in the MET extracellular domain in a Korean patient with the diffuse type of familial gastric cancer.</title>
        <authorList>
            <person name="Kim I.-J."/>
            <person name="Park J.-H."/>
            <person name="Kang H.C."/>
            <person name="Shin Y."/>
            <person name="Lim S.-B."/>
            <person name="Ku J.-L."/>
            <person name="Yang H.-K."/>
            <person name="Lee K.U."/>
            <person name="Park J.-G."/>
        </authorList>
    </citation>
    <scope>VARIANT GASTRIC CANCER LEU-773</scope>
</reference>
<reference key="59">
    <citation type="journal article" date="2005" name="J. Biol. Chem.">
        <title>The SPRY domain-containing SOCS box protein 1 (SSB-1) interacts with MET and enhances the hepatocyte growth factor-induced Erk-Elk-1-serum response element pathway.</title>
        <authorList>
            <person name="Wang D."/>
            <person name="Li Z."/>
            <person name="Messing E.M."/>
            <person name="Wu G."/>
        </authorList>
    </citation>
    <scope>INTERACTION WITH SPSB1; SPSB2; SPSB3 AND SPSB4</scope>
</reference>
<reference key="60">
    <citation type="journal article" date="2006" name="Proc. Natl. Acad. Sci. U.S.A.">
        <title>A genetic variant that disrupts MET transcription is associated with autism.</title>
        <authorList>
            <person name="Campbell D.B."/>
            <person name="Sutcliffe J.S."/>
            <person name="Ebert P.J."/>
            <person name="Militerni R."/>
            <person name="Bravaccio C."/>
            <person name="Trillo S."/>
            <person name="Elia M."/>
            <person name="Schneider C."/>
            <person name="Melmed R."/>
            <person name="Sacco R."/>
            <person name="Persico A.M."/>
            <person name="Levitt P."/>
        </authorList>
    </citation>
    <scope>POSSIBLE INVOLVEMENT IN SUSCEPTIBILITY TO AUTS9</scope>
    <scope>VARIANTS CYS-970 AND ILE-992</scope>
</reference>
<reference key="61">
    <citation type="journal article" date="2007" name="Nature">
        <title>Patterns of somatic mutation in human cancer genomes.</title>
        <authorList>
            <person name="Greenman C."/>
            <person name="Stephens P."/>
            <person name="Smith R."/>
            <person name="Dalgliesh G.L."/>
            <person name="Hunter C."/>
            <person name="Bignell G."/>
            <person name="Davies H."/>
            <person name="Teague J."/>
            <person name="Butler A."/>
            <person name="Stevens C."/>
            <person name="Edkins S."/>
            <person name="O'Meara S."/>
            <person name="Vastrik I."/>
            <person name="Schmidt E.E."/>
            <person name="Avis T."/>
            <person name="Barthorpe S."/>
            <person name="Bhamra G."/>
            <person name="Buck G."/>
            <person name="Choudhury B."/>
            <person name="Clements J."/>
            <person name="Cole J."/>
            <person name="Dicks E."/>
            <person name="Forbes S."/>
            <person name="Gray K."/>
            <person name="Halliday K."/>
            <person name="Harrison R."/>
            <person name="Hills K."/>
            <person name="Hinton J."/>
            <person name="Jenkinson A."/>
            <person name="Jones D."/>
            <person name="Menzies A."/>
            <person name="Mironenko T."/>
            <person name="Perry J."/>
            <person name="Raine K."/>
            <person name="Richardson D."/>
            <person name="Shepherd R."/>
            <person name="Small A."/>
            <person name="Tofts C."/>
            <person name="Varian J."/>
            <person name="Webb T."/>
            <person name="West S."/>
            <person name="Widaa S."/>
            <person name="Yates A."/>
            <person name="Cahill D.P."/>
            <person name="Louis D.N."/>
            <person name="Goldstraw P."/>
            <person name="Nicholson A.G."/>
            <person name="Brasseur F."/>
            <person name="Looijenga L."/>
            <person name="Weber B.L."/>
            <person name="Chiew Y.-E."/>
            <person name="DeFazio A."/>
            <person name="Greaves M.F."/>
            <person name="Green A.R."/>
            <person name="Campbell P."/>
            <person name="Birney E."/>
            <person name="Easton D.F."/>
            <person name="Chenevix-Trench G."/>
            <person name="Tan M.-H."/>
            <person name="Khoo S.K."/>
            <person name="Teh B.T."/>
            <person name="Yuen S.T."/>
            <person name="Leung S.Y."/>
            <person name="Wooster R."/>
            <person name="Futreal P.A."/>
            <person name="Stratton M.R."/>
        </authorList>
    </citation>
    <scope>VARIANTS [LARGE SCALE ANALYSIS] GLN-143; LEU-156; ASP-168; SER-375; CYS-970 AND ILE-992</scope>
</reference>
<reference key="62">
    <citation type="journal article" date="2011" name="Hum. Mutat.">
        <title>MET mutations in cancers of unknown primary origin (CUPs).</title>
        <authorList>
            <person name="Stella G.M."/>
            <person name="Benvenuti S."/>
            <person name="Gramaglia D."/>
            <person name="Scarpa A."/>
            <person name="Tomezzoli A."/>
            <person name="Cassoni P."/>
            <person name="Senetta R."/>
            <person name="Venesio T."/>
            <person name="Pozzi E."/>
            <person name="Bardelli A."/>
            <person name="Comoglio P.M."/>
        </authorList>
    </citation>
    <scope>VARIANTS TYR-150; ASP-168; TYR-385; ILE-992 AND ILE-1294</scope>
    <scope>CHARACTERIZATION OF VARIANTS TYR-385 AND ILE-1294</scope>
    <scope>POSSIBLE INVOLVEMENT IN CUP</scope>
</reference>
<reference key="63">
    <citation type="journal article" date="2017" name="Cancer Sci.">
        <title>Exome sequencing deciphers a germline MET mutation in familial epidermal growth factor receptor-mutant lung cancer.</title>
        <authorList>
            <person name="Tode N."/>
            <person name="Kikuchi T."/>
            <person name="Sakakibara T."/>
            <person name="Hirano T."/>
            <person name="Inoue A."/>
            <person name="Ohkouchi S."/>
            <person name="Tamada T."/>
            <person name="Okazaki T."/>
            <person name="Koarai A."/>
            <person name="Sugiura H."/>
            <person name="Niihori T."/>
            <person name="Aoki Y."/>
            <person name="Nakayama K."/>
            <person name="Matsumoto K."/>
            <person name="Matsubara Y."/>
            <person name="Yamamoto M."/>
            <person name="Watanabe A."/>
            <person name="Nukiwa T."/>
            <person name="Ichinose M."/>
        </authorList>
    </citation>
    <scope>VARIANT LYS-375</scope>
    <scope>CHARACTERIZATION OF VARIANT LYS-375</scope>
</reference>
<reference key="64">
    <citation type="journal article" date="2019" name="EMBO Mol. Med.">
        <title>MET mutation causes muscular dysplasia and arthrogryposis.</title>
        <authorList>
            <person name="Zhou H."/>
            <person name="Lian C."/>
            <person name="Wang T."/>
            <person name="Yang X."/>
            <person name="Xu C."/>
            <person name="Su D."/>
            <person name="Zheng S."/>
            <person name="Huang X."/>
            <person name="Liao Z."/>
            <person name="Zhou T."/>
            <person name="Qiu X."/>
            <person name="Chen Y."/>
            <person name="Gao B."/>
            <person name="Li Y."/>
            <person name="Wang X."/>
            <person name="You G."/>
            <person name="Fu Q."/>
            <person name="Gurnett C."/>
            <person name="Huang D."/>
            <person name="Su P."/>
        </authorList>
    </citation>
    <scope>VARIANT DA11 CYS-1234</scope>
    <scope>CHARACTERIZATION OF VARIANT DA11 CYS-1234</scope>
    <scope>INVOLVEMENT IN DA11</scope>
</reference>
<protein>
    <recommendedName>
        <fullName>Hepatocyte growth factor receptor</fullName>
        <shortName>HGF receptor</shortName>
        <ecNumber>2.7.10.1</ecNumber>
    </recommendedName>
    <alternativeName>
        <fullName>HGF/SF receptor</fullName>
    </alternativeName>
    <alternativeName>
        <fullName>Proto-oncogene c-Met</fullName>
    </alternativeName>
    <alternativeName>
        <fullName>Scatter factor receptor</fullName>
        <shortName>SF receptor</shortName>
    </alternativeName>
    <alternativeName>
        <fullName>Tyrosine-protein kinase Met</fullName>
    </alternativeName>
</protein>
<feature type="signal peptide" evidence="2">
    <location>
        <begin position="1"/>
        <end position="24"/>
    </location>
</feature>
<feature type="chain" id="PRO_0000024440" description="Hepatocyte growth factor receptor">
    <location>
        <begin position="25"/>
        <end position="1390"/>
    </location>
</feature>
<feature type="topological domain" description="Extracellular" evidence="2">
    <location>
        <begin position="25"/>
        <end position="932"/>
    </location>
</feature>
<feature type="transmembrane region" description="Helical" evidence="2">
    <location>
        <begin position="933"/>
        <end position="955"/>
    </location>
</feature>
<feature type="topological domain" description="Cytoplasmic" evidence="2">
    <location>
        <begin position="956"/>
        <end position="1390"/>
    </location>
</feature>
<feature type="domain" description="Sema" evidence="4">
    <location>
        <begin position="27"/>
        <end position="515"/>
    </location>
</feature>
<feature type="domain" description="IPT/TIG 1">
    <location>
        <begin position="563"/>
        <end position="655"/>
    </location>
</feature>
<feature type="domain" description="IPT/TIG 2">
    <location>
        <begin position="657"/>
        <end position="739"/>
    </location>
</feature>
<feature type="domain" description="IPT/TIG 3">
    <location>
        <begin position="742"/>
        <end position="836"/>
    </location>
</feature>
<feature type="domain" description="Protein kinase" evidence="3">
    <location>
        <begin position="1078"/>
        <end position="1345"/>
    </location>
</feature>
<feature type="region of interest" description="Interaction with RANBP9">
    <location>
        <begin position="1212"/>
        <end position="1390"/>
    </location>
</feature>
<feature type="region of interest" description="Interaction with MUC20" evidence="21">
    <location>
        <begin position="1320"/>
        <end position="1359"/>
    </location>
</feature>
<feature type="active site" description="Proton acceptor" evidence="3 5">
    <location>
        <position position="1204"/>
    </location>
</feature>
<feature type="binding site" evidence="3">
    <location>
        <begin position="1084"/>
        <end position="1092"/>
    </location>
    <ligand>
        <name>ATP</name>
        <dbReference type="ChEBI" id="CHEBI:30616"/>
    </ligand>
</feature>
<feature type="binding site">
    <location>
        <position position="1110"/>
    </location>
    <ligand>
        <name>ATP</name>
        <dbReference type="ChEBI" id="CHEBI:30616"/>
    </ligand>
</feature>
<feature type="site" description="Cleavage" evidence="2">
    <location>
        <begin position="307"/>
        <end position="308"/>
    </location>
</feature>
<feature type="site" description="Required for ligand-induced CBL-mediated ubiquitination" evidence="15">
    <location>
        <position position="1003"/>
    </location>
</feature>
<feature type="site" description="Breakpoint for translocation to form TPR-MET oncogene">
    <location>
        <begin position="1009"/>
        <end position="1010"/>
    </location>
</feature>
<feature type="modified residue" description="Phosphoserine" evidence="60">
    <location>
        <position position="966"/>
    </location>
</feature>
<feature type="modified residue" description="Phosphothreonine" evidence="57">
    <location>
        <position position="977"/>
    </location>
</feature>
<feature type="modified residue" description="Phosphoserine" evidence="56 59">
    <location>
        <position position="990"/>
    </location>
</feature>
<feature type="modified residue" description="Phosphoserine" evidence="56">
    <location>
        <position position="997"/>
    </location>
</feature>
<feature type="modified residue" description="Phosphoserine" evidence="56">
    <location>
        <position position="1000"/>
    </location>
</feature>
<feature type="modified residue" description="Phosphotyrosine" evidence="57 58">
    <location>
        <position position="1003"/>
    </location>
</feature>
<feature type="modified residue" description="Phosphotyrosine" evidence="16">
    <location>
        <position position="1230"/>
    </location>
</feature>
<feature type="modified residue" description="Phosphotyrosine; by autocatalysis" evidence="16">
    <location>
        <position position="1234"/>
    </location>
</feature>
<feature type="modified residue" description="Phosphotyrosine; by autocatalysis" evidence="16 24">
    <location>
        <position position="1235"/>
    </location>
</feature>
<feature type="modified residue" description="Phosphothreonine" evidence="58">
    <location>
        <position position="1289"/>
    </location>
</feature>
<feature type="modified residue" description="Phosphotyrosine; by autocatalysis" evidence="16 43">
    <location>
        <position position="1349"/>
    </location>
</feature>
<feature type="modified residue" description="Phosphotyrosine; by autocatalysis" evidence="23 43">
    <location>
        <position position="1356"/>
    </location>
</feature>
<feature type="modified residue" description="Phosphotyrosine" evidence="16">
    <location>
        <position position="1365"/>
    </location>
</feature>
<feature type="glycosylation site" description="N-linked (GlcNAc...) asparagine" evidence="2">
    <location>
        <position position="45"/>
    </location>
</feature>
<feature type="glycosylation site" description="N-linked (GlcNAc...) asparagine" evidence="32">
    <location>
        <position position="106"/>
    </location>
</feature>
<feature type="glycosylation site" description="N-linked (GlcNAc...) asparagine" evidence="2">
    <location>
        <position position="149"/>
    </location>
</feature>
<feature type="glycosylation site" description="N-linked (GlcNAc...) asparagine" evidence="2">
    <location>
        <position position="202"/>
    </location>
</feature>
<feature type="glycosylation site" description="N-linked (GlcNAc...) asparagine" evidence="2">
    <location>
        <position position="399"/>
    </location>
</feature>
<feature type="glycosylation site" description="N-linked (GlcNAc...) asparagine" evidence="2">
    <location>
        <position position="405"/>
    </location>
</feature>
<feature type="glycosylation site" description="O-linked (Man) threonine" evidence="42">
    <location>
        <position position="582"/>
    </location>
</feature>
<feature type="glycosylation site" description="N-linked (GlcNAc...) asparagine" evidence="2">
    <location>
        <position position="607"/>
    </location>
</feature>
<feature type="glycosylation site" description="N-linked (GlcNAc...) asparagine" evidence="2">
    <location>
        <position position="635"/>
    </location>
</feature>
<feature type="glycosylation site" description="O-linked (Man) threonine" evidence="42">
    <location>
        <position position="676"/>
    </location>
</feature>
<feature type="glycosylation site" description="O-linked (Man) threonine" evidence="42">
    <location>
        <position position="761"/>
    </location>
</feature>
<feature type="glycosylation site" description="N-linked (GlcNAc...) asparagine" evidence="2">
    <location>
        <position position="785"/>
    </location>
</feature>
<feature type="glycosylation site" description="N-linked (GlcNAc...) asparagine" evidence="2">
    <location>
        <position position="879"/>
    </location>
</feature>
<feature type="glycosylation site" description="N-linked (GlcNAc...) asparagine" evidence="2">
    <location>
        <position position="930"/>
    </location>
</feature>
<feature type="disulfide bond">
    <location>
        <begin position="95"/>
        <end position="101"/>
    </location>
</feature>
<feature type="disulfide bond">
    <location>
        <begin position="98"/>
        <end position="160"/>
    </location>
</feature>
<feature type="disulfide bond" evidence="29 54 55">
    <location>
        <begin position="133"/>
        <end position="141"/>
    </location>
</feature>
<feature type="disulfide bond" evidence="29 54 55">
    <location>
        <begin position="172"/>
        <end position="175"/>
    </location>
</feature>
<feature type="disulfide bond" evidence="29 54 55">
    <location>
        <begin position="298"/>
        <end position="363"/>
    </location>
</feature>
<feature type="disulfide bond" evidence="29 55">
    <location>
        <begin position="385"/>
        <end position="397"/>
    </location>
</feature>
<feature type="disulfide bond" evidence="29 54 55">
    <location>
        <begin position="520"/>
        <end position="538"/>
    </location>
</feature>
<feature type="disulfide bond" evidence="29 54 55">
    <location>
        <begin position="526"/>
        <end position="561"/>
    </location>
</feature>
<feature type="disulfide bond" evidence="29 54 55">
    <location>
        <begin position="529"/>
        <end position="545"/>
    </location>
</feature>
<feature type="disulfide bond" evidence="29 54 55">
    <location>
        <begin position="541"/>
        <end position="551"/>
    </location>
</feature>
<feature type="disulfide bond" evidence="29 54 55">
    <location>
        <begin position="610"/>
        <end position="624"/>
    </location>
</feature>
<feature type="disulfide bond" evidence="29 55">
    <location>
        <begin position="697"/>
        <end position="709"/>
    </location>
</feature>
<feature type="splice variant" id="VSP_042447" description="In isoform 3." evidence="48">
    <original>SGGSTITGVG</original>
    <variation>RHVNIALIQR</variation>
    <location>
        <begin position="755"/>
        <end position="764"/>
    </location>
</feature>
<feature type="splice variant" id="VSP_005005" description="In isoform 2." evidence="49">
    <original>S</original>
    <variation>STWWKEPLNIVSFLFCFAS</variation>
    <location>
        <position position="755"/>
    </location>
</feature>
<feature type="splice variant" id="VSP_042448" description="In isoform 3." evidence="48">
    <location>
        <begin position="765"/>
        <end position="1390"/>
    </location>
</feature>
<feature type="sequence variant" id="VAR_041738" description="In dbSNP:rs35469582." evidence="28">
    <original>R</original>
    <variation>Q</variation>
    <location>
        <position position="143"/>
    </location>
</feature>
<feature type="sequence variant" id="VAR_064855" description="Found in a case of cancer of unknown primary origin; uncertain significance; somatic mutation; dbSNP:rs1436957498." evidence="33">
    <original>H</original>
    <variation>Y</variation>
    <location>
        <position position="150"/>
    </location>
</feature>
<feature type="sequence variant" id="VAR_041739" description="In dbSNP:rs56311081." evidence="28">
    <original>S</original>
    <variation>L</variation>
    <location>
        <position position="156"/>
    </location>
</feature>
<feature type="sequence variant" id="VAR_041740" description="In dbSNP:rs55985569." evidence="28 33">
    <original>E</original>
    <variation>D</variation>
    <location>
        <position position="168"/>
    </location>
</feature>
<feature type="sequence variant" id="VAR_032478" description="In dbSNP:rs34349517.">
    <original>L</original>
    <variation>S</variation>
    <location>
        <position position="238"/>
    </location>
</feature>
<feature type="sequence variant" id="VAR_032479" description="In dbSNP:rs35225896.">
    <original>I</original>
    <variation>M</variation>
    <location>
        <position position="316"/>
    </location>
</feature>
<feature type="sequence variant" id="VAR_006285" description="In dbSNP:rs35776110." evidence="44">
    <original>A</original>
    <variation>V</variation>
    <location>
        <position position="320"/>
    </location>
</feature>
<feature type="sequence variant" id="VAR_079370" description="Found in lung cancer also including cases carrying EGFR mutations; uncertain significance; decreased hepatocyte growth factor-activated receptor activity; decreased interaction with HGF; dbSNP:rs776693512." evidence="40">
    <original>N</original>
    <variation>K</variation>
    <location>
        <position position="375"/>
    </location>
</feature>
<feature type="sequence variant" id="VAR_032480" description="In dbSNP:rs33917957." evidence="28">
    <original>N</original>
    <variation>S</variation>
    <location>
        <position position="375"/>
    </location>
</feature>
<feature type="sequence variant" id="VAR_064856" description="Found in a case of cancer of unknown primary origin; uncertain significance; somatic mutation; the mutated receptor can sustain invasive cell growth in vitro; dbSNP:rs752055485." evidence="33">
    <original>C</original>
    <variation>Y</variation>
    <location>
        <position position="385"/>
    </location>
</feature>
<feature type="sequence variant" id="VAR_032481" description="In gastric cancer; dbSNP:rs771333219." evidence="17">
    <original>P</original>
    <variation>L</variation>
    <location>
        <position position="773"/>
    </location>
</feature>
<feature type="sequence variant" id="VAR_075757" description="In DFNB97; dbSNP:rs794728016." evidence="36">
    <original>F</original>
    <variation>V</variation>
    <location>
        <position position="841"/>
    </location>
</feature>
<feature type="sequence variant" id="VAR_076584" description="In OSFD; loss of CBL-mediated destabilization." evidence="38">
    <location>
        <begin position="964"/>
        <end position="1010"/>
    </location>
</feature>
<feature type="sequence variant" id="VAR_032482" description="In dbSNP:rs34589476." evidence="25 28">
    <original>R</original>
    <variation>C</variation>
    <location>
        <position position="970"/>
    </location>
</feature>
<feature type="sequence variant" id="VAR_032483" description="In gastric cancer; prolonged tyrosine phosphorylation in response to HGF/SF; transforming activity in athymic nude mice; dbSNP:rs768678989." evidence="10">
    <original>P</original>
    <variation>S</variation>
    <location>
        <position position="991"/>
    </location>
</feature>
<feature type="sequence variant" id="VAR_032484" description="In dbSNP:rs56391007." evidence="10 25 28 33">
    <original>T</original>
    <variation>I</variation>
    <location>
        <position position="992"/>
    </location>
</feature>
<feature type="sequence variant" id="VAR_076585" description="Found in a patient with sporadic unilateral osteofibrous dysplasia; uncertain significance; somatic mutation; complete loss of ligand-induced CBL-mediated ubiquitination, resulting in protein stabilization; dbSNP:rs2116997492." evidence="15">
    <original>Y</original>
    <variation>S</variation>
    <location>
        <position position="1003"/>
    </location>
</feature>
<feature type="sequence variant" id="VAR_032485" description="In RCCP; constitutive autophosphorylation; dbSNP:rs786202724." evidence="6 7 8">
    <original>V</original>
    <variation>I</variation>
    <location>
        <position position="1092"/>
    </location>
</feature>
<feature type="sequence variant" id="VAR_032486" description="In RCCP; constitutive autophosphorylation; causes malignant transformation in cell lines; dbSNP:rs121913243." evidence="6">
    <original>H</original>
    <variation>L</variation>
    <location>
        <position position="1094"/>
    </location>
</feature>
<feature type="sequence variant" id="VAR_032487" description="In RCCP; causes malignant transformation in cell lines; dbSNP:rs121913243." evidence="8 46">
    <original>H</original>
    <variation>R</variation>
    <location>
        <position position="1094"/>
    </location>
</feature>
<feature type="sequence variant" id="VAR_032488" description="In RCCP; constitutive autophosphorylation; causes malignant transformation in cell lines; dbSNP:rs121913244." evidence="6">
    <original>H</original>
    <variation>Y</variation>
    <location>
        <position position="1094"/>
    </location>
</feature>
<feature type="sequence variant" id="VAR_032489" description="In RCCP; constitutive autophosphorylation; causes malignant transformation in cell lines; dbSNP:rs1795030662." evidence="6 8">
    <original>H</original>
    <variation>D</variation>
    <location>
        <position position="1106"/>
    </location>
</feature>
<feature type="sequence variant" id="VAR_006286" description="In RCCP; germline mutation; dbSNP:rs121913668." evidence="8 44">
    <original>M</original>
    <variation>T</variation>
    <location>
        <position position="1131"/>
    </location>
</feature>
<feature type="sequence variant" id="VAR_032490" description="In HCC; dbSNP:rs121913675." evidence="47">
    <original>T</original>
    <variation>I</variation>
    <location>
        <position position="1173"/>
    </location>
</feature>
<feature type="sequence variant" id="VAR_006287" description="In RCCP; germline mutation; dbSNP:rs121913669." evidence="8 44">
    <original>V</original>
    <variation>L</variation>
    <location>
        <position position="1188"/>
    </location>
</feature>
<feature type="sequence variant" id="VAR_006288" description="In RCCP; somatic mutation; dbSNP:rs121913673." evidence="44">
    <original>L</original>
    <variation>V</variation>
    <location>
        <position position="1195"/>
    </location>
</feature>
<feature type="sequence variant" id="VAR_006289" description="In RCCP; germline mutation; dbSNP:rs121913670." evidence="44">
    <original>V</original>
    <variation>I</variation>
    <location>
        <position position="1220"/>
    </location>
</feature>
<feature type="sequence variant" id="VAR_006291" description="In RCCP; somatic mutation; dbSNP:rs121913671." evidence="44">
    <original>D</original>
    <variation>H</variation>
    <location>
        <position position="1228"/>
    </location>
</feature>
<feature type="sequence variant" id="VAR_006290" description="In RCCP; germline mutation; dbSNP:rs121913671." evidence="44">
    <original>D</original>
    <variation>N</variation>
    <location>
        <position position="1228"/>
    </location>
</feature>
<feature type="sequence variant" id="VAR_006292" description="In RCCP; germline mutation; dbSNP:rs121913246." evidence="8 44">
    <original>Y</original>
    <variation>C</variation>
    <location>
        <position position="1230"/>
    </location>
</feature>
<feature type="sequence variant" id="VAR_032491" description="In RCCP; constitutive autophosphorylation; causes malignant transformation in cell lines; dbSNP:rs121913247." evidence="6 8">
    <original>Y</original>
    <variation>D</variation>
    <location>
        <position position="1230"/>
    </location>
</feature>
<feature type="sequence variant" id="VAR_006293" description="In RCCP; somatic mutation; dbSNP:rs121913247." evidence="44">
    <original>Y</original>
    <variation>H</variation>
    <location>
        <position position="1230"/>
    </location>
</feature>
<feature type="sequence variant" id="VAR_087543" description="In DA11; not phosphorylated in response to HGF; severely decreased tyrosin kinase activity; dbSNP:rs1554400286." evidence="41">
    <original>Y</original>
    <variation>C</variation>
    <location>
        <position position="1234"/>
    </location>
</feature>
<feature type="sequence variant" id="VAR_032492" description="In HCC; dbSNP:rs121913677." evidence="47">
    <original>K</original>
    <variation>R</variation>
    <location>
        <position position="1244"/>
    </location>
</feature>
<feature type="sequence variant" id="VAR_032493" description="In HCC; dbSNP:rs121913676." evidence="47">
    <original>M</original>
    <variation>I</variation>
    <location>
        <position position="1250"/>
    </location>
</feature>
<feature type="sequence variant" id="VAR_006294" description="In RCCP; somatic mutation; dbSNP:rs121913245." evidence="8 44">
    <original>M</original>
    <variation>T</variation>
    <location>
        <position position="1250"/>
    </location>
</feature>
<feature type="sequence variant" id="VAR_064857" description="Found in a case of cancer of unknown primary origin; uncertain significance; somatic mutation; the mutated receptor is constitutively phosphorylated and can sustain invasive cell growth in vitro; dbSNP:rs1263785859." evidence="33">
    <original>V</original>
    <variation>I</variation>
    <location>
        <position position="1294"/>
    </location>
</feature>
<feature type="mutagenesis site" description="Complete loss of kinase activity and of ligand-induced ubiquitination. Alters interaction with PTPN1 and PTPN2. Loss of interaction with PTPN1 and PTPN2; when associated with F-1235." evidence="15 30">
    <original>Y</original>
    <variation>F</variation>
    <location>
        <position position="1234"/>
    </location>
</feature>
<feature type="mutagenesis site" description="Complete loss of kinase activity. Alters interaction with PTPN1 and PTPN2. Loss of interaction with PTPN1 and PTPN2; when associated with F-1234." evidence="15 30">
    <original>Y</original>
    <variation>F</variation>
    <location>
        <position position="1235"/>
    </location>
</feature>
<feature type="mutagenesis site" description="No effect on ligand-induced CBL-mediated ubiquitination; when associated with F-1349, F-1356 and F-1365." evidence="15">
    <original>Y</original>
    <variation>F</variation>
    <location>
        <position position="1313"/>
    </location>
</feature>
<feature type="mutagenesis site" description="No effect on ligand-induced CBL-mediated ubiquitination; when associated with F-1313, F-1356 and F-1365." evidence="15">
    <original>Y</original>
    <variation>F</variation>
    <location>
        <position position="1349"/>
    </location>
</feature>
<feature type="mutagenesis site" description="No effect on ligand-induced CBL-mediated ubiquitination; when associated with F-1313, F-1349 and F-1365." evidence="15">
    <original>Y</original>
    <variation>F</variation>
    <location>
        <position position="1356"/>
    </location>
</feature>
<feature type="mutagenesis site" description="No effect on ligand-induced CBL-mediated ubiquitination; when associated with F-1313, F-1349 and F-1356." evidence="15">
    <original>Y</original>
    <variation>F</variation>
    <location>
        <position position="1365"/>
    </location>
</feature>
<feature type="sequence conflict" description="In Ref. 3; ACF47606." evidence="50" ref="3">
    <original>V</original>
    <variation>A</variation>
    <location>
        <position position="237"/>
    </location>
</feature>
<feature type="sequence conflict" description="In Ref. 3; ACF47606." evidence="50" ref="3">
    <original>K</original>
    <variation>R</variation>
    <location>
        <position position="508"/>
    </location>
</feature>
<feature type="sequence conflict" description="In Ref. 3; ACF47606." evidence="50" ref="3">
    <original>F</original>
    <variation>S</variation>
    <location>
        <position position="720"/>
    </location>
</feature>
<feature type="sequence conflict" description="In Ref. 1; AAA59591." evidence="50" ref="1">
    <original>G</original>
    <variation>A</variation>
    <location>
        <position position="1191"/>
    </location>
</feature>
<feature type="sequence conflict" description="In Ref. 1; AAA59591, 2; CAB56793 and 6; AAA59590." evidence="50" ref="1 2 6">
    <original>L</original>
    <variation>V</variation>
    <location>
        <position position="1272"/>
    </location>
</feature>
<feature type="helix" evidence="70">
    <location>
        <begin position="25"/>
        <end position="30"/>
    </location>
</feature>
<feature type="strand" evidence="63">
    <location>
        <begin position="45"/>
        <end position="47"/>
    </location>
</feature>
<feature type="strand" evidence="63">
    <location>
        <begin position="52"/>
        <end position="58"/>
    </location>
</feature>
<feature type="strand" evidence="63">
    <location>
        <begin position="61"/>
        <end position="66"/>
    </location>
</feature>
<feature type="strand" evidence="63">
    <location>
        <begin position="69"/>
        <end position="74"/>
    </location>
</feature>
<feature type="turn" evidence="63">
    <location>
        <begin position="75"/>
        <end position="77"/>
    </location>
</feature>
<feature type="strand" evidence="63">
    <location>
        <begin position="80"/>
        <end position="84"/>
    </location>
</feature>
<feature type="strand" evidence="67">
    <location>
        <begin position="89"/>
        <end position="91"/>
    </location>
</feature>
<feature type="strand" evidence="67">
    <location>
        <begin position="93"/>
        <end position="95"/>
    </location>
</feature>
<feature type="strand" evidence="62">
    <location>
        <begin position="97"/>
        <end position="99"/>
    </location>
</feature>
<feature type="helix" evidence="68">
    <location>
        <begin position="103"/>
        <end position="105"/>
    </location>
</feature>
<feature type="strand" evidence="67">
    <location>
        <begin position="111"/>
        <end position="113"/>
    </location>
</feature>
<feature type="strand" evidence="63">
    <location>
        <begin position="119"/>
        <end position="123"/>
    </location>
</feature>
<feature type="strand" evidence="63">
    <location>
        <begin position="125"/>
        <end position="133"/>
    </location>
</feature>
<feature type="strand" evidence="63">
    <location>
        <begin position="135"/>
        <end position="139"/>
    </location>
</feature>
<feature type="strand" evidence="63">
    <location>
        <begin position="141"/>
        <end position="145"/>
    </location>
</feature>
<feature type="strand" evidence="67">
    <location>
        <begin position="155"/>
        <end position="160"/>
    </location>
</feature>
<feature type="strand" evidence="72">
    <location>
        <begin position="166"/>
        <end position="168"/>
    </location>
</feature>
<feature type="strand" evidence="71">
    <location>
        <begin position="173"/>
        <end position="175"/>
    </location>
</feature>
<feature type="strand" evidence="63">
    <location>
        <begin position="182"/>
        <end position="189"/>
    </location>
</feature>
<feature type="strand" evidence="63">
    <location>
        <begin position="192"/>
        <end position="199"/>
    </location>
</feature>
<feature type="helix" evidence="72">
    <location>
        <begin position="205"/>
        <end position="208"/>
    </location>
</feature>
<feature type="strand" evidence="63">
    <location>
        <begin position="213"/>
        <end position="219"/>
    </location>
</feature>
<feature type="helix" evidence="63">
    <location>
        <begin position="231"/>
        <end position="233"/>
    </location>
</feature>
<feature type="helix" evidence="63">
    <location>
        <begin position="239"/>
        <end position="241"/>
    </location>
</feature>
<feature type="turn" evidence="63">
    <location>
        <begin position="242"/>
        <end position="244"/>
    </location>
</feature>
<feature type="strand" evidence="63">
    <location>
        <begin position="247"/>
        <end position="255"/>
    </location>
</feature>
<feature type="strand" evidence="63">
    <location>
        <begin position="258"/>
        <end position="268"/>
    </location>
</feature>
<feature type="strand" evidence="63">
    <location>
        <begin position="272"/>
        <end position="274"/>
    </location>
</feature>
<feature type="strand" evidence="63">
    <location>
        <begin position="277"/>
        <end position="281"/>
    </location>
</feature>
<feature type="strand" evidence="63">
    <location>
        <begin position="284"/>
        <end position="286"/>
    </location>
</feature>
<feature type="strand" evidence="63">
    <location>
        <begin position="292"/>
        <end position="300"/>
    </location>
</feature>
<feature type="strand" evidence="63">
    <location>
        <begin position="312"/>
        <end position="314"/>
    </location>
</feature>
<feature type="strand" evidence="63">
    <location>
        <begin position="316"/>
        <end position="323"/>
    </location>
</feature>
<feature type="helix" evidence="63">
    <location>
        <begin position="327"/>
        <end position="333"/>
    </location>
</feature>
<feature type="strand" evidence="63">
    <location>
        <begin position="341"/>
        <end position="349"/>
    </location>
</feature>
<feature type="strand" evidence="63">
    <location>
        <begin position="356"/>
        <end position="366"/>
    </location>
</feature>
<feature type="helix" evidence="63">
    <location>
        <begin position="367"/>
        <end position="374"/>
    </location>
</feature>
<feature type="helix" evidence="67">
    <location>
        <begin position="380"/>
        <end position="382"/>
    </location>
</feature>
<feature type="strand" evidence="67">
    <location>
        <begin position="383"/>
        <end position="385"/>
    </location>
</feature>
<feature type="helix" evidence="63">
    <location>
        <begin position="387"/>
        <end position="390"/>
    </location>
</feature>
<feature type="strand" evidence="62">
    <location>
        <begin position="392"/>
        <end position="394"/>
    </location>
</feature>
<feature type="turn" evidence="68">
    <location>
        <begin position="395"/>
        <end position="397"/>
    </location>
</feature>
<feature type="strand" evidence="63">
    <location>
        <begin position="418"/>
        <end position="422"/>
    </location>
</feature>
<feature type="strand" evidence="63">
    <location>
        <begin position="424"/>
        <end position="427"/>
    </location>
</feature>
<feature type="turn" evidence="63">
    <location>
        <begin position="429"/>
        <end position="436"/>
    </location>
</feature>
<feature type="strand" evidence="63">
    <location>
        <begin position="439"/>
        <end position="447"/>
    </location>
</feature>
<feature type="strand" evidence="63">
    <location>
        <begin position="450"/>
        <end position="457"/>
    </location>
</feature>
<feature type="strand" evidence="63">
    <location>
        <begin position="462"/>
        <end position="466"/>
    </location>
</feature>
<feature type="strand" evidence="67">
    <location>
        <begin position="469"/>
        <end position="471"/>
    </location>
</feature>
<feature type="strand" evidence="67">
    <location>
        <begin position="476"/>
        <end position="480"/>
    </location>
</feature>
<feature type="strand" evidence="63">
    <location>
        <begin position="490"/>
        <end position="493"/>
    </location>
</feature>
<feature type="turn" evidence="68">
    <location>
        <begin position="496"/>
        <end position="498"/>
    </location>
</feature>
<feature type="strand" evidence="63">
    <location>
        <begin position="501"/>
        <end position="506"/>
    </location>
</feature>
<feature type="strand" evidence="63">
    <location>
        <begin position="509"/>
        <end position="514"/>
    </location>
</feature>
<feature type="helix" evidence="70">
    <location>
        <begin position="520"/>
        <end position="522"/>
    </location>
</feature>
<feature type="helix" evidence="70">
    <location>
        <begin position="526"/>
        <end position="529"/>
    </location>
</feature>
<feature type="helix" evidence="70">
    <location>
        <begin position="534"/>
        <end position="536"/>
    </location>
</feature>
<feature type="strand" evidence="70">
    <location>
        <begin position="539"/>
        <end position="541"/>
    </location>
</feature>
<feature type="strand" evidence="70">
    <location>
        <begin position="544"/>
        <end position="546"/>
    </location>
</feature>
<feature type="helix" evidence="70">
    <location>
        <begin position="548"/>
        <end position="550"/>
    </location>
</feature>
<feature type="strand" evidence="63">
    <location>
        <begin position="552"/>
        <end position="554"/>
    </location>
</feature>
<feature type="strand" evidence="70">
    <location>
        <begin position="557"/>
        <end position="559"/>
    </location>
</feature>
<feature type="strand" evidence="70">
    <location>
        <begin position="564"/>
        <end position="574"/>
    </location>
</feature>
<feature type="strand" evidence="70">
    <location>
        <begin position="580"/>
        <end position="586"/>
    </location>
</feature>
<feature type="strand" evidence="70">
    <location>
        <begin position="589"/>
        <end position="592"/>
    </location>
</feature>
<feature type="strand" evidence="70">
    <location>
        <begin position="595"/>
        <end position="598"/>
    </location>
</feature>
<feature type="strand" evidence="70">
    <location>
        <begin position="602"/>
        <end position="605"/>
    </location>
</feature>
<feature type="helix" evidence="70">
    <location>
        <begin position="614"/>
        <end position="616"/>
    </location>
</feature>
<feature type="strand" evidence="70">
    <location>
        <begin position="619"/>
        <end position="625"/>
    </location>
</feature>
<feature type="strand" evidence="70">
    <location>
        <begin position="633"/>
        <end position="641"/>
    </location>
</feature>
<feature type="strand" evidence="70">
    <location>
        <begin position="646"/>
        <end position="655"/>
    </location>
</feature>
<feature type="strand" evidence="70">
    <location>
        <begin position="658"/>
        <end position="663"/>
    </location>
</feature>
<feature type="strand" evidence="70">
    <location>
        <begin position="665"/>
        <end position="668"/>
    </location>
</feature>
<feature type="strand" evidence="70">
    <location>
        <begin position="674"/>
        <end position="681"/>
    </location>
</feature>
<feature type="strand" evidence="70">
    <location>
        <begin position="688"/>
        <end position="692"/>
    </location>
</feature>
<feature type="strand" evidence="70">
    <location>
        <begin position="698"/>
        <end position="702"/>
    </location>
</feature>
<feature type="strand" evidence="70">
    <location>
        <begin position="704"/>
        <end position="710"/>
    </location>
</feature>
<feature type="strand" evidence="70">
    <location>
        <begin position="718"/>
        <end position="726"/>
    </location>
</feature>
<feature type="strand" evidence="70">
    <location>
        <begin position="729"/>
        <end position="739"/>
    </location>
</feature>
<feature type="helix" evidence="66">
    <location>
        <begin position="1048"/>
        <end position="1050"/>
    </location>
</feature>
<feature type="helix" evidence="64">
    <location>
        <begin position="1055"/>
        <end position="1057"/>
    </location>
</feature>
<feature type="helix" evidence="69">
    <location>
        <begin position="1060"/>
        <end position="1066"/>
    </location>
</feature>
<feature type="helix" evidence="69">
    <location>
        <begin position="1067"/>
        <end position="1069"/>
    </location>
</feature>
<feature type="helix" evidence="69">
    <location>
        <begin position="1073"/>
        <end position="1075"/>
    </location>
</feature>
<feature type="strand" evidence="69">
    <location>
        <begin position="1076"/>
        <end position="1087"/>
    </location>
</feature>
<feature type="strand" evidence="69">
    <location>
        <begin position="1090"/>
        <end position="1098"/>
    </location>
</feature>
<feature type="strand" evidence="66">
    <location>
        <begin position="1100"/>
        <end position="1102"/>
    </location>
</feature>
<feature type="strand" evidence="69">
    <location>
        <begin position="1104"/>
        <end position="1111"/>
    </location>
</feature>
<feature type="helix" evidence="69">
    <location>
        <begin position="1118"/>
        <end position="1132"/>
    </location>
</feature>
<feature type="strand" evidence="69">
    <location>
        <begin position="1144"/>
        <end position="1146"/>
    </location>
</feature>
<feature type="strand" evidence="64">
    <location>
        <begin position="1149"/>
        <end position="1151"/>
    </location>
</feature>
<feature type="strand" evidence="69">
    <location>
        <begin position="1154"/>
        <end position="1158"/>
    </location>
</feature>
<feature type="strand" evidence="75">
    <location>
        <begin position="1161"/>
        <end position="1163"/>
    </location>
</feature>
<feature type="helix" evidence="69">
    <location>
        <begin position="1165"/>
        <end position="1170"/>
    </location>
</feature>
<feature type="turn" evidence="65">
    <location>
        <begin position="1172"/>
        <end position="1174"/>
    </location>
</feature>
<feature type="helix" evidence="69">
    <location>
        <begin position="1178"/>
        <end position="1197"/>
    </location>
</feature>
<feature type="helix" evidence="69">
    <location>
        <begin position="1207"/>
        <end position="1209"/>
    </location>
</feature>
<feature type="strand" evidence="69">
    <location>
        <begin position="1210"/>
        <end position="1212"/>
    </location>
</feature>
<feature type="strand" evidence="69">
    <location>
        <begin position="1218"/>
        <end position="1220"/>
    </location>
</feature>
<feature type="helix" evidence="69">
    <location>
        <begin position="1224"/>
        <end position="1226"/>
    </location>
</feature>
<feature type="turn" evidence="73">
    <location>
        <begin position="1227"/>
        <end position="1230"/>
    </location>
</feature>
<feature type="helix" evidence="69">
    <location>
        <begin position="1232"/>
        <end position="1234"/>
    </location>
</feature>
<feature type="strand" evidence="74">
    <location>
        <begin position="1235"/>
        <end position="1237"/>
    </location>
</feature>
<feature type="turn" evidence="69">
    <location>
        <begin position="1239"/>
        <end position="1241"/>
    </location>
</feature>
<feature type="strand" evidence="74">
    <location>
        <begin position="1244"/>
        <end position="1246"/>
    </location>
</feature>
<feature type="helix" evidence="69">
    <location>
        <begin position="1247"/>
        <end position="1249"/>
    </location>
</feature>
<feature type="helix" evidence="69">
    <location>
        <begin position="1252"/>
        <end position="1257"/>
    </location>
</feature>
<feature type="helix" evidence="69">
    <location>
        <begin position="1262"/>
        <end position="1277"/>
    </location>
</feature>
<feature type="strand" evidence="66">
    <location>
        <begin position="1283"/>
        <end position="1287"/>
    </location>
</feature>
<feature type="helix" evidence="69">
    <location>
        <begin position="1289"/>
        <end position="1291"/>
    </location>
</feature>
<feature type="helix" evidence="69">
    <location>
        <begin position="1292"/>
        <end position="1297"/>
    </location>
</feature>
<feature type="helix" evidence="69">
    <location>
        <begin position="1310"/>
        <end position="1319"/>
    </location>
</feature>
<feature type="helix" evidence="69">
    <location>
        <begin position="1324"/>
        <end position="1326"/>
    </location>
</feature>
<feature type="helix" evidence="69">
    <location>
        <begin position="1330"/>
        <end position="1342"/>
    </location>
</feature>
<feature type="turn" evidence="61">
    <location>
        <begin position="1354"/>
        <end position="1358"/>
    </location>
</feature>
<organism>
    <name type="scientific">Homo sapiens</name>
    <name type="common">Human</name>
    <dbReference type="NCBI Taxonomy" id="9606"/>
    <lineage>
        <taxon>Eukaryota</taxon>
        <taxon>Metazoa</taxon>
        <taxon>Chordata</taxon>
        <taxon>Craniata</taxon>
        <taxon>Vertebrata</taxon>
        <taxon>Euteleostomi</taxon>
        <taxon>Mammalia</taxon>
        <taxon>Eutheria</taxon>
        <taxon>Euarchontoglires</taxon>
        <taxon>Primates</taxon>
        <taxon>Haplorrhini</taxon>
        <taxon>Catarrhini</taxon>
        <taxon>Hominidae</taxon>
        <taxon>Homo</taxon>
    </lineage>
</organism>
<comment type="function">
    <text evidence="1">Receptor tyrosine kinase that transduces signals from the extracellular matrix into the cytoplasm by binding to hepatocyte growth factor/HGF ligand. Regulates many physiological processes including proliferation, scattering, morphogenesis and survival. Ligand binding at the cell surface induces autophosphorylation of MET on its intracellular domain that provides docking sites for downstream signaling molecules. Following activation by ligand, interacts with the PI3-kinase subunit PIK3R1, PLCG1, SRC, GRB2, STAT3 or the adapter GAB1. Recruitment of these downstream effectors by MET leads to the activation of several signaling cascades including the RAS-ERK, PI3 kinase-AKT, or PLCgamma-PKC. The RAS-ERK activation is associated with the morphogenetic effects while PI3K/AKT coordinates prosurvival effects. During embryonic development, MET signaling plays a role in gastrulation, development and migration of neuronal precursors, angiogenesis and kidney formation. During skeletal muscle development, it is crucial for the migration of muscle progenitor cells and for the proliferation of secondary myoblasts (By similarity). In adults, participates in wound healing as well as organ regeneration and tissue remodeling. Also promotes differentiation and proliferation of hematopoietic cells. May regulate cortical bone osteogenesis (By similarity).</text>
</comment>
<comment type="function">
    <text evidence="12 51 52">(Microbial infection) Acts as a receptor for Listeria monocytogenes internalin InlB, mediating entry of the pathogen into cells.</text>
</comment>
<comment type="catalytic activity">
    <reaction evidence="5">
        <text>L-tyrosyl-[protein] + ATP = O-phospho-L-tyrosyl-[protein] + ADP + H(+)</text>
        <dbReference type="Rhea" id="RHEA:10596"/>
        <dbReference type="Rhea" id="RHEA-COMP:10136"/>
        <dbReference type="Rhea" id="RHEA-COMP:20101"/>
        <dbReference type="ChEBI" id="CHEBI:15378"/>
        <dbReference type="ChEBI" id="CHEBI:30616"/>
        <dbReference type="ChEBI" id="CHEBI:46858"/>
        <dbReference type="ChEBI" id="CHEBI:61978"/>
        <dbReference type="ChEBI" id="CHEBI:456216"/>
        <dbReference type="EC" id="2.7.10.1"/>
    </reaction>
</comment>
<comment type="activity regulation">
    <text>In its inactive state, the C-terminal tail interacts with the catalytic domain and inhibits the kinase activity. Upon ligand binding, the C-terminal tail is displaced and becomes phosphorylated, thus increasing the kinase activity.</text>
</comment>
<comment type="subunit">
    <text evidence="1 9 11 13 14 18 19 20 21 22 23 26 29 30 34 35 37 39 43 45">Heterodimer made of an alpha chain (50 kDa) and a beta chain (145 kDa) which are disulfide linked. Binds PLXNB1. Interacts when phosphorylated with downstream effectors including STAT3, PIK3R1, SRC, PCLG1, GRB2 and GAB1. Interacts with SPSB1, SPSB2 and SPSB4 (By similarity). Interacts with INPP5D/SHIP1. When phosphorylated at Tyr-1356, interacts with INPPL1/SHIP2. Interacts with RANBP9 and RANBP10, as well as SPSB1, SPSB2, SPSB3 and SPSB4. SPSB1 binding occurs in the presence and in the absence of HGF, however HGF treatment has a positive effect on this interaction. Interacts with MUC20; prevents interaction with GRB2 and suppresses hepatocyte growth factor-induced cell proliferation. Interacts with GRB10. Interacts with PTPN1 and PTPN2. Interacts with LECT2; this interaction may have an antagonistic effect on receptor activation (PubMed:27334921). Interacts with HSP90AA1 and HSP90AB1; the interaction suppresses MET kinase activity (PubMed:26517842). Interacts with tensin TNS3 (PubMed:24814316). Interacts (when phosphorylated) with tensin TNS4 (via SH2 domain); the interaction increases MET protein stability by inhibiting MET endocytosis and subsequent lysosomal degradation (PubMed:24814316).</text>
</comment>
<comment type="subunit">
    <text evidence="12 29 52">(Microbial infection) Interacts via extracytoplasmic residues 25-656 with L.monocytogenes InlB; MET can bind HGF, its endogenous ligand, and InlB simultaneously (PubMed:11081636, PubMed:17662939). InlB probably dimerizes upon binding to MET, which encourages subsequent dimerization of MET (Probable).</text>
</comment>
<comment type="interaction">
    <interactant intactId="EBI-1039152">
        <id>P08581</id>
    </interactant>
    <interactant intactId="EBI-518228">
        <id>P22681</id>
        <label>CBL</label>
    </interactant>
    <organismsDiffer>false</organismsDiffer>
    <experiments>15</experiments>
</comment>
<comment type="interaction">
    <interactant intactId="EBI-1039152">
        <id>P08581</id>
    </interactant>
    <interactant intactId="EBI-727477">
        <id>P12830</id>
        <label>CDH1</label>
    </interactant>
    <organismsDiffer>false</organismsDiffer>
    <experiments>2</experiments>
</comment>
<comment type="interaction">
    <interactant intactId="EBI-1039152">
        <id>P08581</id>
    </interactant>
    <interactant intactId="EBI-701927">
        <id>O60716</id>
        <label>CTNND1</label>
    </interactant>
    <organismsDiffer>false</organismsDiffer>
    <experiments>2</experiments>
</comment>
<comment type="interaction">
    <interactant intactId="EBI-1039152">
        <id>P08581</id>
    </interactant>
    <interactant intactId="EBI-356767">
        <id>Q96EY1</id>
        <label>DNAJA3</label>
    </interactant>
    <organismsDiffer>false</organismsDiffer>
    <experiments>4</experiments>
</comment>
<comment type="interaction">
    <interactant intactId="EBI-1039152">
        <id>P08581</id>
    </interactant>
    <interactant intactId="EBI-3952284">
        <id>Q96EY1-2</id>
        <label>DNAJA3</label>
    </interactant>
    <organismsDiffer>false</organismsDiffer>
    <experiments>2</experiments>
</comment>
<comment type="interaction">
    <interactant intactId="EBI-1039152">
        <id>P08581</id>
    </interactant>
    <interactant intactId="EBI-297353">
        <id>P00533</id>
        <label>EGFR</label>
    </interactant>
    <organismsDiffer>false</organismsDiffer>
    <experiments>8</experiments>
</comment>
<comment type="interaction">
    <interactant intactId="EBI-1039152">
        <id>P08581</id>
    </interactant>
    <interactant intactId="EBI-1383732">
        <id>P09769</id>
        <label>FGR</label>
    </interactant>
    <organismsDiffer>false</organismsDiffer>
    <experiments>2</experiments>
</comment>
<comment type="interaction">
    <interactant intactId="EBI-1039152">
        <id>P08581</id>
    </interactant>
    <interactant intactId="EBI-1039104">
        <id>P14210</id>
        <label>HGF</label>
    </interactant>
    <organismsDiffer>false</organismsDiffer>
    <experiments>7</experiments>
</comment>
<comment type="interaction">
    <interactant intactId="EBI-1039152">
        <id>P08581</id>
    </interactant>
    <interactant intactId="EBI-6280319">
        <id>P14210-6</id>
        <label>HGF</label>
    </interactant>
    <organismsDiffer>false</organismsDiffer>
    <experiments>3</experiments>
</comment>
<comment type="interaction">
    <interactant intactId="EBI-1039152">
        <id>P08581</id>
    </interactant>
    <interactant intactId="EBI-1384248">
        <id>O15357</id>
        <label>INPPL1</label>
    </interactant>
    <organismsDiffer>false</organismsDiffer>
    <experiments>2</experiments>
</comment>
<comment type="interaction">
    <interactant intactId="EBI-1039152">
        <id>P08581</id>
    </interactant>
    <interactant intactId="EBI-1005487">
        <id>P35968</id>
        <label>KDR</label>
    </interactant>
    <organismsDiffer>false</organismsDiffer>
    <experiments>3</experiments>
</comment>
<comment type="interaction">
    <interactant intactId="EBI-1039152">
        <id>P08581</id>
    </interactant>
    <interactant intactId="EBI-1348">
        <id>P06239</id>
        <label>LCK</label>
    </interactant>
    <organismsDiffer>false</organismsDiffer>
    <experiments>3</experiments>
</comment>
<comment type="interaction">
    <interactant intactId="EBI-1039152">
        <id>P08581</id>
    </interactant>
    <interactant intactId="EBI-79452">
        <id>P07948</id>
        <label>LYN</label>
    </interactant>
    <organismsDiffer>false</organismsDiffer>
    <experiments>2</experiments>
</comment>
<comment type="interaction">
    <interactant intactId="EBI-1039152">
        <id>P08581</id>
    </interactant>
    <interactant intactId="EBI-1039152">
        <id>P08581</id>
        <label>MET</label>
    </interactant>
    <organismsDiffer>false</organismsDiffer>
    <experiments>2</experiments>
</comment>
<comment type="interaction">
    <interactant intactId="EBI-1039152">
        <id>P08581</id>
    </interactant>
    <interactant intactId="EBI-2829677">
        <id>P41218</id>
        <label>MNDA</label>
    </interactant>
    <organismsDiffer>false</organismsDiffer>
    <experiments>3</experiments>
</comment>
<comment type="interaction">
    <interactant intactId="EBI-1039152">
        <id>P08581</id>
    </interactant>
    <interactant intactId="EBI-2804728">
        <id>P15941</id>
        <label>MUC1</label>
    </interactant>
    <organismsDiffer>false</organismsDiffer>
    <experiments>2</experiments>
</comment>
<comment type="interaction">
    <interactant intactId="EBI-1039152">
        <id>P08581</id>
    </interactant>
    <interactant intactId="EBI-389883">
        <id>P16333</id>
        <label>NCK1</label>
    </interactant>
    <organismsDiffer>false</organismsDiffer>
    <experiments>2</experiments>
</comment>
<comment type="interaction">
    <interactant intactId="EBI-1039152">
        <id>P08581</id>
    </interactant>
    <interactant intactId="EBI-713635">
        <id>O43639</id>
        <label>NCK2</label>
    </interactant>
    <organismsDiffer>false</organismsDiffer>
    <experiments>2</experiments>
</comment>
<comment type="interaction">
    <interactant intactId="EBI-1039152">
        <id>P08581</id>
    </interactant>
    <interactant intactId="EBI-3936704">
        <id>Q16288</id>
        <label>NTRK3</label>
    </interactant>
    <organismsDiffer>false</organismsDiffer>
    <experiments>2</experiments>
</comment>
<comment type="interaction">
    <interactant intactId="EBI-1039152">
        <id>P08581</id>
    </interactant>
    <interactant intactId="EBI-79464">
        <id>P27986</id>
        <label>PIK3R1</label>
    </interactant>
    <organismsDiffer>false</organismsDiffer>
    <experiments>6</experiments>
</comment>
<comment type="interaction">
    <interactant intactId="EBI-1039152">
        <id>P08581</id>
    </interactant>
    <interactant intactId="EBI-346930">
        <id>O00459</id>
        <label>PIK3R2</label>
    </interactant>
    <organismsDiffer>false</organismsDiffer>
    <experiments>11</experiments>
</comment>
<comment type="interaction">
    <interactant intactId="EBI-1039152">
        <id>P08581</id>
    </interactant>
    <interactant intactId="EBI-79893">
        <id>Q92569</id>
        <label>PIK3R3</label>
    </interactant>
    <organismsDiffer>false</organismsDiffer>
    <experiments>11</experiments>
</comment>
<comment type="interaction">
    <interactant intactId="EBI-1039152">
        <id>P08581</id>
    </interactant>
    <interactant intactId="EBI-79387">
        <id>P19174</id>
        <label>PLCG1</label>
    </interactant>
    <organismsDiffer>false</organismsDiffer>
    <experiments>10</experiments>
</comment>
<comment type="interaction">
    <interactant intactId="EBI-1039152">
        <id>P08581</id>
    </interactant>
    <interactant intactId="EBI-1111488">
        <id>O43157</id>
        <label>PLXNB1</label>
    </interactant>
    <organismsDiffer>false</organismsDiffer>
    <experiments>7</experiments>
</comment>
<comment type="interaction">
    <interactant intactId="EBI-1039152">
        <id>P08581</id>
    </interactant>
    <interactant intactId="EBI-722004">
        <id>O15031</id>
        <label>PLXNB2</label>
    </interactant>
    <organismsDiffer>false</organismsDiffer>
    <experiments>2</experiments>
</comment>
<comment type="interaction">
    <interactant intactId="EBI-1039152">
        <id>P08581</id>
    </interactant>
    <interactant intactId="EBI-311073">
        <id>Q9ULL4</id>
        <label>PLXNB3</label>
    </interactant>
    <organismsDiffer>false</organismsDiffer>
    <experiments>2</experiments>
</comment>
<comment type="interaction">
    <interactant intactId="EBI-1039152">
        <id>P08581</id>
    </interactant>
    <interactant intactId="EBI-1046542">
        <id>Q8TCU6</id>
        <label>PREX1</label>
    </interactant>
    <organismsDiffer>false</organismsDiffer>
    <experiments>2</experiments>
</comment>
<comment type="interaction">
    <interactant intactId="EBI-1039152">
        <id>P08581</id>
    </interactant>
    <interactant intactId="EBI-968788">
        <id>P18031</id>
        <label>PTPN1</label>
    </interactant>
    <organismsDiffer>false</organismsDiffer>
    <experiments>3</experiments>
</comment>
<comment type="interaction">
    <interactant intactId="EBI-1039152">
        <id>P08581</id>
    </interactant>
    <interactant intactId="EBI-297779">
        <id>Q06124</id>
        <label>PTPN11</label>
    </interactant>
    <organismsDiffer>false</organismsDiffer>
    <experiments>13</experiments>
</comment>
<comment type="interaction">
    <interactant intactId="EBI-1039152">
        <id>P08581</id>
    </interactant>
    <interactant intactId="EBI-1265766">
        <id>P23467</id>
        <label>PTPRB</label>
    </interactant>
    <organismsDiffer>false</organismsDiffer>
    <experiments>2</experiments>
</comment>
<comment type="interaction">
    <interactant intactId="EBI-1039152">
        <id>P08581</id>
    </interactant>
    <interactant intactId="EBI-2264500">
        <id>Q12913</id>
        <label>PTPRJ</label>
    </interactant>
    <organismsDiffer>false</organismsDiffer>
    <experiments>5</experiments>
</comment>
<comment type="interaction">
    <interactant intactId="EBI-1039152">
        <id>P08581</id>
    </interactant>
    <interactant intactId="EBI-723739">
        <id>Q16827</id>
        <label>PTPRO</label>
    </interactant>
    <organismsDiffer>false</organismsDiffer>
    <experiments>2</experiments>
</comment>
<comment type="interaction">
    <interactant intactId="EBI-1039152">
        <id>P08581</id>
    </interactant>
    <interactant intactId="EBI-1026476">
        <id>P20936</id>
        <label>RASA1</label>
    </interactant>
    <organismsDiffer>false</organismsDiffer>
    <experiments>15</experiments>
</comment>
<comment type="interaction">
    <interactant intactId="EBI-1039152">
        <id>P08581</id>
    </interactant>
    <interactant intactId="EBI-7879749">
        <id>Q9UQQ2</id>
        <label>SH2B3</label>
    </interactant>
    <organismsDiffer>false</organismsDiffer>
    <experiments>2</experiments>
</comment>
<comment type="interaction">
    <interactant intactId="EBI-1039152">
        <id>P08581</id>
    </interactant>
    <interactant intactId="EBI-6983382">
        <id>O60880</id>
        <label>SH2D1A</label>
    </interactant>
    <organismsDiffer>false</organismsDiffer>
    <experiments>3</experiments>
</comment>
<comment type="interaction">
    <interactant intactId="EBI-1039152">
        <id>P08581</id>
    </interactant>
    <interactant intactId="EBI-3923013">
        <id>O14796</id>
        <label>SH2D1B</label>
    </interactant>
    <organismsDiffer>false</organismsDiffer>
    <experiments>6</experiments>
</comment>
<comment type="interaction">
    <interactant intactId="EBI-1039152">
        <id>P08581</id>
    </interactant>
    <interactant intactId="EBI-490630">
        <id>Q9NP31</id>
        <label>SH2D2A</label>
    </interactant>
    <organismsDiffer>false</organismsDiffer>
    <experiments>7</experiments>
</comment>
<comment type="interaction">
    <interactant intactId="EBI-1039152">
        <id>P08581</id>
    </interactant>
    <interactant intactId="EBI-745980">
        <id>Q8N5H7</id>
        <label>SH2D3C</label>
    </interactant>
    <organismsDiffer>false</organismsDiffer>
    <experiments>4</experiments>
</comment>
<comment type="interaction">
    <interactant intactId="EBI-1039152">
        <id>P08581</id>
    </interactant>
    <interactant intactId="EBI-4402156">
        <id>Q15464</id>
        <label>SHB</label>
    </interactant>
    <organismsDiffer>false</organismsDiffer>
    <experiments>4</experiments>
</comment>
<comment type="interaction">
    <interactant intactId="EBI-1039152">
        <id>P08581</id>
    </interactant>
    <interactant intactId="EBI-78835">
        <id>P29353</id>
        <label>SHC1</label>
    </interactant>
    <organismsDiffer>false</organismsDiffer>
    <experiments>5</experiments>
</comment>
<comment type="interaction">
    <interactant intactId="EBI-1039152">
        <id>P08581</id>
    </interactant>
    <interactant intactId="EBI-7256023">
        <id>P98077</id>
        <label>SHC2</label>
    </interactant>
    <organismsDiffer>false</organismsDiffer>
    <experiments>2</experiments>
</comment>
<comment type="interaction">
    <interactant intactId="EBI-1039152">
        <id>P08581</id>
    </interactant>
    <interactant intactId="EBI-9453524">
        <id>Q6S5L8</id>
        <label>SHC4</label>
    </interactant>
    <organismsDiffer>false</organismsDiffer>
    <experiments>3</experiments>
</comment>
<comment type="interaction">
    <interactant intactId="EBI-1039152">
        <id>P08581</id>
    </interactant>
    <interactant intactId="EBI-4402781">
        <id>Q96IW2</id>
        <label>SHD</label>
    </interactant>
    <organismsDiffer>false</organismsDiffer>
    <experiments>2</experiments>
</comment>
<comment type="interaction">
    <interactant intactId="EBI-1039152">
        <id>P08581</id>
    </interactant>
    <interactant intactId="EBI-1222854">
        <id>Q9H6Q3</id>
        <label>SLA2</label>
    </interactant>
    <organismsDiffer>false</organismsDiffer>
    <experiments>4</experiments>
</comment>
<comment type="interaction">
    <interactant intactId="EBI-1039152">
        <id>P08581</id>
    </interactant>
    <interactant intactId="EBI-970130">
        <id>O75159</id>
        <label>SOCS5</label>
    </interactant>
    <organismsDiffer>false</organismsDiffer>
    <experiments>2</experiments>
</comment>
<comment type="interaction">
    <interactant intactId="EBI-1039152">
        <id>P08581</id>
    </interactant>
    <interactant intactId="EBI-3929549">
        <id>O14544</id>
        <label>SOCS6</label>
    </interactant>
    <organismsDiffer>false</organismsDiffer>
    <experiments>4</experiments>
</comment>
<comment type="interaction">
    <interactant intactId="EBI-1039152">
        <id>P08581</id>
    </interactant>
    <interactant intactId="EBI-621482">
        <id>P12931</id>
        <label>SRC</label>
    </interactant>
    <organismsDiffer>false</organismsDiffer>
    <experiments>7</experiments>
</comment>
<comment type="interaction">
    <interactant intactId="EBI-1039152">
        <id>P08581</id>
    </interactant>
    <interactant intactId="EBI-6083058">
        <id>Q9ULZ2</id>
        <label>STAP1</label>
    </interactant>
    <organismsDiffer>false</organismsDiffer>
    <experiments>3</experiments>
</comment>
<comment type="interaction">
    <interactant intactId="EBI-1039152">
        <id>P08581</id>
    </interactant>
    <interactant intactId="EBI-78302">
        <id>P43405</id>
        <label>SYK</label>
    </interactant>
    <organismsDiffer>false</organismsDiffer>
    <experiments>3</experiments>
</comment>
<comment type="interaction">
    <interactant intactId="EBI-1039152">
        <id>P08581</id>
    </interactant>
    <interactant intactId="EBI-1383480">
        <id>P42680</id>
        <label>TEC</label>
    </interactant>
    <organismsDiffer>false</organismsDiffer>
    <experiments>2</experiments>
</comment>
<comment type="interaction">
    <interactant intactId="EBI-1039152">
        <id>P08581</id>
    </interactant>
    <interactant intactId="EBI-3389814">
        <id>Q9HBL0</id>
        <label>TNS1</label>
    </interactant>
    <organismsDiffer>false</organismsDiffer>
    <experiments>2</experiments>
</comment>
<comment type="interaction">
    <interactant intactId="EBI-1039152">
        <id>P08581</id>
    </interactant>
    <interactant intactId="EBI-949753">
        <id>Q63HR2</id>
        <label>TNS2</label>
    </interactant>
    <organismsDiffer>false</organismsDiffer>
    <experiments>2</experiments>
</comment>
<comment type="interaction">
    <interactant intactId="EBI-1039152">
        <id>P08581</id>
    </interactant>
    <interactant intactId="EBI-1220488">
        <id>Q68CZ2</id>
        <label>TNS3</label>
    </interactant>
    <organismsDiffer>false</organismsDiffer>
    <experiments>3</experiments>
</comment>
<comment type="interaction">
    <interactant intactId="EBI-1039152">
        <id>P08581</id>
    </interactant>
    <interactant intactId="EBI-297568">
        <id>Q9UKW4</id>
        <label>VAV3</label>
    </interactant>
    <organismsDiffer>false</organismsDiffer>
    <experiments>2</experiments>
</comment>
<comment type="interaction">
    <interactant intactId="EBI-1039152">
        <id>P08581</id>
    </interactant>
    <interactant intactId="EBI-515331">
        <id>P07947</id>
        <label>YES1</label>
    </interactant>
    <organismsDiffer>false</organismsDiffer>
    <experiments>3</experiments>
</comment>
<comment type="interaction">
    <interactant intactId="EBI-1039152">
        <id>P08581</id>
    </interactant>
    <interactant intactId="EBI-1211276">
        <id>P43403</id>
        <label>ZAP70</label>
    </interactant>
    <organismsDiffer>false</organismsDiffer>
    <experiments>2</experiments>
</comment>
<comment type="interaction">
    <interactant intactId="EBI-1039152">
        <id>P08581</id>
    </interactant>
    <interactant intactId="EBI-15655650">
        <id>Q08048</id>
        <label>Hgf</label>
    </interactant>
    <organismsDiffer>true</organismsDiffer>
    <experiments>3</experiments>
</comment>
<comment type="interaction">
    <interactant intactId="EBI-1039152">
        <id>P08581</id>
    </interactant>
    <interactant intactId="EBI-1379295">
        <id>P0DQD2</id>
        <label>inlB</label>
    </interactant>
    <organismsDiffer>true</organismsDiffer>
    <experiments>4</experiments>
</comment>
<comment type="interaction">
    <interactant intactId="EBI-1039152">
        <id>P08581</id>
    </interactant>
    <interactant intactId="EBI-1555005">
        <id>P35918</id>
        <label>Kdr</label>
    </interactant>
    <organismsDiffer>true</organismsDiffer>
    <experiments>3</experiments>
</comment>
<comment type="interaction">
    <interactant intactId="EBI-1039152">
        <id>P08581</id>
    </interactant>
    <interactant intactId="EBI-2896409">
        <id>Q00944</id>
        <label>PTK2</label>
    </interactant>
    <organismsDiffer>true</organismsDiffer>
    <experiments>5</experiments>
</comment>
<comment type="subcellular location">
    <subcellularLocation>
        <location>Membrane</location>
        <topology>Single-pass type I membrane protein</topology>
    </subcellularLocation>
</comment>
<comment type="subcellular location">
    <molecule>Isoform 3</molecule>
    <subcellularLocation>
        <location>Secreted</location>
    </subcellularLocation>
</comment>
<comment type="alternative products">
    <event type="alternative splicing"/>
    <isoform>
        <id>P08581-1</id>
        <name>1</name>
        <sequence type="displayed"/>
    </isoform>
    <isoform>
        <id>P08581-2</id>
        <name>2</name>
        <sequence type="described" ref="VSP_005005"/>
    </isoform>
    <isoform>
        <id>P08581-3</id>
        <name>3</name>
        <name>Soluble MET variant 4</name>
        <sequence type="described" ref="VSP_042447 VSP_042448"/>
    </isoform>
    <text>Additional soluble isoforms seem to exist.</text>
</comment>
<comment type="tissue specificity">
    <text evidence="27 31 38">Expressed in normal hepatocytes as well as in epithelial cells lining the stomach, the small and the large intestine. Found also in basal keratinocytes of esophagus and skin. High levels are found in liver, gastrointestinal tract, thyroid and kidney. Also present in the brain. Expressed in metaphyseal bone (at protein level) (PubMed:26637977).</text>
</comment>
<comment type="domain">
    <text>The kinase domain is involved in SPSB1 binding.</text>
</comment>
<comment type="domain">
    <text>The beta-propeller Sema domain mediates binding to HGF.</text>
</comment>
<comment type="PTM">
    <text evidence="16 23 24 30 43">Autophosphorylated in response to ligand binding on Tyr-1234 and Tyr-1235 in the kinase domain leading to further phosphorylation of Tyr-1349 and Tyr-1356 in the C-terminal multifunctional docking site. Dephosphorylated by PTPRJ at Tyr-1349 and Tyr-1365. Dephosphorylated by PTPN1 and PTPN2.</text>
</comment>
<comment type="PTM">
    <text evidence="15 53">Ubiquitinated. Ubiquitination by CBL regulates MET endocytosis, resulting in decreasing plasma membrane receptor abundance, and in endosomal degradation and/or recycling of internalized receptors.</text>
</comment>
<comment type="PTM">
    <text evidence="42">O-mannosylation of IPT/TIG domains by TMEM260 is required for protein maturation (PubMed:37186866). O-mannosylated residues are composed of single mannose glycans that are not elongated or modified (PubMed:37186866).</text>
</comment>
<comment type="PTM">
    <text evidence="12">(Microbial infection) Tyrosine phosphorylation is stimulated by L.monocytogenes InlB. Tyrosine phosphorylation is maximal 10-20 minutes after treatment with InlB and disappears by 60 minutes. The phosphorylated residues were not identified.</text>
</comment>
<comment type="disease">
    <text>Activation of MET after rearrangement with the TPR gene produces an oncogenic protein.</text>
</comment>
<comment type="disease">
    <text>Defects in MET may be associated with gastric cancer.</text>
</comment>
<comment type="disease" evidence="47">
    <disease id="DI-01708">
        <name>Hepatocellular carcinoma</name>
        <acronym>HCC</acronym>
        <description>A primary malignant neoplasm of epithelial liver cells. The major risk factors for HCC are chronic hepatitis B virus (HBV) infection, chronic hepatitis C virus (HCV) infection, prolonged dietary aflatoxin exposure, alcoholic cirrhosis, and cirrhosis due to other causes.</description>
        <dbReference type="MIM" id="114550"/>
    </disease>
    <text>The disease is caused by variants affecting the gene represented in this entry.</text>
</comment>
<comment type="disease" evidence="6 7 8 44 46">
    <disease id="DI-01732">
        <name>Renal cell carcinoma papillary</name>
        <acronym>RCCP</acronym>
        <description>A subtype of renal cell carcinoma tending to show a tubulo-papillary architecture formed by numerous, irregular, finger-like projections of connective tissue. Renal cell carcinoma is a heterogeneous group of sporadic or hereditary carcinoma derived from cells of the proximal renal tubular epithelium.</description>
        <dbReference type="MIM" id="605074"/>
    </disease>
    <text>The disease is caused by variants affecting the gene represented in this entry.</text>
</comment>
<comment type="disease">
    <text>A common allele in the promoter region of the MET shows genetic association with susceptibility to autism in some families. Functional assays indicate a decrease in MET promoter activity and altered binding of specific transcription factor complexes.</text>
</comment>
<comment type="disease">
    <text evidence="33">MET activating mutations may be involved in the development of a highly malignant, metastatic syndrome known as cancer of unknown primary origin (CUP) or primary occult malignancy. Systemic neoplastic spread is generally a late event in cancer progression. However, in some instances, distant dissemination arises at a very early stage, so that metastases reach clinical relevance before primary lesions. Sometimes, the primary lesions cannot be identified in spite of the progresses in the diagnosis of malignancies.</text>
</comment>
<comment type="disease" evidence="36">
    <disease id="DI-04599">
        <name>Deafness, autosomal recessive, 97</name>
        <acronym>DFNB97</acronym>
        <description>A form of non-syndromic sensorineural hearing loss with prelingual onset. Sensorineural deafness results from damage to the neural receptors of the inner ear, the nerve pathways to the brain, or the area of the brain that receives sound information.</description>
        <dbReference type="MIM" id="616705"/>
    </disease>
    <text>The disease is caused by variants affecting the gene represented in this entry.</text>
</comment>
<comment type="disease" evidence="38">
    <disease id="DI-04712">
        <name>Osteofibrous dysplasia</name>
        <acronym>OSFD</acronym>
        <description>A congenital disorder of osteogenesis characterized by non-neoplastic, radiolucent lesions that affect the cortical bone immediately under the periosteum. It usually manifests as a painless swelling or anterior bowing of the long bones, most commonly the tibia and fibula.</description>
        <dbReference type="MIM" id="607278"/>
    </disease>
    <text evidence="38">Disease susceptibility is associated with variants affecting the gene represented in this entry. Disease-associated variants identified in 4 families cause the deletion of exon 14. This results in the exclusion of an ubiquitination target site within the cytoplasmic domain, hence in protein stabilization. The persistent presence of MET at the cell surface in conditions of ligand-dependent activation retards osteoblastic differentiation.</text>
</comment>
<comment type="disease" evidence="41">
    <disease id="DI-06491">
        <name>Arthrogryposis, distal, 11</name>
        <acronym>DA11</acronym>
        <description>A form of distal arthrogryposis, a disease characterized by congenital joint contractures that mainly involve two or more distal parts of the limbs, in the absence of a primary neurological or muscle disease. DA11 is an autosomal dominant form characterized mainly by camptodactyly. Other features include absent flexion creases and limited forearm supination.</description>
        <dbReference type="MIM" id="620019"/>
    </disease>
    <text>The disease may be caused by variants affecting the gene represented in this entry.</text>
</comment>
<comment type="similarity">
    <text evidence="3">Belongs to the protein kinase superfamily. Tyr protein kinase family.</text>
</comment>
<comment type="online information" name="Atlas of Genetics and Cytogenetics in Oncology and Haematology">
    <link uri="https://atlasgeneticsoncology.org/gene/131/MET"/>
</comment>
<comment type="online information" name="Wikipedia">
    <link uri="https://en.wikipedia.org/wiki/C-MET"/>
    <text>C-MET entry</text>
</comment>
<gene>
    <name type="primary">MET</name>
</gene>
<sequence>MKAPAVLAPGILVLLFTLVQRSNGECKEALAKSEMNVNMKYQLPNFTAETPIQNVILHEHHIFLGATNYIYVLNEEDLQKVAEYKTGPVLEHPDCFPCQDCSSKANLSGGVWKDNINMALVVDTYYDDQLISCGSVNRGTCQRHVFPHNHTADIQSEVHCIFSPQIEEPSQCPDCVVSALGAKVLSSVKDRFINFFVGNTINSSYFPDHPLHSISVRRLKETKDGFMFLTDQSYIDVLPEFRDSYPIKYVHAFESNNFIYFLTVQRETLDAQTFHTRIIRFCSINSGLHSYMEMPLECILTEKRKKRSTKKEVFNILQAAYVSKPGAQLARQIGASLNDDILFGVFAQSKPDSAEPMDRSAMCAFPIKYVNDFFNKIVNKNNVRCLQHFYGPNHEHCFNRTLLRNSSGCEARRDEYRTEFTTALQRVDLFMGQFSEVLLTSISTFIKGDLTIANLGTSEGRFMQVVVSRSGPSTPHVNFLLDSHPVSPEVIVEHTLNQNGYTLVITGKKITKIPLNGLGCRHFQSCSQCLSAPPFVQCGWCHDKCVRSEECLSGTWTQQICLPAIYKVFPNSAPLEGGTRLTICGWDFGFRRNNKFDLKKTRVLLGNESCTLTLSESTMNTLKCTVGPAMNKHFNMSIIISNGHGTTQYSTFSYVDPVITSISPKYGPMAGGTLLTLTGNYLNSGNSRHISIGGKTCTLKSVSNSILECYTPAQTISTEFAVKLKIDLANRETSIFSYREDPIVYEIHPTKSFISGGSTITGVGKNLNSVSVPRMVINVHEAGRNFTVACQHRSNSEIICCTTPSLQQLNLQLPLKTKAFFMLDGILSKYFDLIYVHNPVFKPFEKPVMISMGNENVLEIKGNDIDPEAVKGEVLKVGNKSCENIHLHSEAVLCTVPNDLLKLNSELNIEWKQAISSTVLGKVIVQPDQNFTGLIAGVVSISTALLLLLGFFLWLKKRKQIKDLGSELVRYDARVHTPHLDRLVSARSVSPTTEMVSNESVDYRATFPEDQFPNSSQNGSCRQVQYPLTDMSPILTSGDSDISSPLLQNTVHIDLSALNPELVQAVQHVVIGPSSLIVHFNEVIGRGHFGCVYHGTLLDNDGKKIHCAVKSLNRITDIGEVSQFLTEGIIMKDFSHPNVLSLLGICLRSEGSPLVVLPYMKHGDLRNFIRNETHNPTVKDLIGFGLQVAKGMKYLASKKFVHRDLAARNCMLDEKFTVKVADFGLARDMYDKEYYSVHNKTGAKLPVKWMALESLQTQKFTTKSDVWSFGVLLWELMTRGAPPYPDVNTFDITVYLLQGRRLLQPEYCPDPLYEVMLKCWHPKAEMRPSFSELVSRISAIFSTFIGEHYVHVNATYVNVKCVAPYPSLLSSEDNADDEVDTRPASFWETS</sequence>
<evidence type="ECO:0000250" key="1">
    <source>
        <dbReference type="UniProtKB" id="P16056"/>
    </source>
</evidence>
<evidence type="ECO:0000255" key="2"/>
<evidence type="ECO:0000255" key="3">
    <source>
        <dbReference type="PROSITE-ProRule" id="PRU00159"/>
    </source>
</evidence>
<evidence type="ECO:0000255" key="4">
    <source>
        <dbReference type="PROSITE-ProRule" id="PRU00352"/>
    </source>
</evidence>
<evidence type="ECO:0000255" key="5">
    <source>
        <dbReference type="PROSITE-ProRule" id="PRU10028"/>
    </source>
</evidence>
<evidence type="ECO:0000269" key="6">
    <source>
    </source>
</evidence>
<evidence type="ECO:0000269" key="7">
    <source>
    </source>
</evidence>
<evidence type="ECO:0000269" key="8">
    <source>
    </source>
</evidence>
<evidence type="ECO:0000269" key="9">
    <source>
    </source>
</evidence>
<evidence type="ECO:0000269" key="10">
    <source>
    </source>
</evidence>
<evidence type="ECO:0000269" key="11">
    <source>
    </source>
</evidence>
<evidence type="ECO:0000269" key="12">
    <source>
    </source>
</evidence>
<evidence type="ECO:0000269" key="13">
    <source>
    </source>
</evidence>
<evidence type="ECO:0000269" key="14">
    <source>
    </source>
</evidence>
<evidence type="ECO:0000269" key="15">
    <source>
    </source>
</evidence>
<evidence type="ECO:0000269" key="16">
    <source>
    </source>
</evidence>
<evidence type="ECO:0000269" key="17">
    <source>
    </source>
</evidence>
<evidence type="ECO:0000269" key="18">
    <source>
    </source>
</evidence>
<evidence type="ECO:0000269" key="19">
    <source>
    </source>
</evidence>
<evidence type="ECO:0000269" key="20">
    <source>
    </source>
</evidence>
<evidence type="ECO:0000269" key="21">
    <source>
    </source>
</evidence>
<evidence type="ECO:0000269" key="22">
    <source>
    </source>
</evidence>
<evidence type="ECO:0000269" key="23">
    <source>
    </source>
</evidence>
<evidence type="ECO:0000269" key="24">
    <source>
    </source>
</evidence>
<evidence type="ECO:0000269" key="25">
    <source>
    </source>
</evidence>
<evidence type="ECO:0000269" key="26">
    <source>
    </source>
</evidence>
<evidence type="ECO:0000269" key="27">
    <source>
    </source>
</evidence>
<evidence type="ECO:0000269" key="28">
    <source>
    </source>
</evidence>
<evidence type="ECO:0000269" key="29">
    <source>
    </source>
</evidence>
<evidence type="ECO:0000269" key="30">
    <source>
    </source>
</evidence>
<evidence type="ECO:0000269" key="31">
    <source>
    </source>
</evidence>
<evidence type="ECO:0000269" key="32">
    <source>
    </source>
</evidence>
<evidence type="ECO:0000269" key="33">
    <source>
    </source>
</evidence>
<evidence type="ECO:0000269" key="34">
    <source>
    </source>
</evidence>
<evidence type="ECO:0000269" key="35">
    <source>
    </source>
</evidence>
<evidence type="ECO:0000269" key="36">
    <source>
    </source>
</evidence>
<evidence type="ECO:0000269" key="37">
    <source>
    </source>
</evidence>
<evidence type="ECO:0000269" key="38">
    <source>
    </source>
</evidence>
<evidence type="ECO:0000269" key="39">
    <source>
    </source>
</evidence>
<evidence type="ECO:0000269" key="40">
    <source>
    </source>
</evidence>
<evidence type="ECO:0000269" key="41">
    <source>
    </source>
</evidence>
<evidence type="ECO:0000269" key="42">
    <source>
    </source>
</evidence>
<evidence type="ECO:0000269" key="43">
    <source>
    </source>
</evidence>
<evidence type="ECO:0000269" key="44">
    <source>
    </source>
</evidence>
<evidence type="ECO:0000269" key="45">
    <source>
    </source>
</evidence>
<evidence type="ECO:0000269" key="46">
    <source>
    </source>
</evidence>
<evidence type="ECO:0000269" key="47">
    <source>
    </source>
</evidence>
<evidence type="ECO:0000303" key="48">
    <source>
    </source>
</evidence>
<evidence type="ECO:0000303" key="49">
    <source>
    </source>
</evidence>
<evidence type="ECO:0000305" key="50"/>
<evidence type="ECO:0000305" key="51">
    <source>
    </source>
</evidence>
<evidence type="ECO:0000305" key="52">
    <source>
    </source>
</evidence>
<evidence type="ECO:0000305" key="53">
    <source>
    </source>
</evidence>
<evidence type="ECO:0007744" key="54">
    <source>
        <dbReference type="PDB" id="2UZX"/>
    </source>
</evidence>
<evidence type="ECO:0007744" key="55">
    <source>
        <dbReference type="PDB" id="2UZY"/>
    </source>
</evidence>
<evidence type="ECO:0007744" key="56">
    <source>
    </source>
</evidence>
<evidence type="ECO:0007744" key="57">
    <source>
    </source>
</evidence>
<evidence type="ECO:0007744" key="58">
    <source>
    </source>
</evidence>
<evidence type="ECO:0007744" key="59">
    <source>
    </source>
</evidence>
<evidence type="ECO:0007744" key="60">
    <source>
    </source>
</evidence>
<evidence type="ECO:0007829" key="61">
    <source>
        <dbReference type="PDB" id="1R0P"/>
    </source>
</evidence>
<evidence type="ECO:0007829" key="62">
    <source>
        <dbReference type="PDB" id="1SHY"/>
    </source>
</evidence>
<evidence type="ECO:0007829" key="63">
    <source>
        <dbReference type="PDB" id="2UZX"/>
    </source>
</evidence>
<evidence type="ECO:0007829" key="64">
    <source>
        <dbReference type="PDB" id="3F66"/>
    </source>
</evidence>
<evidence type="ECO:0007829" key="65">
    <source>
        <dbReference type="PDB" id="3ZCL"/>
    </source>
</evidence>
<evidence type="ECO:0007829" key="66">
    <source>
        <dbReference type="PDB" id="4EEV"/>
    </source>
</evidence>
<evidence type="ECO:0007829" key="67">
    <source>
        <dbReference type="PDB" id="4K3J"/>
    </source>
</evidence>
<evidence type="ECO:0007829" key="68">
    <source>
        <dbReference type="PDB" id="4O3T"/>
    </source>
</evidence>
<evidence type="ECO:0007829" key="69">
    <source>
        <dbReference type="PDB" id="4R1V"/>
    </source>
</evidence>
<evidence type="ECO:0007829" key="70">
    <source>
        <dbReference type="PDB" id="5LSP"/>
    </source>
</evidence>
<evidence type="ECO:0007829" key="71">
    <source>
        <dbReference type="PDB" id="6I04"/>
    </source>
</evidence>
<evidence type="ECO:0007829" key="72">
    <source>
        <dbReference type="PDB" id="6WVZ"/>
    </source>
</evidence>
<evidence type="ECO:0007829" key="73">
    <source>
        <dbReference type="PDB" id="7B43"/>
    </source>
</evidence>
<evidence type="ECO:0007829" key="74">
    <source>
        <dbReference type="PDB" id="7Y4T"/>
    </source>
</evidence>
<evidence type="ECO:0007829" key="75">
    <source>
        <dbReference type="PDB" id="8AN8"/>
    </source>
</evidence>
<keyword id="KW-0002">3D-structure</keyword>
<keyword id="KW-0025">Alternative splicing</keyword>
<keyword id="KW-0067">ATP-binding</keyword>
<keyword id="KW-0160">Chromosomal rearrangement</keyword>
<keyword id="KW-0209">Deafness</keyword>
<keyword id="KW-0225">Disease variant</keyword>
<keyword id="KW-1015">Disulfide bond</keyword>
<keyword id="KW-0325">Glycoprotein</keyword>
<keyword id="KW-0418">Kinase</keyword>
<keyword id="KW-0472">Membrane</keyword>
<keyword id="KW-1010">Non-syndromic deafness</keyword>
<keyword id="KW-0547">Nucleotide-binding</keyword>
<keyword id="KW-0597">Phosphoprotein</keyword>
<keyword id="KW-1267">Proteomics identification</keyword>
<keyword id="KW-0656">Proto-oncogene</keyword>
<keyword id="KW-0675">Receptor</keyword>
<keyword id="KW-1185">Reference proteome</keyword>
<keyword id="KW-0677">Repeat</keyword>
<keyword id="KW-0964">Secreted</keyword>
<keyword id="KW-0732">Signal</keyword>
<keyword id="KW-0808">Transferase</keyword>
<keyword id="KW-0812">Transmembrane</keyword>
<keyword id="KW-1133">Transmembrane helix</keyword>
<keyword id="KW-0829">Tyrosine-protein kinase</keyword>
<keyword id="KW-0832">Ubl conjugation</keyword>
<accession>P08581</accession>
<accession>A1L467</accession>
<accession>B5A932</accession>
<accession>E7EQ94</accession>
<accession>O60366</accession>
<accession>Q12875</accession>
<accession>Q9UDX7</accession>
<accession>Q9UPL8</accession>
<dbReference type="EC" id="2.7.10.1"/>
<dbReference type="EMBL" id="J02958">
    <property type="protein sequence ID" value="AAA59591.1"/>
    <property type="molecule type" value="mRNA"/>
</dbReference>
<dbReference type="EMBL" id="X54559">
    <property type="protein sequence ID" value="CAB56793.1"/>
    <property type="molecule type" value="mRNA"/>
</dbReference>
<dbReference type="EMBL" id="EU826570">
    <property type="protein sequence ID" value="ACF47606.1"/>
    <property type="molecule type" value="mRNA"/>
</dbReference>
<dbReference type="EMBL" id="AC002080">
    <property type="protein sequence ID" value="AAB54047.1"/>
    <property type="molecule type" value="Genomic_DNA"/>
</dbReference>
<dbReference type="EMBL" id="AC002543">
    <property type="protein sequence ID" value="AAC60383.1"/>
    <property type="molecule type" value="Genomic_DNA"/>
</dbReference>
<dbReference type="EMBL" id="AC004416">
    <property type="protein sequence ID" value="AAF66137.2"/>
    <property type="molecule type" value="Genomic_DNA"/>
</dbReference>
<dbReference type="EMBL" id="CH236947">
    <property type="protein sequence ID" value="EAL24359.1"/>
    <property type="molecule type" value="Genomic_DNA"/>
</dbReference>
<dbReference type="EMBL" id="CH471070">
    <property type="protein sequence ID" value="EAW83509.1"/>
    <property type="molecule type" value="Genomic_DNA"/>
</dbReference>
<dbReference type="EMBL" id="BC130420">
    <property type="protein sequence ID" value="AAI30421.1"/>
    <property type="molecule type" value="mRNA"/>
</dbReference>
<dbReference type="EMBL" id="U08818">
    <property type="protein sequence ID" value="AAB60323.1"/>
    <property type="status" value="ALT_SEQ"/>
    <property type="molecule type" value="mRNA"/>
</dbReference>
<dbReference type="EMBL" id="M35074">
    <property type="protein sequence ID" value="AAA59590.1"/>
    <property type="molecule type" value="mRNA"/>
</dbReference>
<dbReference type="CCDS" id="CCDS43636.1">
    <molecule id="P08581-1"/>
</dbReference>
<dbReference type="CCDS" id="CCDS47689.1">
    <molecule id="P08581-2"/>
</dbReference>
<dbReference type="PIR" id="A40175">
    <property type="entry name" value="TVHUME"/>
</dbReference>
<dbReference type="RefSeq" id="NP_000236.2">
    <molecule id="P08581-1"/>
    <property type="nucleotide sequence ID" value="NM_000245.3"/>
</dbReference>
<dbReference type="RefSeq" id="NP_001120972.1">
    <molecule id="P08581-2"/>
    <property type="nucleotide sequence ID" value="NM_001127500.3"/>
</dbReference>
<dbReference type="PDB" id="1FYR">
    <property type="method" value="X-ray"/>
    <property type="resolution" value="2.40 A"/>
    <property type="chains" value="I/J/K/L=1356-1359"/>
</dbReference>
<dbReference type="PDB" id="1R0P">
    <property type="method" value="X-ray"/>
    <property type="resolution" value="1.80 A"/>
    <property type="chains" value="A=1049-1360"/>
</dbReference>
<dbReference type="PDB" id="1R1W">
    <property type="method" value="X-ray"/>
    <property type="resolution" value="1.80 A"/>
    <property type="chains" value="A=1049-1360"/>
</dbReference>
<dbReference type="PDB" id="1SHY">
    <property type="method" value="X-ray"/>
    <property type="resolution" value="3.22 A"/>
    <property type="chains" value="B=25-567"/>
</dbReference>
<dbReference type="PDB" id="1SSL">
    <property type="method" value="NMR"/>
    <property type="chains" value="A=519-562"/>
</dbReference>
<dbReference type="PDB" id="2G15">
    <property type="method" value="X-ray"/>
    <property type="resolution" value="2.15 A"/>
    <property type="chains" value="A=1038-1346"/>
</dbReference>
<dbReference type="PDB" id="2RFN">
    <property type="method" value="X-ray"/>
    <property type="resolution" value="2.50 A"/>
    <property type="chains" value="A/B=1048-1351"/>
</dbReference>
<dbReference type="PDB" id="2RFS">
    <property type="method" value="X-ray"/>
    <property type="resolution" value="2.20 A"/>
    <property type="chains" value="A=1048-1351"/>
</dbReference>
<dbReference type="PDB" id="2UZX">
    <property type="method" value="X-ray"/>
    <property type="resolution" value="2.80 A"/>
    <property type="chains" value="B/D=25-740"/>
</dbReference>
<dbReference type="PDB" id="2UZY">
    <property type="method" value="X-ray"/>
    <property type="resolution" value="4.00 A"/>
    <property type="chains" value="B/D=25-740"/>
</dbReference>
<dbReference type="PDB" id="2WD1">
    <property type="method" value="X-ray"/>
    <property type="resolution" value="2.00 A"/>
    <property type="chains" value="A=1055-1346"/>
</dbReference>
<dbReference type="PDB" id="2WGJ">
    <property type="method" value="X-ray"/>
    <property type="resolution" value="2.00 A"/>
    <property type="chains" value="A=1051-1348"/>
</dbReference>
<dbReference type="PDB" id="2WKM">
    <property type="method" value="X-ray"/>
    <property type="resolution" value="2.20 A"/>
    <property type="chains" value="A=1051-1348"/>
</dbReference>
<dbReference type="PDB" id="3A4P">
    <property type="method" value="X-ray"/>
    <property type="resolution" value="2.54 A"/>
    <property type="chains" value="A=1049-1360"/>
</dbReference>
<dbReference type="PDB" id="3BUX">
    <property type="method" value="X-ray"/>
    <property type="resolution" value="1.35 A"/>
    <property type="chains" value="A/C=997-1009"/>
</dbReference>
<dbReference type="PDB" id="3C1X">
    <property type="method" value="X-ray"/>
    <property type="resolution" value="2.17 A"/>
    <property type="chains" value="A=1049-1360"/>
</dbReference>
<dbReference type="PDB" id="3CCN">
    <property type="method" value="X-ray"/>
    <property type="resolution" value="1.90 A"/>
    <property type="chains" value="A=1048-1350"/>
</dbReference>
<dbReference type="PDB" id="3CD8">
    <property type="method" value="X-ray"/>
    <property type="resolution" value="2.00 A"/>
    <property type="chains" value="A=1048-1350"/>
</dbReference>
<dbReference type="PDB" id="3CE3">
    <property type="method" value="X-ray"/>
    <property type="resolution" value="2.40 A"/>
    <property type="chains" value="A=1049-1360"/>
</dbReference>
<dbReference type="PDB" id="3CTH">
    <property type="method" value="X-ray"/>
    <property type="resolution" value="2.30 A"/>
    <property type="chains" value="A=1049-1360"/>
</dbReference>
<dbReference type="PDB" id="3CTJ">
    <property type="method" value="X-ray"/>
    <property type="resolution" value="2.50 A"/>
    <property type="chains" value="A=1049-1360"/>
</dbReference>
<dbReference type="PDB" id="3DKC">
    <property type="method" value="X-ray"/>
    <property type="resolution" value="1.52 A"/>
    <property type="chains" value="A=1049-1360"/>
</dbReference>
<dbReference type="PDB" id="3DKF">
    <property type="method" value="X-ray"/>
    <property type="resolution" value="1.80 A"/>
    <property type="chains" value="A=1049-1360"/>
</dbReference>
<dbReference type="PDB" id="3DKG">
    <property type="method" value="X-ray"/>
    <property type="resolution" value="1.91 A"/>
    <property type="chains" value="A=1049-1360"/>
</dbReference>
<dbReference type="PDB" id="3EFJ">
    <property type="method" value="X-ray"/>
    <property type="resolution" value="2.60 A"/>
    <property type="chains" value="A/B=1048-1351"/>
</dbReference>
<dbReference type="PDB" id="3EFK">
    <property type="method" value="X-ray"/>
    <property type="resolution" value="2.20 A"/>
    <property type="chains" value="A/B=1048-1351"/>
</dbReference>
<dbReference type="PDB" id="3F66">
    <property type="method" value="X-ray"/>
    <property type="resolution" value="1.40 A"/>
    <property type="chains" value="A/B=1052-1349"/>
</dbReference>
<dbReference type="PDB" id="3F82">
    <property type="method" value="X-ray"/>
    <property type="resolution" value="2.50 A"/>
    <property type="chains" value="A=1049-1360"/>
</dbReference>
<dbReference type="PDB" id="3I5N">
    <property type="method" value="X-ray"/>
    <property type="resolution" value="2.00 A"/>
    <property type="chains" value="A=1048-1350"/>
</dbReference>
<dbReference type="PDB" id="3L8V">
    <property type="method" value="X-ray"/>
    <property type="resolution" value="2.40 A"/>
    <property type="chains" value="A=1049-1360"/>
</dbReference>
<dbReference type="PDB" id="3LQ8">
    <property type="method" value="X-ray"/>
    <property type="resolution" value="2.02 A"/>
    <property type="chains" value="A=1051-1348"/>
</dbReference>
<dbReference type="PDB" id="3Q6U">
    <property type="method" value="X-ray"/>
    <property type="resolution" value="1.60 A"/>
    <property type="chains" value="A=1048-1348"/>
</dbReference>
<dbReference type="PDB" id="3Q6W">
    <property type="method" value="X-ray"/>
    <property type="resolution" value="1.75 A"/>
    <property type="chains" value="A=1048-1348"/>
</dbReference>
<dbReference type="PDB" id="3QTI">
    <property type="method" value="X-ray"/>
    <property type="resolution" value="2.00 A"/>
    <property type="chains" value="A/B=1050-1360"/>
</dbReference>
<dbReference type="PDB" id="3R7O">
    <property type="method" value="X-ray"/>
    <property type="resolution" value="2.30 A"/>
    <property type="chains" value="A=1048-1348"/>
</dbReference>
<dbReference type="PDB" id="3RHK">
    <property type="method" value="X-ray"/>
    <property type="resolution" value="1.94 A"/>
    <property type="chains" value="A/B=1038-1346"/>
</dbReference>
<dbReference type="PDB" id="3U6H">
    <property type="method" value="X-ray"/>
    <property type="resolution" value="2.00 A"/>
    <property type="chains" value="A=1048-1351"/>
</dbReference>
<dbReference type="PDB" id="3U6I">
    <property type="method" value="X-ray"/>
    <property type="resolution" value="2.10 A"/>
    <property type="chains" value="A=1048-1351"/>
</dbReference>
<dbReference type="PDB" id="3VW8">
    <property type="method" value="X-ray"/>
    <property type="resolution" value="2.10 A"/>
    <property type="chains" value="A=1024-1352"/>
</dbReference>
<dbReference type="PDB" id="3ZBX">
    <property type="method" value="X-ray"/>
    <property type="resolution" value="2.20 A"/>
    <property type="chains" value="A=1051-1348"/>
</dbReference>
<dbReference type="PDB" id="3ZC5">
    <property type="method" value="X-ray"/>
    <property type="resolution" value="2.20 A"/>
    <property type="chains" value="A=1051-1348"/>
</dbReference>
<dbReference type="PDB" id="3ZCL">
    <property type="method" value="X-ray"/>
    <property type="resolution" value="1.40 A"/>
    <property type="chains" value="A=1051-1348"/>
</dbReference>
<dbReference type="PDB" id="3ZXZ">
    <property type="method" value="X-ray"/>
    <property type="resolution" value="1.80 A"/>
    <property type="chains" value="A=1051-1348"/>
</dbReference>
<dbReference type="PDB" id="3ZZE">
    <property type="method" value="X-ray"/>
    <property type="resolution" value="1.87 A"/>
    <property type="chains" value="A=1051-1348"/>
</dbReference>
<dbReference type="PDB" id="4AOI">
    <property type="method" value="X-ray"/>
    <property type="resolution" value="1.90 A"/>
    <property type="chains" value="A=1051-1348"/>
</dbReference>
<dbReference type="PDB" id="4AP7">
    <property type="method" value="X-ray"/>
    <property type="resolution" value="1.80 A"/>
    <property type="chains" value="A=1051-1348"/>
</dbReference>
<dbReference type="PDB" id="4DEG">
    <property type="method" value="X-ray"/>
    <property type="resolution" value="2.00 A"/>
    <property type="chains" value="A=1048-1351"/>
</dbReference>
<dbReference type="PDB" id="4DEH">
    <property type="method" value="X-ray"/>
    <property type="resolution" value="2.00 A"/>
    <property type="chains" value="A=1048-1351"/>
</dbReference>
<dbReference type="PDB" id="4DEI">
    <property type="method" value="X-ray"/>
    <property type="resolution" value="2.05 A"/>
    <property type="chains" value="A=1048-1351"/>
</dbReference>
<dbReference type="PDB" id="4EEV">
    <property type="method" value="X-ray"/>
    <property type="resolution" value="1.80 A"/>
    <property type="chains" value="A=1038-1346"/>
</dbReference>
<dbReference type="PDB" id="4GG5">
    <property type="method" value="X-ray"/>
    <property type="resolution" value="2.42 A"/>
    <property type="chains" value="A=1038-1346"/>
</dbReference>
<dbReference type="PDB" id="4GG7">
    <property type="method" value="X-ray"/>
    <property type="resolution" value="2.27 A"/>
    <property type="chains" value="A=1038-1346"/>
</dbReference>
<dbReference type="PDB" id="4IWD">
    <property type="method" value="X-ray"/>
    <property type="resolution" value="1.99 A"/>
    <property type="chains" value="A=1048-1348"/>
</dbReference>
<dbReference type="PDB" id="4K3J">
    <property type="method" value="X-ray"/>
    <property type="resolution" value="2.80 A"/>
    <property type="chains" value="B=39-564"/>
</dbReference>
<dbReference type="PDB" id="4KNB">
    <property type="method" value="X-ray"/>
    <property type="resolution" value="2.40 A"/>
    <property type="chains" value="A/B/C/D=1060-1346"/>
</dbReference>
<dbReference type="PDB" id="4MXC">
    <property type="method" value="X-ray"/>
    <property type="resolution" value="1.63 A"/>
    <property type="chains" value="A=1038-1346"/>
</dbReference>
<dbReference type="PDB" id="4O3T">
    <property type="method" value="X-ray"/>
    <property type="resolution" value="2.99 A"/>
    <property type="chains" value="B=25-567"/>
</dbReference>
<dbReference type="PDB" id="4O3U">
    <property type="method" value="X-ray"/>
    <property type="resolution" value="3.04 A"/>
    <property type="chains" value="B=25-567"/>
</dbReference>
<dbReference type="PDB" id="4R1V">
    <property type="method" value="X-ray"/>
    <property type="resolution" value="1.20 A"/>
    <property type="chains" value="A=1055-1345"/>
</dbReference>
<dbReference type="PDB" id="4R1Y">
    <property type="method" value="X-ray"/>
    <property type="resolution" value="2.00 A"/>
    <property type="chains" value="A=1055-1346"/>
</dbReference>
<dbReference type="PDB" id="4XMO">
    <property type="method" value="X-ray"/>
    <property type="resolution" value="1.75 A"/>
    <property type="chains" value="A=1048-1350"/>
</dbReference>
<dbReference type="PDB" id="4XYF">
    <property type="method" value="X-ray"/>
    <property type="resolution" value="1.85 A"/>
    <property type="chains" value="A=1048-1351"/>
</dbReference>
<dbReference type="PDB" id="5DG5">
    <property type="method" value="X-ray"/>
    <property type="resolution" value="2.60 A"/>
    <property type="chains" value="A/B=1038-1346"/>
</dbReference>
<dbReference type="PDB" id="5EOB">
    <property type="method" value="X-ray"/>
    <property type="resolution" value="1.75 A"/>
    <property type="chains" value="A=1038-1346"/>
</dbReference>
<dbReference type="PDB" id="5EYC">
    <property type="method" value="X-ray"/>
    <property type="resolution" value="1.80 A"/>
    <property type="chains" value="A=1048-1351"/>
</dbReference>
<dbReference type="PDB" id="5EYD">
    <property type="method" value="X-ray"/>
    <property type="resolution" value="1.85 A"/>
    <property type="chains" value="A=1048-1351"/>
</dbReference>
<dbReference type="PDB" id="5HLW">
    <property type="method" value="X-ray"/>
    <property type="resolution" value="1.97 A"/>
    <property type="chains" value="A=1057-1355"/>
</dbReference>
<dbReference type="PDB" id="5HNI">
    <property type="method" value="X-ray"/>
    <property type="resolution" value="1.71 A"/>
    <property type="chains" value="X/Y=1049-1360"/>
</dbReference>
<dbReference type="PDB" id="5HO6">
    <property type="method" value="X-ray"/>
    <property type="resolution" value="1.97 A"/>
    <property type="chains" value="A=1049-1360"/>
</dbReference>
<dbReference type="PDB" id="5HOA">
    <property type="method" value="X-ray"/>
    <property type="resolution" value="2.14 A"/>
    <property type="chains" value="A=1049-1360"/>
</dbReference>
<dbReference type="PDB" id="5HOR">
    <property type="method" value="X-ray"/>
    <property type="resolution" value="2.20 A"/>
    <property type="chains" value="A=1049-1360"/>
</dbReference>
<dbReference type="PDB" id="5HTI">
    <property type="method" value="X-ray"/>
    <property type="resolution" value="1.66 A"/>
    <property type="chains" value="A=1038-1346"/>
</dbReference>
<dbReference type="PDB" id="5LSP">
    <property type="method" value="X-ray"/>
    <property type="resolution" value="2.60 A"/>
    <property type="chains" value="A/P=519-743, X/Y=25-35"/>
</dbReference>
<dbReference type="PDB" id="5T3Q">
    <property type="method" value="X-ray"/>
    <property type="resolution" value="2.00 A"/>
    <property type="chains" value="A=1048-1350"/>
</dbReference>
<dbReference type="PDB" id="5UAB">
    <property type="method" value="X-ray"/>
    <property type="resolution" value="1.90 A"/>
    <property type="chains" value="A=1023-1360"/>
</dbReference>
<dbReference type="PDB" id="5UAD">
    <property type="method" value="X-ray"/>
    <property type="resolution" value="2.25 A"/>
    <property type="chains" value="A=1023-1360"/>
</dbReference>
<dbReference type="PDB" id="5YA5">
    <property type="method" value="X-ray"/>
    <property type="resolution" value="1.89 A"/>
    <property type="chains" value="A=1038-1346"/>
</dbReference>
<dbReference type="PDB" id="6GCU">
    <property type="method" value="X-ray"/>
    <property type="resolution" value="6.00 A"/>
    <property type="chains" value="A/D=25-741"/>
</dbReference>
<dbReference type="PDB" id="6I04">
    <property type="method" value="X-ray"/>
    <property type="resolution" value="3.10 A"/>
    <property type="chains" value="A/B=25-564"/>
</dbReference>
<dbReference type="PDB" id="6SD9">
    <property type="method" value="X-ray"/>
    <property type="resolution" value="2.35 A"/>
    <property type="chains" value="A=1038-1346"/>
</dbReference>
<dbReference type="PDB" id="6SDC">
    <property type="method" value="X-ray"/>
    <property type="resolution" value="1.67 A"/>
    <property type="chains" value="A=1038-1346"/>
</dbReference>
<dbReference type="PDB" id="6SDD">
    <property type="method" value="X-ray"/>
    <property type="resolution" value="1.93 A"/>
    <property type="chains" value="A=1038-1346"/>
</dbReference>
<dbReference type="PDB" id="6SDE">
    <property type="method" value="X-ray"/>
    <property type="resolution" value="2.49 A"/>
    <property type="chains" value="A=1038-1346"/>
</dbReference>
<dbReference type="PDB" id="6UBW">
    <property type="method" value="X-ray"/>
    <property type="resolution" value="2.00 A"/>
    <property type="chains" value="A=1023-1360"/>
</dbReference>
<dbReference type="PDB" id="6WVZ">
    <property type="method" value="X-ray"/>
    <property type="resolution" value="3.10 A"/>
    <property type="chains" value="M=39-564"/>
</dbReference>
<dbReference type="PDB" id="7B3Q">
    <property type="method" value="X-ray"/>
    <property type="resolution" value="1.75 A"/>
    <property type="chains" value="A=1049-1346"/>
</dbReference>
<dbReference type="PDB" id="7B3T">
    <property type="method" value="X-ray"/>
    <property type="resolution" value="2.23 A"/>
    <property type="chains" value="A=1049-1346"/>
</dbReference>
<dbReference type="PDB" id="7B3V">
    <property type="method" value="X-ray"/>
    <property type="resolution" value="1.93 A"/>
    <property type="chains" value="A=1049-1346"/>
</dbReference>
<dbReference type="PDB" id="7B3W">
    <property type="method" value="X-ray"/>
    <property type="resolution" value="2.02 A"/>
    <property type="chains" value="A=1049-1346"/>
</dbReference>
<dbReference type="PDB" id="7B3Z">
    <property type="method" value="X-ray"/>
    <property type="resolution" value="1.80 A"/>
    <property type="chains" value="A=1049-1346"/>
</dbReference>
<dbReference type="PDB" id="7B40">
    <property type="method" value="X-ray"/>
    <property type="resolution" value="1.76 A"/>
    <property type="chains" value="A=1049-1346"/>
</dbReference>
<dbReference type="PDB" id="7B41">
    <property type="method" value="X-ray"/>
    <property type="resolution" value="1.97 A"/>
    <property type="chains" value="A=1049-1346"/>
</dbReference>
<dbReference type="PDB" id="7B42">
    <property type="method" value="X-ray"/>
    <property type="resolution" value="1.80 A"/>
    <property type="chains" value="A=1049-1346"/>
</dbReference>
<dbReference type="PDB" id="7B43">
    <property type="method" value="X-ray"/>
    <property type="resolution" value="1.87 A"/>
    <property type="chains" value="A/B=1049-1346"/>
</dbReference>
<dbReference type="PDB" id="7B44">
    <property type="method" value="X-ray"/>
    <property type="resolution" value="1.76 A"/>
    <property type="chains" value="A=1049-1346"/>
</dbReference>
<dbReference type="PDB" id="7MO7">
    <property type="method" value="EM"/>
    <property type="resolution" value="4.80 A"/>
    <property type="chains" value="B/E=1-1390"/>
</dbReference>
<dbReference type="PDB" id="7MO8">
    <property type="method" value="EM"/>
    <property type="resolution" value="4.50 A"/>
    <property type="chains" value="B=1-1390"/>
</dbReference>
<dbReference type="PDB" id="7MO9">
    <property type="method" value="EM"/>
    <property type="resolution" value="4.00 A"/>
    <property type="chains" value="E=1-1390"/>
</dbReference>
<dbReference type="PDB" id="7MOA">
    <property type="method" value="EM"/>
    <property type="resolution" value="4.90 A"/>
    <property type="chains" value="E=1-1390"/>
</dbReference>
<dbReference type="PDB" id="7MOB">
    <property type="method" value="EM"/>
    <property type="resolution" value="5.00 A"/>
    <property type="chains" value="C/D=1-1390"/>
</dbReference>
<dbReference type="PDB" id="7V3R">
    <property type="method" value="X-ray"/>
    <property type="resolution" value="1.70 A"/>
    <property type="chains" value="A=1038-1346"/>
</dbReference>
<dbReference type="PDB" id="7V3S">
    <property type="method" value="X-ray"/>
    <property type="resolution" value="1.90 A"/>
    <property type="chains" value="A=1038-1346"/>
</dbReference>
<dbReference type="PDB" id="7Y4T">
    <property type="method" value="X-ray"/>
    <property type="resolution" value="2.16 A"/>
    <property type="chains" value="A=1038-1346"/>
</dbReference>
<dbReference type="PDB" id="7Y4U">
    <property type="method" value="X-ray"/>
    <property type="resolution" value="2.26 A"/>
    <property type="chains" value="A=1038-1346"/>
</dbReference>
<dbReference type="PDB" id="8AN8">
    <property type="method" value="X-ray"/>
    <property type="resolution" value="2.39 A"/>
    <property type="chains" value="A/B=1052-1346"/>
</dbReference>
<dbReference type="PDB" id="8ANS">
    <property type="method" value="X-ray"/>
    <property type="resolution" value="2.01 A"/>
    <property type="chains" value="A=1052-1346"/>
</dbReference>
<dbReference type="PDB" id="8AU3">
    <property type="method" value="X-ray"/>
    <property type="resolution" value="2.26 A"/>
    <property type="chains" value="A/B=1051-1349"/>
</dbReference>
<dbReference type="PDB" id="8AU5">
    <property type="method" value="X-ray"/>
    <property type="resolution" value="2.72 A"/>
    <property type="chains" value="A=1051-1349"/>
</dbReference>
<dbReference type="PDB" id="8AW1">
    <property type="method" value="X-ray"/>
    <property type="resolution" value="2.14 A"/>
    <property type="chains" value="A/B=1051-1349"/>
</dbReference>
<dbReference type="PDB" id="8GVJ">
    <property type="method" value="X-ray"/>
    <property type="resolution" value="2.71 A"/>
    <property type="chains" value="A=1038-1346"/>
</dbReference>
<dbReference type="PDB" id="8K78">
    <property type="method" value="X-ray"/>
    <property type="resolution" value="2.67 A"/>
    <property type="chains" value="A=1038-1346"/>
</dbReference>
<dbReference type="PDB" id="8OUU">
    <property type="method" value="X-ray"/>
    <property type="resolution" value="1.77 A"/>
    <property type="chains" value="A/B=1038-1346"/>
</dbReference>
<dbReference type="PDB" id="8OUV">
    <property type="method" value="X-ray"/>
    <property type="resolution" value="1.78 A"/>
    <property type="chains" value="A/B=1038-1346"/>
</dbReference>
<dbReference type="PDB" id="8OV7">
    <property type="method" value="X-ray"/>
    <property type="resolution" value="1.95 A"/>
    <property type="chains" value="A=1038-1346"/>
</dbReference>
<dbReference type="PDB" id="8OVZ">
    <property type="method" value="X-ray"/>
    <property type="resolution" value="2.21 A"/>
    <property type="chains" value="A/B=1038-1346"/>
</dbReference>
<dbReference type="PDB" id="8OW3">
    <property type="method" value="X-ray"/>
    <property type="resolution" value="2.27 A"/>
    <property type="chains" value="A=1038-1346"/>
</dbReference>
<dbReference type="PDB" id="8OWG">
    <property type="method" value="X-ray"/>
    <property type="resolution" value="2.63 A"/>
    <property type="chains" value="A/B/C=1038-1346"/>
</dbReference>
<dbReference type="PDB" id="9C1R">
    <property type="method" value="X-ray"/>
    <property type="resolution" value="1.59 A"/>
    <property type="chains" value="A=1047-1348"/>
</dbReference>
<dbReference type="PDB" id="9IVB">
    <property type="method" value="X-ray"/>
    <property type="resolution" value="2.35 A"/>
    <property type="chains" value="A/B=1038-1346"/>
</dbReference>
<dbReference type="PDBsum" id="1FYR"/>
<dbReference type="PDBsum" id="1R0P"/>
<dbReference type="PDBsum" id="1R1W"/>
<dbReference type="PDBsum" id="1SHY"/>
<dbReference type="PDBsum" id="1SSL"/>
<dbReference type="PDBsum" id="2G15"/>
<dbReference type="PDBsum" id="2RFN"/>
<dbReference type="PDBsum" id="2RFS"/>
<dbReference type="PDBsum" id="2UZX"/>
<dbReference type="PDBsum" id="2UZY"/>
<dbReference type="PDBsum" id="2WD1"/>
<dbReference type="PDBsum" id="2WGJ"/>
<dbReference type="PDBsum" id="2WKM"/>
<dbReference type="PDBsum" id="3A4P"/>
<dbReference type="PDBsum" id="3BUX"/>
<dbReference type="PDBsum" id="3C1X"/>
<dbReference type="PDBsum" id="3CCN"/>
<dbReference type="PDBsum" id="3CD8"/>
<dbReference type="PDBsum" id="3CE3"/>
<dbReference type="PDBsum" id="3CTH"/>
<dbReference type="PDBsum" id="3CTJ"/>
<dbReference type="PDBsum" id="3DKC"/>
<dbReference type="PDBsum" id="3DKF"/>
<dbReference type="PDBsum" id="3DKG"/>
<dbReference type="PDBsum" id="3EFJ"/>
<dbReference type="PDBsum" id="3EFK"/>
<dbReference type="PDBsum" id="3F66"/>
<dbReference type="PDBsum" id="3F82"/>
<dbReference type="PDBsum" id="3I5N"/>
<dbReference type="PDBsum" id="3L8V"/>
<dbReference type="PDBsum" id="3LQ8"/>
<dbReference type="PDBsum" id="3Q6U"/>
<dbReference type="PDBsum" id="3Q6W"/>
<dbReference type="PDBsum" id="3QTI"/>
<dbReference type="PDBsum" id="3R7O"/>
<dbReference type="PDBsum" id="3RHK"/>
<dbReference type="PDBsum" id="3U6H"/>
<dbReference type="PDBsum" id="3U6I"/>
<dbReference type="PDBsum" id="3VW8"/>
<dbReference type="PDBsum" id="3ZBX"/>
<dbReference type="PDBsum" id="3ZC5"/>
<dbReference type="PDBsum" id="3ZCL"/>
<dbReference type="PDBsum" id="3ZXZ"/>
<dbReference type="PDBsum" id="3ZZE"/>
<dbReference type="PDBsum" id="4AOI"/>
<dbReference type="PDBsum" id="4AP7"/>
<dbReference type="PDBsum" id="4DEG"/>
<dbReference type="PDBsum" id="4DEH"/>
<dbReference type="PDBsum" id="4DEI"/>
<dbReference type="PDBsum" id="4EEV"/>
<dbReference type="PDBsum" id="4GG5"/>
<dbReference type="PDBsum" id="4GG7"/>
<dbReference type="PDBsum" id="4IWD"/>
<dbReference type="PDBsum" id="4K3J"/>
<dbReference type="PDBsum" id="4KNB"/>
<dbReference type="PDBsum" id="4MXC"/>
<dbReference type="PDBsum" id="4O3T"/>
<dbReference type="PDBsum" id="4O3U"/>
<dbReference type="PDBsum" id="4R1V"/>
<dbReference type="PDBsum" id="4R1Y"/>
<dbReference type="PDBsum" id="4XMO"/>
<dbReference type="PDBsum" id="4XYF"/>
<dbReference type="PDBsum" id="5DG5"/>
<dbReference type="PDBsum" id="5EOB"/>
<dbReference type="PDBsum" id="5EYC"/>
<dbReference type="PDBsum" id="5EYD"/>
<dbReference type="PDBsum" id="5HLW"/>
<dbReference type="PDBsum" id="5HNI"/>
<dbReference type="PDBsum" id="5HO6"/>
<dbReference type="PDBsum" id="5HOA"/>
<dbReference type="PDBsum" id="5HOR"/>
<dbReference type="PDBsum" id="5HTI"/>
<dbReference type="PDBsum" id="5LSP"/>
<dbReference type="PDBsum" id="5T3Q"/>
<dbReference type="PDBsum" id="5UAB"/>
<dbReference type="PDBsum" id="5UAD"/>
<dbReference type="PDBsum" id="5YA5"/>
<dbReference type="PDBsum" id="6GCU"/>
<dbReference type="PDBsum" id="6I04"/>
<dbReference type="PDBsum" id="6SD9"/>
<dbReference type="PDBsum" id="6SDC"/>
<dbReference type="PDBsum" id="6SDD"/>
<dbReference type="PDBsum" id="6SDE"/>
<dbReference type="PDBsum" id="6UBW"/>
<dbReference type="PDBsum" id="6WVZ"/>
<dbReference type="PDBsum" id="7B3Q"/>
<dbReference type="PDBsum" id="7B3T"/>
<dbReference type="PDBsum" id="7B3V"/>
<dbReference type="PDBsum" id="7B3W"/>
<dbReference type="PDBsum" id="7B3Z"/>
<dbReference type="PDBsum" id="7B40"/>
<dbReference type="PDBsum" id="7B41"/>
<dbReference type="PDBsum" id="7B42"/>
<dbReference type="PDBsum" id="7B43"/>
<dbReference type="PDBsum" id="7B44"/>
<dbReference type="PDBsum" id="7MO7"/>
<dbReference type="PDBsum" id="7MO8"/>
<dbReference type="PDBsum" id="7MO9"/>
<dbReference type="PDBsum" id="7MOA"/>
<dbReference type="PDBsum" id="7MOB"/>
<dbReference type="PDBsum" id="7V3R"/>
<dbReference type="PDBsum" id="7V3S"/>
<dbReference type="PDBsum" id="7Y4T"/>
<dbReference type="PDBsum" id="7Y4U"/>
<dbReference type="PDBsum" id="8AN8"/>
<dbReference type="PDBsum" id="8ANS"/>
<dbReference type="PDBsum" id="8AU3"/>
<dbReference type="PDBsum" id="8AU5"/>
<dbReference type="PDBsum" id="8AW1"/>
<dbReference type="PDBsum" id="8GVJ"/>
<dbReference type="PDBsum" id="8K78"/>
<dbReference type="PDBsum" id="8OUU"/>
<dbReference type="PDBsum" id="8OUV"/>
<dbReference type="PDBsum" id="8OV7"/>
<dbReference type="PDBsum" id="8OVZ"/>
<dbReference type="PDBsum" id="8OW3"/>
<dbReference type="PDBsum" id="8OWG"/>
<dbReference type="PDBsum" id="9C1R"/>
<dbReference type="PDBsum" id="9IVB"/>
<dbReference type="EMDB" id="EMD-23919"/>
<dbReference type="EMDB" id="EMD-23920"/>
<dbReference type="EMDB" id="EMD-23921"/>
<dbReference type="EMDB" id="EMD-23922"/>
<dbReference type="EMDB" id="EMD-23923"/>
<dbReference type="SASBDB" id="P08581"/>
<dbReference type="SMR" id="P08581"/>
<dbReference type="BioGRID" id="110391">
    <property type="interactions" value="275"/>
</dbReference>
<dbReference type="CORUM" id="P08581"/>
<dbReference type="DIP" id="DIP-6023N"/>
<dbReference type="ELM" id="P08581"/>
<dbReference type="FunCoup" id="P08581">
    <property type="interactions" value="1057"/>
</dbReference>
<dbReference type="IntAct" id="P08581">
    <property type="interactions" value="191"/>
</dbReference>
<dbReference type="MINT" id="P08581"/>
<dbReference type="STRING" id="9606.ENSP00000317272"/>
<dbReference type="BindingDB" id="P08581"/>
<dbReference type="ChEMBL" id="CHEMBL3717"/>
<dbReference type="DrugBank" id="DB06896">
    <property type="generic name" value="1-(4-fluorophenyl)-N-[3-fluoro-4-(1H-pyrrolo[2,3-b]pyridin-4-yloxy)phenyl]-2-oxo-1,2-dihydropyridine-3-carboxamide"/>
</dbReference>
<dbReference type="DrugBank" id="DB08791">
    <property type="generic name" value="1-[(2-NITROPHENYL)SULFONYL]-1H-PYRROLO[3,2-B]PYRIDINE-6-CARBOXAMIDE"/>
</dbReference>
<dbReference type="DrugBank" id="DB06997">
    <property type="generic name" value="2-(4-fluorophenyl)-N-{[3-fluoro-4-(1H-pyrrolo[2,3-b]pyridin-4-yloxy)phenyl]carbamoyl}acetamide"/>
</dbReference>
<dbReference type="DrugBank" id="DB07969">
    <property type="generic name" value="3-[3-(4-methylpiperazin-1-yl)-7-(trifluoromethyl)quinoxalin-5-yl]phenol"/>
</dbReference>
<dbReference type="DrugBank" id="DB17191">
    <property type="generic name" value="Altiratinib"/>
</dbReference>
<dbReference type="DrugBank" id="DB08079">
    <property type="generic name" value="AMG-208"/>
</dbReference>
<dbReference type="DrugBank" id="DB15639">
    <property type="generic name" value="AMG-337"/>
</dbReference>
<dbReference type="DrugBank" id="DB16695">
    <property type="generic name" value="Amivantamab"/>
</dbReference>
<dbReference type="DrugBank" id="DB12742">
    <property type="generic name" value="Amuvatinib"/>
</dbReference>
<dbReference type="DrugBank" id="DB12064">
    <property type="generic name" value="BMS-777607"/>
</dbReference>
<dbReference type="DrugBank" id="DB12267">
    <property type="generic name" value="Brigatinib"/>
</dbReference>
<dbReference type="DrugBank" id="DB08875">
    <property type="generic name" value="Cabozantinib"/>
</dbReference>
<dbReference type="DrugBank" id="DB11791">
    <property type="generic name" value="Capmatinib"/>
</dbReference>
<dbReference type="DrugBank" id="DB12795">
    <property type="generic name" value="CMX-2043"/>
</dbReference>
<dbReference type="DrugBank" id="DB08865">
    <property type="generic name" value="Crizotinib"/>
</dbReference>
<dbReference type="DrugBank" id="DB12307">
    <property type="generic name" value="Foretinib"/>
</dbReference>
<dbReference type="DrugBank" id="DB12010">
    <property type="generic name" value="Fostamatinib"/>
</dbReference>
<dbReference type="DrugBank" id="DB11977">
    <property type="generic name" value="Golvatinib"/>
</dbReference>
<dbReference type="DrugBank" id="DB13113">
    <property type="generic name" value="JNJ-38877605"/>
</dbReference>
<dbReference type="DrugBank" id="DB02152">
    <property type="generic name" value="K-252a"/>
</dbReference>
<dbReference type="DrugBank" id="DB12381">
    <property type="generic name" value="Merestinib"/>
</dbReference>
<dbReference type="DrugBank" id="DB07369">
    <property type="generic name" value="N-(3-chlorophenyl)-N-methyl-2-oxo-3-[(3,4,5-trimethyl-1H-pyrrol-2-yl)methyl]-2H-indole-5-sulfonamide"/>
</dbReference>
<dbReference type="DrugBank" id="DB06995">
    <property type="generic name" value="N-({4-[(2-aminopyridin-4-yl)oxy]-3-fluorophenyl}carbamoyl)-2-(4-fluorophenyl)acetamide"/>
</dbReference>
<dbReference type="DrugBank" id="DB12848">
    <property type="generic name" value="PF-04217903"/>
</dbReference>
<dbReference type="DrugBank" id="DB15382">
    <property type="generic name" value="SAR-125844"/>
</dbReference>
<dbReference type="DrugBank" id="DB12048">
    <property type="generic name" value="Savolitinib"/>
</dbReference>
<dbReference type="DrugBank" id="DB06314">
    <property type="generic name" value="SGX-523"/>
</dbReference>
<dbReference type="DrugBank" id="DB15036">
    <property type="generic name" value="Sitravatinib"/>
</dbReference>
<dbReference type="DrugBank" id="DB01268">
    <property type="generic name" value="Sunitinib"/>
</dbReference>
<dbReference type="DrugBank" id="DB15133">
    <property type="generic name" value="Tepotinib"/>
</dbReference>
<dbReference type="DrugBank" id="DB12200">
    <property type="generic name" value="Tivantinib"/>
</dbReference>
<dbReference type="DrugBank" id="DB11800">
    <property type="generic name" value="Tivozanib"/>
</dbReference>
<dbReference type="DrugBank" id="DB16823">
    <property type="generic name" value="Vebreltinib"/>
</dbReference>
<dbReference type="DrugBank" id="DB17525">
    <property type="generic name" value="Zanzalintinib"/>
</dbReference>
<dbReference type="DrugCentral" id="P08581"/>
<dbReference type="GuidetoPHARMACOLOGY" id="1815"/>
<dbReference type="TCDB" id="8.A.23.1.45">
    <property type="family name" value="the basigin (basigin) family"/>
</dbReference>
<dbReference type="GlyConnect" id="680">
    <property type="glycosylation" value="17 N-Linked glycans (6 sites)"/>
</dbReference>
<dbReference type="GlyCosmos" id="P08581">
    <property type="glycosylation" value="13 sites, 23 glycans"/>
</dbReference>
<dbReference type="GlyGen" id="P08581">
    <property type="glycosylation" value="23 sites, 72 N-linked glycans (10 sites), 2 O-linked glycans (3 sites)"/>
</dbReference>
<dbReference type="iPTMnet" id="P08581"/>
<dbReference type="PhosphoSitePlus" id="P08581"/>
<dbReference type="SwissPalm" id="P08581"/>
<dbReference type="BioMuta" id="MET"/>
<dbReference type="DMDM" id="251757497"/>
<dbReference type="OGP" id="P08581"/>
<dbReference type="CPTAC" id="CPTAC-1496"/>
<dbReference type="CPTAC" id="CPTAC-2784"/>
<dbReference type="CPTAC" id="CPTAC-2816"/>
<dbReference type="jPOST" id="P08581"/>
<dbReference type="MassIVE" id="P08581"/>
<dbReference type="PaxDb" id="9606-ENSP00000317272"/>
<dbReference type="PeptideAtlas" id="P08581"/>
<dbReference type="ProteomicsDB" id="52128">
    <molecule id="P08581-1"/>
</dbReference>
<dbReference type="ProteomicsDB" id="52129">
    <molecule id="P08581-2"/>
</dbReference>
<dbReference type="ProteomicsDB" id="52130">
    <molecule id="P08581-3"/>
</dbReference>
<dbReference type="Pumba" id="P08581"/>
<dbReference type="ABCD" id="P08581">
    <property type="antibodies" value="65 sequenced antibodies"/>
</dbReference>
<dbReference type="Antibodypedia" id="3939">
    <property type="antibodies" value="3234 antibodies from 52 providers"/>
</dbReference>
<dbReference type="CPTC" id="P08581">
    <property type="antibodies" value="1 antibody"/>
</dbReference>
<dbReference type="DNASU" id="4233"/>
<dbReference type="Ensembl" id="ENST00000318493.11">
    <molecule id="P08581-2"/>
    <property type="protein sequence ID" value="ENSP00000317272.6"/>
    <property type="gene ID" value="ENSG00000105976.16"/>
</dbReference>
<dbReference type="Ensembl" id="ENST00000397752.8">
    <molecule id="P08581-1"/>
    <property type="protein sequence ID" value="ENSP00000380860.3"/>
    <property type="gene ID" value="ENSG00000105976.16"/>
</dbReference>
<dbReference type="Ensembl" id="ENST00000436117.3">
    <molecule id="P08581-3"/>
    <property type="protein sequence ID" value="ENSP00000410980.2"/>
    <property type="gene ID" value="ENSG00000105976.16"/>
</dbReference>
<dbReference type="GeneID" id="4233"/>
<dbReference type="KEGG" id="hsa:4233"/>
<dbReference type="MANE-Select" id="ENST00000397752.8">
    <property type="protein sequence ID" value="ENSP00000380860.3"/>
    <property type="RefSeq nucleotide sequence ID" value="NM_000245.4"/>
    <property type="RefSeq protein sequence ID" value="NP_000236.2"/>
</dbReference>
<dbReference type="UCSC" id="uc003vij.4">
    <molecule id="P08581-1"/>
    <property type="organism name" value="human"/>
</dbReference>
<dbReference type="AGR" id="HGNC:7029"/>
<dbReference type="CTD" id="4233"/>
<dbReference type="DisGeNET" id="4233"/>
<dbReference type="GeneCards" id="MET"/>
<dbReference type="HGNC" id="HGNC:7029">
    <property type="gene designation" value="MET"/>
</dbReference>
<dbReference type="HPA" id="ENSG00000105976">
    <property type="expression patterns" value="Tissue enhanced (liver)"/>
</dbReference>
<dbReference type="MalaCards" id="MET"/>
<dbReference type="MIM" id="114550">
    <property type="type" value="phenotype"/>
</dbReference>
<dbReference type="MIM" id="164860">
    <property type="type" value="gene"/>
</dbReference>
<dbReference type="MIM" id="605074">
    <property type="type" value="phenotype"/>
</dbReference>
<dbReference type="MIM" id="607278">
    <property type="type" value="phenotype"/>
</dbReference>
<dbReference type="MIM" id="616705">
    <property type="type" value="phenotype"/>
</dbReference>
<dbReference type="MIM" id="620019">
    <property type="type" value="phenotype"/>
</dbReference>
<dbReference type="neXtProt" id="NX_P08581"/>
<dbReference type="OpenTargets" id="ENSG00000105976"/>
<dbReference type="Orphanet" id="47044">
    <property type="disease" value="Hereditary papillary renal cell carcinoma"/>
</dbReference>
<dbReference type="Orphanet" id="488265">
    <property type="disease" value="Osteofibrous dysplasia"/>
</dbReference>
<dbReference type="Orphanet" id="319298">
    <property type="disease" value="Papillary renal cell carcinoma"/>
</dbReference>
<dbReference type="Orphanet" id="33402">
    <property type="disease" value="Pediatric hepatocellular carcinoma"/>
</dbReference>
<dbReference type="Orphanet" id="90636">
    <property type="disease" value="Rare autosomal recessive non-syndromic sensorineural deafness type DFNB"/>
</dbReference>
<dbReference type="PharmGKB" id="PA30763"/>
<dbReference type="VEuPathDB" id="HostDB:ENSG00000105976"/>
<dbReference type="eggNOG" id="KOG1095">
    <property type="taxonomic scope" value="Eukaryota"/>
</dbReference>
<dbReference type="eggNOG" id="KOG3610">
    <property type="taxonomic scope" value="Eukaryota"/>
</dbReference>
<dbReference type="GeneTree" id="ENSGT00940000158022"/>
<dbReference type="HOGENOM" id="CLU_005158_0_0_1"/>
<dbReference type="InParanoid" id="P08581"/>
<dbReference type="OMA" id="DEEPGQC"/>
<dbReference type="OrthoDB" id="9985181at2759"/>
<dbReference type="PAN-GO" id="P08581">
    <property type="GO annotations" value="14 GO annotations based on evolutionary models"/>
</dbReference>
<dbReference type="PhylomeDB" id="P08581"/>
<dbReference type="TreeFam" id="TF317402"/>
<dbReference type="BRENDA" id="2.7.10.1">
    <property type="organism ID" value="2681"/>
</dbReference>
<dbReference type="PathwayCommons" id="P08581"/>
<dbReference type="Reactome" id="R-HSA-1257604">
    <property type="pathway name" value="PIP3 activates AKT signaling"/>
</dbReference>
<dbReference type="Reactome" id="R-HSA-2219530">
    <property type="pathway name" value="Constitutive Signaling by Aberrant PI3K in Cancer"/>
</dbReference>
<dbReference type="Reactome" id="R-HSA-416550">
    <property type="pathway name" value="Sema4D mediated inhibition of cell attachment and migration"/>
</dbReference>
<dbReference type="Reactome" id="R-HSA-5673001">
    <property type="pathway name" value="RAF/MAP kinase cascade"/>
</dbReference>
<dbReference type="Reactome" id="R-HSA-6806942">
    <property type="pathway name" value="MET Receptor Activation"/>
</dbReference>
<dbReference type="Reactome" id="R-HSA-6807004">
    <property type="pathway name" value="Negative regulation of MET activity"/>
</dbReference>
<dbReference type="Reactome" id="R-HSA-6811558">
    <property type="pathway name" value="PI5P, PP2A and IER3 Regulate PI3K/AKT Signaling"/>
</dbReference>
<dbReference type="Reactome" id="R-HSA-8851805">
    <property type="pathway name" value="MET activates RAS signaling"/>
</dbReference>
<dbReference type="Reactome" id="R-HSA-8851907">
    <property type="pathway name" value="MET activates PI3K/AKT signaling"/>
</dbReference>
<dbReference type="Reactome" id="R-HSA-8865999">
    <property type="pathway name" value="MET activates PTPN11"/>
</dbReference>
<dbReference type="Reactome" id="R-HSA-8874081">
    <property type="pathway name" value="MET activates PTK2 signaling"/>
</dbReference>
<dbReference type="Reactome" id="R-HSA-8875360">
    <property type="pathway name" value="InlB-mediated entry of Listeria monocytogenes into host cell"/>
</dbReference>
<dbReference type="Reactome" id="R-HSA-8875513">
    <property type="pathway name" value="MET interacts with TNS proteins"/>
</dbReference>
<dbReference type="Reactome" id="R-HSA-8875555">
    <property type="pathway name" value="MET activates RAP1 and RAC1"/>
</dbReference>
<dbReference type="Reactome" id="R-HSA-8875656">
    <property type="pathway name" value="MET receptor recycling"/>
</dbReference>
<dbReference type="Reactome" id="R-HSA-8875791">
    <property type="pathway name" value="MET activates STAT3"/>
</dbReference>
<dbReference type="Reactome" id="R-HSA-9022699">
    <property type="pathway name" value="MECP2 regulates neuronal receptors and channels"/>
</dbReference>
<dbReference type="Reactome" id="R-HSA-9734091">
    <property type="pathway name" value="Drug-mediated inhibition of MET activation"/>
</dbReference>
<dbReference type="Reactome" id="R-HSA-9825892">
    <property type="pathway name" value="Regulation of MITF-M-dependent genes involved in cell cycle and proliferation"/>
</dbReference>
<dbReference type="SignaLink" id="P08581"/>
<dbReference type="SIGNOR" id="P08581"/>
<dbReference type="BioGRID-ORCS" id="4233">
    <property type="hits" value="32 hits in 1202 CRISPR screens"/>
</dbReference>
<dbReference type="ChiTaRS" id="MET">
    <property type="organism name" value="human"/>
</dbReference>
<dbReference type="EvolutionaryTrace" id="P08581"/>
<dbReference type="GeneWiki" id="C-Met"/>
<dbReference type="GenomeRNAi" id="4233"/>
<dbReference type="Pharos" id="P08581">
    <property type="development level" value="Tclin"/>
</dbReference>
<dbReference type="PRO" id="PR:P08581"/>
<dbReference type="Proteomes" id="UP000005640">
    <property type="component" value="Chromosome 7"/>
</dbReference>
<dbReference type="RNAct" id="P08581">
    <property type="molecule type" value="protein"/>
</dbReference>
<dbReference type="Bgee" id="ENSG00000105976">
    <property type="expression patterns" value="Expressed in pigmented layer of retina and 193 other cell types or tissues"/>
</dbReference>
<dbReference type="ExpressionAtlas" id="P08581">
    <property type="expression patterns" value="baseline and differential"/>
</dbReference>
<dbReference type="GO" id="GO:0009925">
    <property type="term" value="C:basal plasma membrane"/>
    <property type="evidence" value="ECO:0000314"/>
    <property type="project" value="MGI"/>
</dbReference>
<dbReference type="GO" id="GO:0009986">
    <property type="term" value="C:cell surface"/>
    <property type="evidence" value="ECO:0007005"/>
    <property type="project" value="UniProtKB"/>
</dbReference>
<dbReference type="GO" id="GO:0005576">
    <property type="term" value="C:extracellular region"/>
    <property type="evidence" value="ECO:0007669"/>
    <property type="project" value="UniProtKB-SubCell"/>
</dbReference>
<dbReference type="GO" id="GO:0016020">
    <property type="term" value="C:membrane"/>
    <property type="evidence" value="ECO:0000303"/>
    <property type="project" value="UniProtKB"/>
</dbReference>
<dbReference type="GO" id="GO:0005886">
    <property type="term" value="C:plasma membrane"/>
    <property type="evidence" value="ECO:0000318"/>
    <property type="project" value="GO_Central"/>
</dbReference>
<dbReference type="GO" id="GO:0098794">
    <property type="term" value="C:postsynapse"/>
    <property type="evidence" value="ECO:0007669"/>
    <property type="project" value="GOC"/>
</dbReference>
<dbReference type="GO" id="GO:0043235">
    <property type="term" value="C:receptor complex"/>
    <property type="evidence" value="ECO:0000318"/>
    <property type="project" value="GO_Central"/>
</dbReference>
<dbReference type="GO" id="GO:0005524">
    <property type="term" value="F:ATP binding"/>
    <property type="evidence" value="ECO:0007669"/>
    <property type="project" value="UniProtKB-KW"/>
</dbReference>
<dbReference type="GO" id="GO:0005008">
    <property type="term" value="F:hepatocyte growth factor receptor activity"/>
    <property type="evidence" value="ECO:0000318"/>
    <property type="project" value="GO_Central"/>
</dbReference>
<dbReference type="GO" id="GO:0042802">
    <property type="term" value="F:identical protein binding"/>
    <property type="evidence" value="ECO:0000353"/>
    <property type="project" value="IntAct"/>
</dbReference>
<dbReference type="GO" id="GO:0140677">
    <property type="term" value="F:molecular function activator activity"/>
    <property type="evidence" value="ECO:0000269"/>
    <property type="project" value="DisProt"/>
</dbReference>
<dbReference type="GO" id="GO:0019903">
    <property type="term" value="F:protein phosphatase binding"/>
    <property type="evidence" value="ECO:0000353"/>
    <property type="project" value="UniProtKB"/>
</dbReference>
<dbReference type="GO" id="GO:0004713">
    <property type="term" value="F:protein tyrosine kinase activity"/>
    <property type="evidence" value="ECO:0000304"/>
    <property type="project" value="Reactome"/>
</dbReference>
<dbReference type="GO" id="GO:0017154">
    <property type="term" value="F:semaphorin receptor activity"/>
    <property type="evidence" value="ECO:0007669"/>
    <property type="project" value="InterPro"/>
</dbReference>
<dbReference type="GO" id="GO:0048754">
    <property type="term" value="P:branching morphogenesis of an epithelial tube"/>
    <property type="evidence" value="ECO:0000315"/>
    <property type="project" value="UniProtKB"/>
</dbReference>
<dbReference type="GO" id="GO:0007169">
    <property type="term" value="P:cell surface receptor protein tyrosine kinase signaling pathway"/>
    <property type="evidence" value="ECO:0000318"/>
    <property type="project" value="GO_Central"/>
</dbReference>
<dbReference type="GO" id="GO:0007166">
    <property type="term" value="P:cell surface receptor signaling pathway"/>
    <property type="evidence" value="ECO:0000303"/>
    <property type="project" value="UniProtKB"/>
</dbReference>
<dbReference type="GO" id="GO:0001886">
    <property type="term" value="P:endothelial cell morphogenesis"/>
    <property type="evidence" value="ECO:0000314"/>
    <property type="project" value="UniProtKB"/>
</dbReference>
<dbReference type="GO" id="GO:0061436">
    <property type="term" value="P:establishment of skin barrier"/>
    <property type="evidence" value="ECO:0000315"/>
    <property type="project" value="CAFA"/>
</dbReference>
<dbReference type="GO" id="GO:0060079">
    <property type="term" value="P:excitatory postsynaptic potential"/>
    <property type="evidence" value="ECO:0000250"/>
    <property type="project" value="BHF-UCL"/>
</dbReference>
<dbReference type="GO" id="GO:0001889">
    <property type="term" value="P:liver development"/>
    <property type="evidence" value="ECO:0000318"/>
    <property type="project" value="GO_Central"/>
</dbReference>
<dbReference type="GO" id="GO:0010507">
    <property type="term" value="P:negative regulation of autophagy"/>
    <property type="evidence" value="ECO:0000303"/>
    <property type="project" value="ParkinsonsUK-UCL"/>
</dbReference>
<dbReference type="GO" id="GO:1905098">
    <property type="term" value="P:negative regulation of guanyl-nucleotide exchange factor activity"/>
    <property type="evidence" value="ECO:0000314"/>
    <property type="project" value="CAFA"/>
</dbReference>
<dbReference type="GO" id="GO:1901299">
    <property type="term" value="P:negative regulation of hydrogen peroxide-mediated programmed cell death"/>
    <property type="evidence" value="ECO:0000315"/>
    <property type="project" value="BHF-UCL"/>
</dbReference>
<dbReference type="GO" id="GO:0035024">
    <property type="term" value="P:negative regulation of Rho protein signal transduction"/>
    <property type="evidence" value="ECO:0000314"/>
    <property type="project" value="CAFA"/>
</dbReference>
<dbReference type="GO" id="GO:0051497">
    <property type="term" value="P:negative regulation of stress fiber assembly"/>
    <property type="evidence" value="ECO:0000314"/>
    <property type="project" value="CAFA"/>
</dbReference>
<dbReference type="GO" id="GO:0070495">
    <property type="term" value="P:negative regulation of thrombin-activated receptor signaling pathway"/>
    <property type="evidence" value="ECO:0000314"/>
    <property type="project" value="CAFA"/>
</dbReference>
<dbReference type="GO" id="GO:0030182">
    <property type="term" value="P:neuron differentiation"/>
    <property type="evidence" value="ECO:0000318"/>
    <property type="project" value="GO_Central"/>
</dbReference>
<dbReference type="GO" id="GO:0031016">
    <property type="term" value="P:pancreas development"/>
    <property type="evidence" value="ECO:0000318"/>
    <property type="project" value="GO_Central"/>
</dbReference>
<dbReference type="GO" id="GO:0050918">
    <property type="term" value="P:positive chemotaxis"/>
    <property type="evidence" value="ECO:0000314"/>
    <property type="project" value="UniProtKB"/>
</dbReference>
<dbReference type="GO" id="GO:2001028">
    <property type="term" value="P:positive regulation of endothelial cell chemotaxis"/>
    <property type="evidence" value="ECO:0000315"/>
    <property type="project" value="UniProtKB"/>
</dbReference>
<dbReference type="GO" id="GO:0031116">
    <property type="term" value="P:positive regulation of microtubule polymerization"/>
    <property type="evidence" value="ECO:0000315"/>
    <property type="project" value="CAFA"/>
</dbReference>
<dbReference type="GO" id="GO:0045944">
    <property type="term" value="P:positive regulation of transcription by RNA polymerase II"/>
    <property type="evidence" value="ECO:0000314"/>
    <property type="project" value="BHF-UCL"/>
</dbReference>
<dbReference type="GO" id="GO:0071526">
    <property type="term" value="P:semaphorin-plexin signaling pathway"/>
    <property type="evidence" value="ECO:0000314"/>
    <property type="project" value="UniProtKB"/>
</dbReference>
<dbReference type="GO" id="GO:0007165">
    <property type="term" value="P:signal transduction"/>
    <property type="evidence" value="ECO:0000304"/>
    <property type="project" value="ProtInc"/>
</dbReference>
<dbReference type="CDD" id="cd00603">
    <property type="entry name" value="IPT_PCSR"/>
    <property type="match status" value="1"/>
</dbReference>
<dbReference type="CDD" id="cd01180">
    <property type="entry name" value="IPT_plexin_repeat1"/>
    <property type="match status" value="1"/>
</dbReference>
<dbReference type="CDD" id="cd01179">
    <property type="entry name" value="IPT_plexin_repeat2"/>
    <property type="match status" value="1"/>
</dbReference>
<dbReference type="CDD" id="cd01181">
    <property type="entry name" value="IPT_plexin_repeat3"/>
    <property type="match status" value="1"/>
</dbReference>
<dbReference type="CDD" id="cd05058">
    <property type="entry name" value="PTKc_Met_Ron"/>
    <property type="match status" value="1"/>
</dbReference>
<dbReference type="CDD" id="cd11278">
    <property type="entry name" value="Sema_MET"/>
    <property type="match status" value="1"/>
</dbReference>
<dbReference type="DisProt" id="DP02738"/>
<dbReference type="FunFam" id="1.10.510.10:FF:000093">
    <property type="entry name" value="Hepatocyte growth factor receptor"/>
    <property type="match status" value="1"/>
</dbReference>
<dbReference type="FunFam" id="2.130.10.10:FF:000088">
    <property type="entry name" value="Hepatocyte growth factor receptor"/>
    <property type="match status" value="1"/>
</dbReference>
<dbReference type="FunFam" id="2.60.40.10:FF:000213">
    <property type="entry name" value="Hepatocyte growth factor receptor"/>
    <property type="match status" value="1"/>
</dbReference>
<dbReference type="FunFam" id="2.60.40.10:FF:000400">
    <property type="entry name" value="Hepatocyte growth factor receptor"/>
    <property type="match status" value="1"/>
</dbReference>
<dbReference type="FunFam" id="2.60.40.10:FF:002708">
    <property type="entry name" value="Hepatocyte growth factor receptor"/>
    <property type="match status" value="1"/>
</dbReference>
<dbReference type="FunFam" id="3.30.200.20:FF:000188">
    <property type="entry name" value="Hepatocyte growth factor receptor"/>
    <property type="match status" value="1"/>
</dbReference>
<dbReference type="FunFam" id="3.30.1680.10:FF:000006">
    <property type="entry name" value="Macrophage-stimulating 1 receptor b"/>
    <property type="match status" value="1"/>
</dbReference>
<dbReference type="Gene3D" id="2.60.40.10">
    <property type="entry name" value="Immunoglobulins"/>
    <property type="match status" value="3"/>
</dbReference>
<dbReference type="Gene3D" id="3.30.200.20">
    <property type="entry name" value="Phosphorylase Kinase, domain 1"/>
    <property type="match status" value="1"/>
</dbReference>
<dbReference type="Gene3D" id="1.10.510.10">
    <property type="entry name" value="Transferase(Phosphotransferase) domain 1"/>
    <property type="match status" value="1"/>
</dbReference>
<dbReference type="Gene3D" id="2.130.10.10">
    <property type="entry name" value="YVTN repeat-like/Quinoprotein amine dehydrogenase"/>
    <property type="match status" value="1"/>
</dbReference>
<dbReference type="IDEAL" id="IID00704"/>
<dbReference type="InterPro" id="IPR013783">
    <property type="entry name" value="Ig-like_fold"/>
</dbReference>
<dbReference type="InterPro" id="IPR014756">
    <property type="entry name" value="Ig_E-set"/>
</dbReference>
<dbReference type="InterPro" id="IPR002909">
    <property type="entry name" value="IPT_dom"/>
</dbReference>
<dbReference type="InterPro" id="IPR011009">
    <property type="entry name" value="Kinase-like_dom_sf"/>
</dbReference>
<dbReference type="InterPro" id="IPR031148">
    <property type="entry name" value="Plexin"/>
</dbReference>
<dbReference type="InterPro" id="IPR002165">
    <property type="entry name" value="Plexin_repeat"/>
</dbReference>
<dbReference type="InterPro" id="IPR000719">
    <property type="entry name" value="Prot_kinase_dom"/>
</dbReference>
<dbReference type="InterPro" id="IPR017441">
    <property type="entry name" value="Protein_kinase_ATP_BS"/>
</dbReference>
<dbReference type="InterPro" id="IPR016201">
    <property type="entry name" value="PSI"/>
</dbReference>
<dbReference type="InterPro" id="IPR001627">
    <property type="entry name" value="Semap_dom"/>
</dbReference>
<dbReference type="InterPro" id="IPR036352">
    <property type="entry name" value="Semap_dom_sf"/>
</dbReference>
<dbReference type="InterPro" id="IPR001245">
    <property type="entry name" value="Ser-Thr/Tyr_kinase_cat_dom"/>
</dbReference>
<dbReference type="InterPro" id="IPR008266">
    <property type="entry name" value="Tyr_kinase_AS"/>
</dbReference>
<dbReference type="InterPro" id="IPR020635">
    <property type="entry name" value="Tyr_kinase_cat_dom"/>
</dbReference>
<dbReference type="InterPro" id="IPR016244">
    <property type="entry name" value="Tyr_kinase_HGF/MSP_rcpt"/>
</dbReference>
<dbReference type="InterPro" id="IPR015943">
    <property type="entry name" value="WD40/YVTN_repeat-like_dom_sf"/>
</dbReference>
<dbReference type="PANTHER" id="PTHR22625:SF61">
    <property type="entry name" value="HEPATOCYTE GROWTH FACTOR RECEPTOR"/>
    <property type="match status" value="1"/>
</dbReference>
<dbReference type="PANTHER" id="PTHR22625">
    <property type="entry name" value="PLEXIN"/>
    <property type="match status" value="1"/>
</dbReference>
<dbReference type="Pfam" id="PF07714">
    <property type="entry name" value="PK_Tyr_Ser-Thr"/>
    <property type="match status" value="1"/>
</dbReference>
<dbReference type="Pfam" id="PF01437">
    <property type="entry name" value="PSI"/>
    <property type="match status" value="1"/>
</dbReference>
<dbReference type="Pfam" id="PF01403">
    <property type="entry name" value="Sema"/>
    <property type="match status" value="1"/>
</dbReference>
<dbReference type="Pfam" id="PF01833">
    <property type="entry name" value="TIG"/>
    <property type="match status" value="3"/>
</dbReference>
<dbReference type="PIRSF" id="PIRSF000617">
    <property type="entry name" value="TyrPK_HGF-R"/>
    <property type="match status" value="1"/>
</dbReference>
<dbReference type="PRINTS" id="PR00109">
    <property type="entry name" value="TYRKINASE"/>
</dbReference>
<dbReference type="SMART" id="SM00429">
    <property type="entry name" value="IPT"/>
    <property type="match status" value="4"/>
</dbReference>
<dbReference type="SMART" id="SM00423">
    <property type="entry name" value="PSI"/>
    <property type="match status" value="1"/>
</dbReference>
<dbReference type="SMART" id="SM00630">
    <property type="entry name" value="Sema"/>
    <property type="match status" value="1"/>
</dbReference>
<dbReference type="SMART" id="SM00219">
    <property type="entry name" value="TyrKc"/>
    <property type="match status" value="1"/>
</dbReference>
<dbReference type="SUPFAM" id="SSF81296">
    <property type="entry name" value="E set domains"/>
    <property type="match status" value="3"/>
</dbReference>
<dbReference type="SUPFAM" id="SSF103575">
    <property type="entry name" value="Plexin repeat"/>
    <property type="match status" value="1"/>
</dbReference>
<dbReference type="SUPFAM" id="SSF56112">
    <property type="entry name" value="Protein kinase-like (PK-like)"/>
    <property type="match status" value="1"/>
</dbReference>
<dbReference type="SUPFAM" id="SSF101912">
    <property type="entry name" value="Sema domain"/>
    <property type="match status" value="1"/>
</dbReference>
<dbReference type="PROSITE" id="PS00107">
    <property type="entry name" value="PROTEIN_KINASE_ATP"/>
    <property type="match status" value="1"/>
</dbReference>
<dbReference type="PROSITE" id="PS50011">
    <property type="entry name" value="PROTEIN_KINASE_DOM"/>
    <property type="match status" value="1"/>
</dbReference>
<dbReference type="PROSITE" id="PS00109">
    <property type="entry name" value="PROTEIN_KINASE_TYR"/>
    <property type="match status" value="1"/>
</dbReference>
<dbReference type="PROSITE" id="PS51004">
    <property type="entry name" value="SEMA"/>
    <property type="match status" value="1"/>
</dbReference>